<sequence>MAESSDKLYRVEYAKSGRASCKKCSESIPKDSLRMAIMVQSPMFDGKVPHWYHFSCFWKVGHSIRHPDVEVDGFSELRWDDQQKVKKTAEAGGVTGKGQDGIGSKAEKTLGDFAAEYAKSNRSTCKGCMEKIEKGQVRLSKKMVDPEKPQLGMIDRWYHPGCFVKNREELGFRPEYSASQLKGFSLLATEDKEALKKQLPGVKSEGKRKGDEVDGVDEVAKKKSKKEKDKDSKLEKALKAQNDLIWNIKDELKKVCSTNDLKELLIFNKQQVPSGESAILDRVADGMVFGALLPCEECSGQLVFKSDAYYCTGDVTAWTKCMVKTQTPNRKEWVTPKEFREISYLKKLKVKKQDRIFPPETSASVAATPPPSTASAPAAVNSSASADKPLSNMKILTLGKLSRNKDEVKAMIEKLGGKLTGTANKASLCISTKKEVEKMNKKMEEVKEANIRVVSEDFLQDVSASTKSLQELFLAHILSPWGAEVKAEPVEVVAPRGKSGAALSKKSKGQVKEEGINKSEKRMKLTLKGGAAVDPDSGLEHSAHVLEKGGKVFSATLGLVDIVKGTNSYYKLQLLEDDKENRYWIFRSWGRVGTVIGSNKLEQMPSKEDAIEHFMKLYEEKTGNAWHSKNFTKYPKKFYPLEIDYGQDEEAVKKLTVNPGTKSKLPKPVQDLIKMIFDVESMKKAMVEYEIDLQKMPLGKLSKRQIQAAYSILSEVQQAVSQGSSDSQILDLSNRFYTLIPHDFGMKKPPLLNNADSVQAKVEMLDNLLDIEVAYSLLRGGSDDSSKDPIDVNYEKLKTDIKVVDRDSEEAEIIRKYVKNTHATTHNAYDLEVIDIFKIEREGECQRYKPFKQLHNRRLLWHGSRTTNFAGILSQGLRIAPPEAPVTGYMFGKGIYFADMVSKSANYCHTSQGDPIGLILLGEVALGNMYELKHASHISKLPKGKHSVKGLGKTTPDPSANISLDGVDVPLGTGISSGVNDTSLLYNEYIVYDIAQVNLKYLLKLKFNFKTSLW</sequence>
<gene>
    <name evidence="110 125" type="primary">PARP1</name>
    <name evidence="117" type="synonym">ADPRT</name>
    <name type="synonym">PPOL</name>
</gene>
<comment type="function">
    <text evidence="1 17 21 22 23 24 25 26 28 32 36 40 41 46 48 49 51 52 53 54 55 56 57 59 63 64 65 66 69 71 72 73 74 75 77 79 80 81 82 85 86 87 88 89 91 96 98 99 102 103">Poly-ADP-ribosyltransferase that mediates poly-ADP-ribosylation of proteins and plays a key role in DNA repair (PubMed:17177976, PubMed:18055453, PubMed:18172500, PubMed:19344625, PubMed:19661379, PubMed:20388712, PubMed:21680843, PubMed:22582261, PubMed:23230272, PubMed:25043379, PubMed:26344098, PubMed:26626479, PubMed:26626480, PubMed:30104678, PubMed:31796734, PubMed:32028527, PubMed:32241924, PubMed:32358582, PubMed:33186521, PubMed:34465625, PubMed:34737271). Mediates glutamate, aspartate, serine, histidine or tyrosine ADP-ribosylation of proteins: the ADP-D-ribosyl group of NAD(+) is transferred to the acceptor carboxyl group of target residues and further ADP-ribosyl groups are transferred to the 2'-position of the terminal adenosine moiety, building up a polymer with an average chain length of 20-30 units (PubMed:19764761, PubMed:25043379, PubMed:28190768, PubMed:29954836, PubMed:35393539, PubMed:7852410, PubMed:9315851). Serine ADP-ribosylation of proteins constitutes the primary form of ADP-ribosylation of proteins in response to DNA damage (PubMed:33186521, PubMed:34874266). Specificity for the different amino acids is conferred by interacting factors, such as HPF1 and NMNAT1 (PubMed:28190768, PubMed:29954836, PubMed:32028527, PubMed:33186521, PubMed:33589610, PubMed:34625544, PubMed:34874266). Following interaction with HPF1, catalyzes serine ADP-ribosylation of target proteins; HPF1 confers serine specificity by completing the PARP1 active site (PubMed:28190768, PubMed:29954836, PubMed:32028527, PubMed:33186521, PubMed:33589610, PubMed:34625544, PubMed:34874266). Also catalyzes tyrosine ADP-ribosylation of target proteins following interaction with HPF1 (PubMed:29954836, PubMed:30257210). Following interaction with NMNAT1, catalyzes glutamate and aspartate ADP-ribosylation of target proteins; NMNAT1 confers glutamate and aspartate specificity (By similarity). PARP1 initiates the repair of DNA breaks: recognizes and binds DNA breaks within chromatin and recruits HPF1, licensing serine ADP-ribosylation of target proteins, such as histones (H2BS6ADPr and H3S10ADPr), thereby promoting decompaction of chromatin and the recruitment of repair factors leading to the reparation of DNA strand breaks (PubMed:17177976, PubMed:18172500, PubMed:19344625, PubMed:19661379, PubMed:23230272, PubMed:27067600, PubMed:34465625, PubMed:34874266). HPF1 initiates serine ADP-ribosylation but restricts the polymerase activity of PARP1 in order to limit the length of poly-ADP-ribose chains (PubMed:33683197, PubMed:34732825, PubMed:34795260). In addition to base excision repair (BER) pathway, also involved in double-strand breaks (DSBs) repair: together with TIMELESS, accumulates at DNA damage sites and promotes homologous recombination repair by mediating poly-ADP-ribosylation (PubMed:26344098, PubMed:30356214). Mediates the poly-ADP-ribosylation of a number of proteins, including itself, APLF, CHFR, RPA1 and NFAT5 (PubMed:17396150, PubMed:19764761, PubMed:24906880, PubMed:34049076). In addition to proteins, also able to ADP-ribosylate DNA: catalyzes ADP-ribosylation of DNA strand break termini containing terminal phosphates and a 2'-OH group in single- and double-stranded DNA, respectively (PubMed:27471034). Required for PARP9 and DTX3L recruitment to DNA damage sites (PubMed:23230272). PARP1-dependent PARP9-DTX3L-mediated ubiquitination promotes the rapid and specific recruitment of 53BP1/TP53BP1, UIMC1/RAP80, and BRCA1 to DNA damage sites (PubMed:23230272). PARP1-mediated DNA repair in neurons plays a role in sleep: senses DNA damage in neurons and promotes sleep, facilitating efficient DNA repair (By similarity). In addition to DNA repair, also involved in other processes, such as transcription regulation, programmed cell death, membrane repair, adipogenesis and innate immunity (PubMed:15607977, PubMed:17177976, PubMed:19344625, PubMed:27256882, PubMed:32315358, PubMed:32844745, PubMed:35124853, PubMed:35393539, PubMed:35460603). Acts as a repressor of transcription: binds to nucleosomes and modulates chromatin structure in a manner similar to histone H1, thereby altering RNA polymerase II (PubMed:15607977, PubMed:22464733). Acts both as a positive and negative regulator of transcription elongation, depending on the context (PubMed:27256882, PubMed:35393539). Acts as a positive regulator of transcription elongation by mediating poly-ADP-ribosylation of NELFE, preventing RNA-binding activity of NELFE and relieving transcription pausing (PubMed:27256882). Acts as a negative regulator of transcription elongation in response to DNA damage by catalyzing poly-ADP-ribosylation of CCNT1, disrupting the phase separation activity of CCNT1 and subsequent activation of CDK9 (PubMed:35393539). Involved in replication fork progression following interaction with CARM1: mediates poly-ADP-ribosylation at replication forks, slowing fork progression (PubMed:33412112). Poly-ADP-ribose chains generated by PARP1 also play a role in poly-ADP-ribose-dependent cell death, a process named parthanatos (By similarity). Also acts as a negative regulator of the cGAS-STING pathway (PubMed:32315358, PubMed:32844745, PubMed:35460603). Acts by mediating poly-ADP-ribosylation of CGAS: PARP1 translocates into the cytosol following phosphorylation by PRKDC and catalyzes poly-ADP-ribosylation and inactivation of CGAS (PubMed:35460603). Acts as a negative regulator of adipogenesis: catalyzes poly-ADP-ribosylation of histone H2B on 'Glu-35' (H2BE35ADPr) following interaction with NMNAT1, inhibiting phosphorylation of H2B at 'Ser-36' (H2BS36ph), thereby blocking expression of pro-adipogenetic genes (By similarity). Involved in the synthesis of ATP in the nucleus, together with NMNAT1, PARG and NUDT5 (PubMed:27257257). Nuclear ATP generation is required for extensive chromatin remodeling events that are energy-consuming (PubMed:27257257).</text>
</comment>
<comment type="function">
    <molecule>Poly [ADP-ribose] polymerase 1, processed C-terminus</molecule>
    <text evidence="76">Promotes AIFM1-mediated apoptosis (PubMed:33168626). This form, which translocates into the cytoplasm following cleavage by caspase-3 (CASP3) and caspase-7 (CASP7) in response to apoptosis, is auto-poly-ADP-ribosylated and serves as a poly-ADP-ribose carrier to induce AIFM1-mediated apoptosis (PubMed:33168626).</text>
</comment>
<comment type="function">
    <molecule>Poly [ADP-ribose] polymerase 1, processed N-terminus</molecule>
    <text evidence="95">This cleavage form irreversibly binds to DNA breaks and interferes with DNA repair, promoting DNA damage-induced apoptosis.</text>
</comment>
<comment type="catalytic activity">
    <reaction evidence="24 28 49 51 59 74 81 102">
        <text>NAD(+) + (ADP-D-ribosyl)n-acceptor = nicotinamide + (ADP-D-ribosyl)n+1-acceptor + H(+).</text>
        <dbReference type="EC" id="2.4.2.30"/>
    </reaction>
</comment>
<comment type="catalytic activity">
    <reaction evidence="54 55 71 77 81 84 86 119">
        <text>L-seryl-[protein] + NAD(+) = O-(ADP-D-ribosyl)-L-seryl-[protein] + nicotinamide + H(+)</text>
        <dbReference type="Rhea" id="RHEA:58232"/>
        <dbReference type="Rhea" id="RHEA-COMP:9863"/>
        <dbReference type="Rhea" id="RHEA-COMP:15091"/>
        <dbReference type="ChEBI" id="CHEBI:15378"/>
        <dbReference type="ChEBI" id="CHEBI:17154"/>
        <dbReference type="ChEBI" id="CHEBI:29999"/>
        <dbReference type="ChEBI" id="CHEBI:57540"/>
        <dbReference type="ChEBI" id="CHEBI:142556"/>
    </reaction>
    <physiologicalReaction direction="left-to-right" evidence="54 55 71 77 81 84 86 119">
        <dbReference type="Rhea" id="RHEA:58233"/>
    </physiologicalReaction>
</comment>
<comment type="catalytic activity">
    <reaction evidence="28 49 99">
        <text>L-aspartyl-[protein] + NAD(+) = 4-O-(ADP-D-ribosyl)-L-aspartyl-[protein] + nicotinamide</text>
        <dbReference type="Rhea" id="RHEA:54424"/>
        <dbReference type="Rhea" id="RHEA-COMP:9867"/>
        <dbReference type="Rhea" id="RHEA-COMP:13832"/>
        <dbReference type="ChEBI" id="CHEBI:17154"/>
        <dbReference type="ChEBI" id="CHEBI:29961"/>
        <dbReference type="ChEBI" id="CHEBI:57540"/>
        <dbReference type="ChEBI" id="CHEBI:138102"/>
    </reaction>
    <physiologicalReaction direction="left-to-right" evidence="28 49 99">
        <dbReference type="Rhea" id="RHEA:54425"/>
    </physiologicalReaction>
</comment>
<comment type="catalytic activity">
    <reaction evidence="28 49 55">
        <text>L-glutamyl-[protein] + NAD(+) = 5-O-(ADP-D-ribosyl)-L-glutamyl-[protein] + nicotinamide</text>
        <dbReference type="Rhea" id="RHEA:58224"/>
        <dbReference type="Rhea" id="RHEA-COMP:10208"/>
        <dbReference type="Rhea" id="RHEA-COMP:15089"/>
        <dbReference type="ChEBI" id="CHEBI:17154"/>
        <dbReference type="ChEBI" id="CHEBI:29973"/>
        <dbReference type="ChEBI" id="CHEBI:57540"/>
        <dbReference type="ChEBI" id="CHEBI:142540"/>
    </reaction>
    <physiologicalReaction direction="left-to-right" evidence="28 49 55">
        <dbReference type="Rhea" id="RHEA:58225"/>
    </physiologicalReaction>
</comment>
<comment type="catalytic activity">
    <reaction evidence="119 120">
        <text>L-tyrosyl-[protein] + NAD(+) = O-(ADP-D-ribosyl)-L-tyrosyl-[protein] + nicotinamide + H(+)</text>
        <dbReference type="Rhea" id="RHEA:58236"/>
        <dbReference type="Rhea" id="RHEA-COMP:10136"/>
        <dbReference type="Rhea" id="RHEA-COMP:15092"/>
        <dbReference type="ChEBI" id="CHEBI:15378"/>
        <dbReference type="ChEBI" id="CHEBI:17154"/>
        <dbReference type="ChEBI" id="CHEBI:46858"/>
        <dbReference type="ChEBI" id="CHEBI:57540"/>
        <dbReference type="ChEBI" id="CHEBI:142557"/>
    </reaction>
    <physiologicalReaction direction="left-to-right" evidence="119 120">
        <dbReference type="Rhea" id="RHEA:58237"/>
    </physiologicalReaction>
</comment>
<comment type="catalytic activity">
    <reaction evidence="98">
        <text>L-histidyl-[protein] + NAD(+) = N(tele)-(ADP-D-ribosyl)-L-histidyl-[protein] + nicotinamide + H(+)</text>
        <dbReference type="Rhea" id="RHEA:72071"/>
        <dbReference type="Rhea" id="RHEA-COMP:9745"/>
        <dbReference type="Rhea" id="RHEA-COMP:18085"/>
        <dbReference type="ChEBI" id="CHEBI:15378"/>
        <dbReference type="ChEBI" id="CHEBI:17154"/>
        <dbReference type="ChEBI" id="CHEBI:29979"/>
        <dbReference type="ChEBI" id="CHEBI:57540"/>
        <dbReference type="ChEBI" id="CHEBI:191398"/>
    </reaction>
    <physiologicalReaction direction="left-to-right" evidence="98">
        <dbReference type="Rhea" id="RHEA:72072"/>
    </physiologicalReaction>
</comment>
<comment type="activity regulation">
    <text evidence="32 41 52 53 62 72 74 75 78 84 86 93">ADP-ribosyltransferase activity is regulated via an allosteric activation mechanism (PubMed:22582261, PubMed:26626479, PubMed:26626480, PubMed:32241924, PubMed:32358582). In absence of activation signal, PARP1 is autoinhibited by the PARP alpha-helical domain (also named HD region), which prevents effective NAD(+)-binding (PubMed:26626479, PubMed:26626480, PubMed:32241924). Activity is highly stimulated by signals, such as DNA strand breaks (PubMed:20388712, PubMed:32241924, PubMed:32358582). Binding to damaged DNA unfolds the PARP alpha-helical domain, relieving autoinhibition (PubMed:22582261, PubMed:26626479, PubMed:26626480, PubMed:32241924). Poly-ADP-ribosyltransferase activity is tightly regulated and PARP1 is removed from damaged chromatin following initial poly-ADP-ribosylation of chromatin to avoid prolonged residence (trapping) that has cytotoxic consequences (PubMed:34210965, PubMed:34625544, PubMed:35013556). A number of factors (VCP/p97) or post-translational modifications (auto-poly-ADP-ribosylation or ubiquitination) promote PARP1 removal from chromatin (PubMed:34210965, PubMed:34625544, PubMed:35013556). ADP-ribosyltransferase activity is inhibited by a number of PARP inhibitors (PARPi) compounds, that are used the treatment of breast or ovarian cancers that have defects in DNA repair by homologous recombination (PubMed:29487285, PubMed:32241924, PubMed:32358582). PARPi molecules can be classified in three categories: type I compounds (EB-47, UKTT15 and BAD) that promote allosteric retention of PARP1 on DNA, type II inhibitors (talazoparib and olaparib) that mediate a non-allosteric inhibition, and type III inhibitors (rucaparib, niraparib, and veliparib) that promote allosteric release from DNA (PubMed:29487285, PubMed:32241924, PubMed:33361107). Trapping to chromatin by PARPi molecules triggers activation of the cGAS-STING pathway (PubMed:32844745).</text>
</comment>
<comment type="biophysicochemical properties">
    <kinetics>
        <KM evidence="102">130 uM for NAD(+)</KM>
        <text evidence="102">kcat is 390 sec(-1) for NAD(+).</text>
    </kinetics>
</comment>
<comment type="subunit">
    <text evidence="1 2 14 17 19 21 22 26 27 29 30 34 35 37 42 44 45 46 47 50 51 54 59 61 63 66 68 69 70 71 79 80 83 88 90 93 94 97 100 104">Homodimer; PARP-type zinc-fingers from separate PARP1 molecules form a dimer module that specifically recognizes DNA strand breaks (PubMed:22683995). Heterodimer; heterodimerizes with PARP2 (By similarity). Interacts (via the PARP catalytic domain) with HPF1 (PubMed:27067600, PubMed:28190768, PubMed:29954836, PubMed:32028527, PubMed:33589610). Interacts with NMNAT1 (By similarity). Interacts with nucleosomes; with a preference for nucleosomes containing H2A.X (PubMed:15607977, PubMed:31848352). Interacts with APTX (PubMed:15044383). Component of a base excision repair (BER) complex, containing at least XRCC1, PARP1, PARP2, POLB and LRIG3 (By similarity). Interacts with SRY (PubMed:16904257). The SWAP complex consists of NPM1, NCL, PARP1 and SWAP70 (By similarity). Interacts with TIAM2 (By similarity). Interacts with PARP3; leading to activate PARP1 in absence of DNA (PubMed:20064938). Interacts (when poly-ADP-ribosylated) with CHD1L (via macro domain) (PubMed:19661379, PubMed:29220653). Interacts with the DNA polymerase alpha catalytic subunit POLA1; this interaction functions as part of the control of replication fork progression (PubMed:9518481). Interacts with EEF1A1 and TXK (PubMed:17177976). Interacts with RNF4 (PubMed:19779455). Interacts with RNF146 (PubMed:21799911). Interacts with ZNF423 (PubMed:22863007). Interacts with APLF (PubMed:17396150). Interacts with SNAI1 (via zinc fingers); the interaction requires SNAI1 to be poly-ADP-ribosylated and non-phosphorylated (active) by GSK3B (PubMed:21577210). Interacts (when poly-ADP-ribosylated) with PARP9 (PubMed:23230272). Interacts with NR4A3; activates PARP1 by improving acetylation of PARP1 and suppressing the interaction between PARP1 and SIRT1 (By similarity). Interacts (via catalytic domain) with PUM3; the interaction inhibits the poly-ADP-ribosylation activity of PARP1 and the degradation of PARP1 by CASP3 following genotoxic stress (PubMed:21266351). Interacts with ZNF365 (PubMed:23966166). Interacts with RRP1B (PubMed:19710015). Interacts with TIMELESS; the interaction is direct (PubMed:26344098). Interacts with CGAS; leading to impede the formation of the PARP1-TIMELESS complex (PubMed:30356214). Interacts with KHDC3L, the interaction is increased following the formation of DNA double-strand breaks (PubMed:31609975). Interacts (when auto-poly-ADP-ribosylated) with XRCC1; leading to inhibit PARP1 ADP-ribosyltransferase activity (PubMed:34102106, PubMed:34811483). Interacts with SPINDOC; promoting PARP1 ADP-ribosyltransferase activity (PubMed:34737271). Interacts with BANF1; leading to inhibit PARP1 ADP-ribosyltransferase activity in response to oxidative DNA damage (PubMed:31796734). Interacts (when sumoylated and ubiquitinated) with VCP/p97; leading to its extraction from chromatin (PubMed:35013556). Interacts with YARS1; Interacts with PACMP micropeptide; interaction (PubMed:25533949). Interacts with PACMP micropeptide; Interacts with PACMP micropeptide; interaction (PubMed:35219381). Interacts (when poly-ADP-ribosylated) with isoform 1 of MACROH2A1; MACROH2A1 specifically binds to poly-ADP-ribose chains and inhibits PARP1 activity, limiting the consumption of nuclear NAD(+) (By similarity). Interacts with CARM1; promoting recruitment to replication forks (PubMed:33412112). Interacts with RECQL (PubMed:35025765). Interacts with ZNF32; the interaction reshapes ZNF432 interacting proteins (PubMed:37823600). Interacts with TPRN; TPRN interacts with a number of DNA damage response proteins, is recruited to sites of DNA damage and may play a role in DNA damage repair (PubMed:23213405).</text>
</comment>
<comment type="subunit">
    <molecule>Poly [ADP-ribose] polymerase 1, processed C-terminus</molecule>
    <text evidence="76">Interacts (when auto-poly-ADP-ribosylated) with AIFM1.</text>
</comment>
<comment type="subunit">
    <text evidence="38">(Microbial infection) Interacts with human herpesvirus 8 (KSHV) protein RTA/ORF50; this interaction negatively regulates RTA/ORF50 transactivation activity.</text>
</comment>
<comment type="interaction">
    <interactant intactId="EBI-355676">
        <id>P09874</id>
    </interactant>
    <interactant intactId="EBI-1256044">
        <id>Q8IW19</id>
        <label>APLF</label>
    </interactant>
    <organismsDiffer>false</organismsDiffer>
    <experiments>9</experiments>
</comment>
<comment type="interaction">
    <interactant intactId="EBI-355676">
        <id>P09874</id>
    </interactant>
    <interactant intactId="EBI-847814">
        <id>Q7Z2E3</id>
        <label>APTX</label>
    </interactant>
    <organismsDiffer>false</organismsDiffer>
    <experiments>9</experiments>
</comment>
<comment type="interaction">
    <interactant intactId="EBI-355676">
        <id>P09874</id>
    </interactant>
    <interactant intactId="EBI-524064">
        <id>P42574</id>
        <label>CASP3</label>
    </interactant>
    <organismsDiffer>false</organismsDiffer>
    <experiments>2</experiments>
</comment>
<comment type="interaction">
    <interactant intactId="EBI-355676">
        <id>P09874</id>
    </interactant>
    <interactant intactId="EBI-1172054">
        <id>P49715</id>
        <label>CEBPA</label>
    </interactant>
    <organismsDiffer>false</organismsDiffer>
    <experiments>2</experiments>
</comment>
<comment type="interaction">
    <interactant intactId="EBI-355676">
        <id>P09874</id>
    </interactant>
    <interactant intactId="EBI-15797018">
        <id>Q86WJ1-1</id>
        <label>CHD1L</label>
    </interactant>
    <organismsDiffer>false</organismsDiffer>
    <experiments>3</experiments>
</comment>
<comment type="interaction">
    <interactant intactId="EBI-355676">
        <id>P09874</id>
    </interactant>
    <interactant intactId="EBI-719459">
        <id>P26358</id>
        <label>DNMT1</label>
    </interactant>
    <organismsDiffer>false</organismsDiffer>
    <experiments>6</experiments>
</comment>
<comment type="interaction">
    <interactant intactId="EBI-355676">
        <id>P09874</id>
    </interactant>
    <interactant intactId="EBI-448924">
        <id>Q01094</id>
        <label>E2F1</label>
    </interactant>
    <organismsDiffer>false</organismsDiffer>
    <experiments>3</experiments>
</comment>
<comment type="interaction">
    <interactant intactId="EBI-355676">
        <id>P09874</id>
    </interactant>
    <interactant intactId="EBI-399163">
        <id>Q96L91</id>
        <label>EP400</label>
    </interactant>
    <organismsDiffer>false</organismsDiffer>
    <experiments>2</experiments>
</comment>
<comment type="interaction">
    <interactant intactId="EBI-355676">
        <id>P09874</id>
    </interactant>
    <interactant intactId="EBI-79704">
        <id>P11308</id>
        <label>ERG</label>
    </interactant>
    <organismsDiffer>false</organismsDiffer>
    <experiments>7</experiments>
</comment>
<comment type="interaction">
    <interactant intactId="EBI-355676">
        <id>P09874</id>
    </interactant>
    <interactant intactId="EBI-11173743">
        <id>O60741</id>
        <label>HCN1</label>
    </interactant>
    <organismsDiffer>false</organismsDiffer>
    <experiments>4</experiments>
</comment>
<comment type="interaction">
    <interactant intactId="EBI-355676">
        <id>P09874</id>
    </interactant>
    <interactant intactId="EBI-389432">
        <id>P09429</id>
        <label>HMGB1</label>
    </interactant>
    <organismsDiffer>false</organismsDiffer>
    <experiments>2</experiments>
</comment>
<comment type="interaction">
    <interactant intactId="EBI-355676">
        <id>P09874</id>
    </interactant>
    <interactant intactId="EBI-3915542">
        <id>Q13007</id>
        <label>IL24</label>
    </interactant>
    <organismsDiffer>false</organismsDiffer>
    <experiments>2</experiments>
</comment>
<comment type="interaction">
    <interactant intactId="EBI-355676">
        <id>P09874</id>
    </interactant>
    <interactant intactId="EBI-5324932">
        <id>Q9BQ69</id>
        <label>MACROD1</label>
    </interactant>
    <organismsDiffer>false</organismsDiffer>
    <experiments>3</experiments>
</comment>
<comment type="interaction">
    <interactant intactId="EBI-355676">
        <id>P09874</id>
    </interactant>
    <interactant intactId="EBI-741360">
        <id>P08651</id>
        <label>NFIC</label>
    </interactant>
    <organismsDiffer>false</organismsDiffer>
    <experiments>2</experiments>
</comment>
<comment type="interaction">
    <interactant intactId="EBI-355676">
        <id>P09874</id>
    </interactant>
    <interactant intactId="EBI-8502288">
        <id>Q9Y530</id>
        <label>OARD1</label>
    </interactant>
    <organismsDiffer>false</organismsDiffer>
    <experiments>5</experiments>
</comment>
<comment type="interaction">
    <interactant intactId="EBI-355676">
        <id>P09874</id>
    </interactant>
    <interactant intactId="EBI-355676">
        <id>P09874</id>
        <label>PARP1</label>
    </interactant>
    <organismsDiffer>false</organismsDiffer>
    <experiments>3</experiments>
</comment>
<comment type="interaction">
    <interactant intactId="EBI-355676">
        <id>P09874</id>
    </interactant>
    <interactant intactId="EBI-473160">
        <id>Q8N2W9</id>
        <label>PIAS4</label>
    </interactant>
    <organismsDiffer>false</organismsDiffer>
    <experiments>5</experiments>
</comment>
<comment type="interaction">
    <interactant intactId="EBI-355676">
        <id>P09874</id>
    </interactant>
    <interactant intactId="EBI-2823728">
        <id>P46063</id>
        <label>RECQL</label>
    </interactant>
    <organismsDiffer>false</organismsDiffer>
    <experiments>9</experiments>
</comment>
<comment type="interaction">
    <interactant intactId="EBI-355676">
        <id>P09874</id>
    </interactant>
    <interactant intactId="EBI-722397">
        <id>Q9NTX7</id>
        <label>RNF146</label>
    </interactant>
    <organismsDiffer>false</organismsDiffer>
    <experiments>5</experiments>
</comment>
<comment type="interaction">
    <interactant intactId="EBI-355676">
        <id>P09874</id>
    </interactant>
    <interactant intactId="EBI-5280110">
        <id>Q14684-1</id>
        <label>RRP1B</label>
    </interactant>
    <organismsDiffer>false</organismsDiffer>
    <experiments>4</experiments>
</comment>
<comment type="interaction">
    <interactant intactId="EBI-355676">
        <id>P09874</id>
    </interactant>
    <interactant intactId="EBI-1045459">
        <id>O95863</id>
        <label>SNAI1</label>
    </interactant>
    <organismsDiffer>false</organismsDiffer>
    <experiments>10</experiments>
</comment>
<comment type="interaction">
    <interactant intactId="EBI-355676">
        <id>P09874</id>
    </interactant>
    <interactant intactId="EBI-80140">
        <id>P63165</id>
        <label>SUMO1</label>
    </interactant>
    <organismsDiffer>false</organismsDiffer>
    <experiments>2</experiments>
</comment>
<comment type="interaction">
    <interactant intactId="EBI-355676">
        <id>P09874</id>
    </interactant>
    <interactant intactId="EBI-366083">
        <id>P04637</id>
        <label>TP53</label>
    </interactant>
    <organismsDiffer>false</organismsDiffer>
    <experiments>3</experiments>
</comment>
<comment type="interaction">
    <interactant intactId="EBI-355676">
        <id>P09874</id>
    </interactant>
    <interactant intactId="EBI-3390054">
        <id>P0CG48</id>
        <label>UBC</label>
    </interactant>
    <organismsDiffer>false</organismsDiffer>
    <experiments>2</experiments>
</comment>
<comment type="interaction">
    <interactant intactId="EBI-355676">
        <id>P09874</id>
    </interactant>
    <interactant intactId="EBI-368417">
        <id>Q14191</id>
        <label>WRN</label>
    </interactant>
    <organismsDiffer>false</organismsDiffer>
    <experiments>8</experiments>
</comment>
<comment type="interaction">
    <interactant intactId="EBI-355676">
        <id>P09874</id>
    </interactant>
    <interactant intactId="EBI-947466">
        <id>P18887</id>
        <label>XRCC1</label>
    </interactant>
    <organismsDiffer>false</organismsDiffer>
    <experiments>7</experiments>
</comment>
<comment type="interaction">
    <interactant intactId="EBI-355676">
        <id>P09874</id>
    </interactant>
    <interactant intactId="EBI-1048893">
        <id>P54577</id>
        <label>YARS1</label>
    </interactant>
    <organismsDiffer>false</organismsDiffer>
    <experiments>5</experiments>
</comment>
<comment type="interaction">
    <interactant intactId="EBI-355676">
        <id>P09874</id>
    </interactant>
    <interactant intactId="EBI-950016">
        <id>Q2M1K9</id>
        <label>ZNF423</label>
    </interactant>
    <organismsDiffer>false</organismsDiffer>
    <experiments>2</experiments>
</comment>
<comment type="interaction">
    <interactant intactId="EBI-355676">
        <id>P09874</id>
    </interactant>
    <interactant intactId="EBI-6049807">
        <id>Q02085</id>
        <label>Snai1</label>
    </interactant>
    <organismsDiffer>true</organismsDiffer>
    <experiments>3</experiments>
</comment>
<comment type="subcellular location">
    <subcellularLocation>
        <location evidence="17 42 46 51 58 67 72 74 79 86 89 93">Chromosome</location>
    </subcellularLocation>
    <subcellularLocation>
        <location evidence="21 37 46 99">Nucleus</location>
    </subcellularLocation>
    <subcellularLocation>
        <location evidence="104">Nucleus</location>
        <location evidence="104">Nucleolus</location>
    </subcellularLocation>
    <subcellularLocation>
        <location evidence="99">Cytoplasm</location>
        <location evidence="99">Cytosol</location>
    </subcellularLocation>
    <text evidence="17 42 46 51 58 67 72 74 79 86 89 93 99">Localizes to sites of DNA damage (PubMed:22683995, PubMed:23230272, PubMed:26344098, PubMed:27568560, PubMed:30675909, PubMed:32241924, PubMed:32358582, PubMed:34625544, PubMed:34795260). Recognizes (via PARP-type zinc-fingers) and binds DNA strand breaks (PubMed:22683995). Also binds normal/undamaged chromatin (PubMed:15607977). Auto poly-ADP-ribosylation promotes dissociation from chromatin (PubMed:15607977, PubMed:30675909, PubMed:32358582, PubMed:34625544). Extracted from chromatin by VCP/p97 following sumoylation and ubiquitination (PubMed:35013556). Translocates from the nucleus to the cytosol following phosphorylation by PRKDC (PubMed:35460603). Recruited to replication forks following interaction with CARM1 (PubMed:33412112).</text>
</comment>
<comment type="subcellular location">
    <molecule>Poly [ADP-ribose] polymerase 1, processed N-terminus</molecule>
    <subcellularLocation>
        <location evidence="76 95 105">Chromosome</location>
    </subcellularLocation>
    <text evidence="76 95 105">Following cleavage by caspase-3 (CASP3) and caspase-7 (CASP7) in response to apoptosis, this cleavage form irreversibly binds to DNA breaks.</text>
</comment>
<comment type="subcellular location">
    <molecule>Poly [ADP-ribose] polymerase 1, processed C-terminus</molecule>
    <subcellularLocation>
        <location evidence="76">Cytoplasm</location>
    </subcellularLocation>
    <text evidence="76">Following cleavage by caspase-3 (CASP3) and caspase-7 (CASP7) in response to apoptosis, translocates into the cytoplasm, where the auto-poly-ADP-ribosylated form serves as a poly-ADP-ribose carrier to induce AIFM1-mediated apoptosis.</text>
</comment>
<comment type="domain">
    <text evidence="42">The two PARP-type zinc-fingers (also named Zn1 and Zn2) specifically recognize DNA strand breaks: PARP-type zinc-finger 1 binds PARP-type zinc-finger 2 from a separate PARP1 molecule to form a dimeric module that specifically recognizes DNA strand breaks.</text>
</comment>
<comment type="domain">
    <text evidence="31">The PADR1-type (also named Zn3) zinc-finger mediates an interdomain contact and is required for the ability of PARP1 to regulate chromatin structure.</text>
</comment>
<comment type="domain">
    <text evidence="92">The BRCT domain is able to bind intact DNA without activating the poly-ADP-ribosyltransferase activity (PubMed:34919819). The BRCT domain mediates DNA intrastrand transfer (named 'monkey-bar mechanism') that allows rapid movements of PARP1 through the nucleus (PubMed:34919819).</text>
</comment>
<comment type="domain">
    <text evidence="3">The WGR domain bridges two nucleosomes, with the broken DNA aligned in a position suitable for ligation. The bridging induces structural changes in PARP1 that signal the recognition of a DNA break to the catalytic domain of PARP1, promoting HPF1 recruitment and subsequent activation of PARP1, licensing serine ADP-ribosylation of target proteins.</text>
</comment>
<comment type="domain">
    <text evidence="52 53">The PARP alpha-helical domain (also named HD region) prevents effective NAD(+)-binding in absence of activation signal (PubMed:26626479, PubMed:26626480). Binding to damaged DNA unfolds the PARP alpha-helical domain, relieving autoinhibition (PubMed:26626479, PubMed:26626480).</text>
</comment>
<comment type="PTM">
    <text evidence="17 26 28 32 36 41 43 58 59 67 74 84 86">Poly-ADP-ribosylated on serine, glutamate and aspartate residues by autocatalysis (PubMed:19764761, PubMed:20388712, PubMed:22582261). Auto-ADP-ribosylation on serine takes place following interaction with HPF1 (PubMed:28190768, PubMed:34625544). Auto poly-ADP-ribosylation on serine residues promotes its dissociation from chromatin (PubMed:15607977, PubMed:30675909, PubMed:32358582, PubMed:34210965, PubMed:34625544). Poly-ADP-ribosylated by PARP2; poly-ADP-ribosylation mediates the recruitment of CHD1L to DNA damage sites (PubMed:19661379). Mono-ADP-ribosylated at Lys-521 by SIRT6 in response to oxidative stress, promoting recruitment to double-strand breaks (DSBs) sites (PubMed:21680843, PubMed:22753495, PubMed:27568560).</text>
</comment>
<comment type="PTM">
    <text evidence="12 21 99">Phosphorylated at Thr-594 by PRKDC in response to DNA damage following virus infection, promoting its translocation to the cytosol (PubMed:10467406, PubMed:35460603). Phosphorylated by TXK (PubMed:17177976).</text>
</comment>
<comment type="PTM">
    <text evidence="1">S-nitrosylated, leading to inhibit transcription regulation activity.</text>
</comment>
<comment type="PTM">
    <text evidence="13 18 39 40 76 95 101">Proteolytically cleaved by caspase-3 (CASP3) and caspase-7 (CASP7) in response to apoptosis to generate the Poly [ADP-ribose] polymerase 1, processed N-terminus and Poly [ADP-ribose] polymerase 1, processed C-terminus forms (PubMed:10497198, PubMed:16374543, PubMed:22451931, PubMed:22464733, PubMed:33168626, PubMed:35104452, PubMed:7596430). CASP3-mediated cleavage is promoted by the TP53/p53-induced long non-coding RNA SPARCLE, which binds PARP1 in response to genotoxic stress (PubMed:35104452).</text>
</comment>
<comment type="PTM">
    <text evidence="93">Sumoylated with SUMO1 or SUMO2 by PIAS4 following prolonged residence (trapping) to chromatin (PubMed:35013556). Sumoylation promotes ubiquitination by RNF4 and removal from chromatin by VCP/p97 (PubMed:35013556).</text>
</comment>
<comment type="PTM">
    <text evidence="93">Ubiquitinated by RNF4 following sumoylation by PIAS4 in response to prolonged residence (trapping) to chromatin (PubMed:35013556). Ubiquitination promotes removal from chromatin by VCP/p97 (PubMed:35013556).</text>
</comment>
<comment type="similarity">
    <text evidence="10 118">Belongs to the ARTD/PARP family.</text>
</comment>
<comment type="online information" name="Protein Spotlight">
    <link uri="https://www.proteinspotlight.org/back_issues/235/"/>
    <text>Catalysis - Issue 235 of April 2021</text>
</comment>
<name>PARP1_HUMAN</name>
<feature type="initiator methionine" description="Removed" evidence="106 158">
    <location>
        <position position="1"/>
    </location>
</feature>
<feature type="chain" id="PRO_0000211320" description="Poly [ADP-ribose] polymerase 1">
    <location>
        <begin position="2"/>
        <end position="1014"/>
    </location>
</feature>
<feature type="chain" id="PRO_0000456361" description="Poly [ADP-ribose] polymerase 1, processed N-terminus" evidence="122">
    <location>
        <begin position="2"/>
        <end position="214"/>
    </location>
</feature>
<feature type="chain" id="PRO_0000456362" description="Poly [ADP-ribose] polymerase 1, processed C-terminus" evidence="122">
    <location>
        <begin position="215"/>
        <end position="1014"/>
    </location>
</feature>
<feature type="domain" description="PADR1 zinc-binding" evidence="10">
    <location>
        <begin position="225"/>
        <end position="359"/>
    </location>
</feature>
<feature type="domain" description="BRCT" evidence="5">
    <location>
        <begin position="385"/>
        <end position="476"/>
    </location>
</feature>
<feature type="domain" description="WGR" evidence="9">
    <location>
        <begin position="542"/>
        <end position="638"/>
    </location>
</feature>
<feature type="domain" description="PARP alpha-helical" evidence="8">
    <location>
        <begin position="662"/>
        <end position="779"/>
    </location>
</feature>
<feature type="domain" description="PARP catalytic" evidence="7">
    <location>
        <begin position="788"/>
        <end position="1014"/>
    </location>
</feature>
<feature type="zinc finger region" description="PARP-type 1" evidence="6">
    <location>
        <begin position="9"/>
        <end position="93"/>
    </location>
</feature>
<feature type="zinc finger region" description="PARP-type 2" evidence="6">
    <location>
        <begin position="113"/>
        <end position="203"/>
    </location>
</feature>
<feature type="region of interest" description="Disordered" evidence="11">
    <location>
        <begin position="198"/>
        <end position="233"/>
    </location>
</feature>
<feature type="region of interest" description="Zinc ribbon" evidence="10">
    <location>
        <begin position="290"/>
        <end position="332"/>
    </location>
</feature>
<feature type="region of interest" description="Disordered" evidence="11">
    <location>
        <begin position="361"/>
        <end position="385"/>
    </location>
</feature>
<feature type="region of interest" description="Automodification domain" evidence="109">
    <location>
        <begin position="373"/>
        <end position="524"/>
    </location>
</feature>
<feature type="short sequence motif" description="Nuclear localization signal" evidence="15">
    <location>
        <begin position="207"/>
        <end position="209"/>
    </location>
</feature>
<feature type="short sequence motif" description="Nuclear localization signal" evidence="15">
    <location>
        <begin position="221"/>
        <end position="226"/>
    </location>
</feature>
<feature type="compositionally biased region" description="Basic and acidic residues" evidence="11">
    <location>
        <begin position="204"/>
        <end position="233"/>
    </location>
</feature>
<feature type="active site" description="For poly [ADP-ribose] polymerase activity" evidence="121 123 124">
    <location>
        <position position="988"/>
    </location>
</feature>
<feature type="binding site" evidence="6 33 41 42 128 129 132 133 134 135 136">
    <location>
        <position position="21"/>
    </location>
    <ligand>
        <name>Zn(2+)</name>
        <dbReference type="ChEBI" id="CHEBI:29105"/>
        <label>1</label>
    </ligand>
</feature>
<feature type="binding site" evidence="6 33 41 42 128 129 132 133 134 135 136">
    <location>
        <position position="24"/>
    </location>
    <ligand>
        <name>Zn(2+)</name>
        <dbReference type="ChEBI" id="CHEBI:29105"/>
        <label>1</label>
    </ligand>
</feature>
<feature type="binding site" evidence="6 33 41 42 128 129 132 133 134 135 136">
    <location>
        <position position="53"/>
    </location>
    <ligand>
        <name>Zn(2+)</name>
        <dbReference type="ChEBI" id="CHEBI:29105"/>
        <label>1</label>
    </ligand>
</feature>
<feature type="binding site" evidence="6 33 41 42 128 129 132 133 134 135 136">
    <location>
        <position position="56"/>
    </location>
    <ligand>
        <name>Zn(2+)</name>
        <dbReference type="ChEBI" id="CHEBI:29105"/>
        <label>1</label>
    </ligand>
</feature>
<feature type="binding site" evidence="6 33 42 130 131 132">
    <location>
        <position position="125"/>
    </location>
    <ligand>
        <name>Zn(2+)</name>
        <dbReference type="ChEBI" id="CHEBI:29105"/>
        <label>2</label>
    </ligand>
</feature>
<feature type="binding site" evidence="6 33 42 130 131 132">
    <location>
        <position position="128"/>
    </location>
    <ligand>
        <name>Zn(2+)</name>
        <dbReference type="ChEBI" id="CHEBI:29105"/>
        <label>2</label>
    </ligand>
</feature>
<feature type="binding site" evidence="6 33 42 130 131 132">
    <location>
        <position position="159"/>
    </location>
    <ligand>
        <name>Zn(2+)</name>
        <dbReference type="ChEBI" id="CHEBI:29105"/>
        <label>2</label>
    </ligand>
</feature>
<feature type="binding site" evidence="6 33 42 130 131 132">
    <location>
        <position position="162"/>
    </location>
    <ligand>
        <name>Zn(2+)</name>
        <dbReference type="ChEBI" id="CHEBI:29105"/>
        <label>2</label>
    </ligand>
</feature>
<feature type="binding site" evidence="10 23 41 127 133 134 135 136">
    <location>
        <position position="295"/>
    </location>
    <ligand>
        <name>Zn(2+)</name>
        <dbReference type="ChEBI" id="CHEBI:29105"/>
        <label>3</label>
    </ligand>
</feature>
<feature type="binding site" evidence="10 23 41 127 133 134 135 136">
    <location>
        <position position="298"/>
    </location>
    <ligand>
        <name>Zn(2+)</name>
        <dbReference type="ChEBI" id="CHEBI:29105"/>
        <label>3</label>
    </ligand>
</feature>
<feature type="binding site" evidence="10 23 41 127 133 134 135 136">
    <location>
        <position position="311"/>
    </location>
    <ligand>
        <name>Zn(2+)</name>
        <dbReference type="ChEBI" id="CHEBI:29105"/>
        <label>3</label>
    </ligand>
</feature>
<feature type="binding site" evidence="10 23 41 127 133 134 135 136">
    <location>
        <position position="321"/>
    </location>
    <ligand>
        <name>Zn(2+)</name>
        <dbReference type="ChEBI" id="CHEBI:29105"/>
        <label>3</label>
    </ligand>
</feature>
<feature type="binding site" evidence="3">
    <location>
        <begin position="862"/>
        <end position="864"/>
    </location>
    <ligand>
        <name>NAD(+)</name>
        <dbReference type="ChEBI" id="CHEBI:57540"/>
    </ligand>
</feature>
<feature type="binding site" evidence="3">
    <location>
        <position position="871"/>
    </location>
    <ligand>
        <name>NAD(+)</name>
        <dbReference type="ChEBI" id="CHEBI:57540"/>
    </ligand>
</feature>
<feature type="binding site" evidence="3">
    <location>
        <position position="878"/>
    </location>
    <ligand>
        <name>NAD(+)</name>
        <dbReference type="ChEBI" id="CHEBI:57540"/>
    </ligand>
</feature>
<feature type="binding site" evidence="3">
    <location>
        <position position="904"/>
    </location>
    <ligand>
        <name>NAD(+)</name>
        <dbReference type="ChEBI" id="CHEBI:57540"/>
    </ligand>
</feature>
<feature type="site" description="Cleavage; by caspase-3 and caspase-7" evidence="13 40 101">
    <location>
        <begin position="214"/>
        <end position="215"/>
    </location>
</feature>
<feature type="modified residue" description="N-acetylalanine" evidence="106 158">
    <location>
        <position position="2"/>
    </location>
</feature>
<feature type="modified residue" description="Phosphoserine" evidence="156 159">
    <location>
        <position position="41"/>
    </location>
</feature>
<feature type="modified residue" description="N6-acetyllysine" evidence="154">
    <location>
        <position position="97"/>
    </location>
</feature>
<feature type="modified residue" description="N6-acetyllysine" evidence="154">
    <location>
        <position position="105"/>
    </location>
</feature>
<feature type="modified residue" description="N6-acetyllysine" evidence="154">
    <location>
        <position position="131"/>
    </location>
</feature>
<feature type="modified residue" description="Phosphoserine" evidence="159">
    <location>
        <position position="177"/>
    </location>
</feature>
<feature type="modified residue" description="Phosphoserine" evidence="152 159">
    <location>
        <position position="179"/>
    </location>
</feature>
<feature type="modified residue" description="Phosphoserine" evidence="159">
    <location>
        <position position="185"/>
    </location>
</feature>
<feature type="modified residue" description="Phosphoserine" evidence="159">
    <location>
        <position position="274"/>
    </location>
</feature>
<feature type="modified residue" description="Phosphoserine" evidence="159">
    <location>
        <position position="277"/>
    </location>
</feature>
<feature type="modified residue" description="Phosphoserine" evidence="160">
    <location>
        <position position="364"/>
    </location>
</feature>
<feature type="modified residue" description="Phosphothreonine" evidence="153">
    <location>
        <position position="368"/>
    </location>
</feature>
<feature type="modified residue" description="PolyADP-ribosyl aspartic acid" evidence="28">
    <location>
        <position position="387"/>
    </location>
</feature>
<feature type="modified residue" description="PolyADP-ribosyl glutamic acid" evidence="4">
    <location>
        <position position="407"/>
    </location>
</feature>
<feature type="modified residue" description="PolyADP-ribosyl glutamic acid" evidence="4">
    <location>
        <position position="413"/>
    </location>
</feature>
<feature type="modified residue" description="PolyADP-ribosyl glutamic acid" evidence="4">
    <location>
        <position position="435"/>
    </location>
</feature>
<feature type="modified residue" description="PolyADP-ribosyl glutamic acid" evidence="4">
    <location>
        <position position="437"/>
    </location>
</feature>
<feature type="modified residue" description="PolyADP-ribosyl glutamic acid" evidence="4">
    <location>
        <position position="444"/>
    </location>
</feature>
<feature type="modified residue" description="PolyADP-ribosyl glutamic acid" evidence="4">
    <location>
        <position position="445"/>
    </location>
</feature>
<feature type="modified residue" description="PolyADP-ribosyl glutamic acid" evidence="4">
    <location>
        <position position="448"/>
    </location>
</feature>
<feature type="modified residue" description="PolyADP-ribosyl glutamic acid" evidence="4">
    <location>
        <position position="456"/>
    </location>
</feature>
<feature type="modified residue" description="PolyADP-ribosyl glutamic acid" evidence="4">
    <location>
        <position position="471"/>
    </location>
</feature>
<feature type="modified residue" description="PolyADP-ribosyl glutamic acid" evidence="4">
    <location>
        <position position="484"/>
    </location>
</feature>
<feature type="modified residue" description="PolyADP-ribosyl glutamic acid" evidence="28">
    <location>
        <position position="488"/>
    </location>
</feature>
<feature type="modified residue" description="PolyADP-ribosyl glutamic acid" evidence="28">
    <location>
        <position position="491"/>
    </location>
</feature>
<feature type="modified residue" description="ADP-ribosylserine" evidence="59 63 77 84 86">
    <location>
        <position position="499"/>
    </location>
</feature>
<feature type="modified residue" description="ADP-ribosylserine" evidence="63">
    <location>
        <position position="504"/>
    </location>
</feature>
<feature type="modified residue" description="ADP-ribosylserine" evidence="59 63 84 86">
    <location>
        <position position="507"/>
    </location>
</feature>
<feature type="modified residue" description="PolyADP-ribosyl glutamic acid" evidence="4">
    <location>
        <position position="513"/>
    </location>
</feature>
<feature type="modified residue" description="PolyADP-ribosyl glutamic acid" evidence="4">
    <location>
        <position position="514"/>
    </location>
</feature>
<feature type="modified residue" description="ADP-ribosylserine" evidence="59 63 84 86">
    <location>
        <position position="519"/>
    </location>
</feature>
<feature type="modified residue" description="PolyADP-ribosyl glutamic acid" evidence="4">
    <location>
        <position position="520"/>
    </location>
</feature>
<feature type="modified residue" description="N6-(ADP-ribosyl)lysine" evidence="36 58">
    <location>
        <position position="521"/>
    </location>
</feature>
<feature type="modified residue" description="Phosphothreonine; by PRKDC" evidence="99">
    <location>
        <position position="594"/>
    </location>
</feature>
<feature type="modified residue" description="N6-acetyllysine" evidence="154">
    <location>
        <position position="600"/>
    </location>
</feature>
<feature type="modified residue" description="N6-acetyllysine" evidence="154">
    <location>
        <position position="621"/>
    </location>
</feature>
<feature type="modified residue" description="Phosphoserine" evidence="153 155 156 157 159">
    <location>
        <position position="782"/>
    </location>
</feature>
<feature type="modified residue" description="Phosphoserine" evidence="159">
    <location>
        <position position="786"/>
    </location>
</feature>
<feature type="cross-link" description="Glycyl lysine isopeptide (Lys-Gly) (interchain with G-Cter in SUMO2)" evidence="165">
    <location>
        <position position="192"/>
    </location>
</feature>
<feature type="cross-link" description="Glycyl lysine isopeptide (Lys-Gly) (interchain with G-Cter in SUMO1); alternate" evidence="161">
    <location>
        <position position="203"/>
    </location>
</feature>
<feature type="cross-link" description="Glycyl lysine isopeptide (Lys-Gly) (interchain with G-Cter in SUMO2); alternate" evidence="164 165">
    <location>
        <position position="203"/>
    </location>
</feature>
<feature type="cross-link" description="Glycyl lysine isopeptide (Lys-Gly) (interchain with G-Cter in SUMO2)" evidence="165">
    <location>
        <position position="249"/>
    </location>
</feature>
<feature type="cross-link" description="Glycyl lysine isopeptide (Lys-Gly) (interchain with G-Cter in SUMO2)" evidence="164 165">
    <location>
        <position position="467"/>
    </location>
</feature>
<feature type="cross-link" description="Glycyl lysine isopeptide (Lys-Gly) (interchain with G-Cter in SUMO1); alternate" evidence="161">
    <location>
        <position position="486"/>
    </location>
</feature>
<feature type="cross-link" description="Glycyl lysine isopeptide (Lys-Gly) (interchain with G-Cter in SUMO2); alternate" evidence="161 162 164 165">
    <location>
        <position position="486"/>
    </location>
</feature>
<feature type="cross-link" description="Glycyl lysine isopeptide (Lys-Gly) (interchain with G-Cter in SUMO2)" evidence="162 163 164 165">
    <location>
        <position position="512"/>
    </location>
</feature>
<feature type="cross-link" description="Glycyl lysine isopeptide (Lys-Gly) (interchain with G-Cter in SUMO2)" evidence="165">
    <location>
        <position position="528"/>
    </location>
</feature>
<feature type="cross-link" description="Glycyl lysine isopeptide (Lys-Gly) (interchain with G-Cter in SUMO1); alternate" evidence="161">
    <location>
        <position position="748"/>
    </location>
</feature>
<feature type="cross-link" description="Glycyl lysine isopeptide (Lys-Gly) (interchain with G-Cter in SUMO2); alternate" evidence="162 165">
    <location>
        <position position="748"/>
    </location>
</feature>
<feature type="sequence variant" id="VAR_050460" description="In dbSNP:rs3738708.">
    <original>F</original>
    <variation>L</variation>
    <location>
        <position position="54"/>
    </location>
</feature>
<feature type="sequence variant" id="VAR_014714" description="In dbSNP:rs1805409." evidence="107">
    <original>A</original>
    <variation>T</variation>
    <location>
        <position position="188"/>
    </location>
</feature>
<feature type="sequence variant" id="VAR_019171" description="In dbSNP:rs3219057." evidence="107">
    <original>V</original>
    <variation>I</variation>
    <location>
        <position position="334"/>
    </location>
</feature>
<feature type="sequence variant" id="VAR_050461" description="In dbSNP:rs2230484.">
    <original>P</original>
    <variation>S</variation>
    <location>
        <position position="377"/>
    </location>
</feature>
<feature type="sequence variant" id="VAR_019172" description="In dbSNP:rs3219062." evidence="107">
    <original>S</original>
    <variation>Y</variation>
    <location>
        <position position="383"/>
    </location>
</feature>
<feature type="sequence variant" id="VAR_035852" description="In a breast cancer sample; somatic mutation." evidence="20">
    <original>E</original>
    <variation>V</variation>
    <location>
        <position position="488"/>
    </location>
</feature>
<feature type="sequence variant" id="VAR_014715" description="In dbSNP:rs1136410." evidence="16 107">
    <original>V</original>
    <variation>A</variation>
    <location>
        <position position="762"/>
    </location>
</feature>
<feature type="sequence variant" id="VAR_019173" description="In dbSNP:rs3219145." evidence="60 107">
    <original>K</original>
    <variation>R</variation>
    <location>
        <position position="940"/>
    </location>
</feature>
<feature type="mutagenesis site" description="Abolished DNA-binding." evidence="33">
    <original>R</original>
    <variation>A</variation>
    <location>
        <position position="18"/>
    </location>
</feature>
<feature type="mutagenesis site" description="Does not affect translocation into the cytosol." evidence="99">
    <original>S</original>
    <variation>A</variation>
    <location>
        <position position="25"/>
    </location>
</feature>
<feature type="mutagenesis site" description="Abolished DNA-binding." evidence="33">
    <original>R</original>
    <variation>A</variation>
    <location>
        <position position="34"/>
    </location>
</feature>
<feature type="mutagenesis site" description="Abolished binding to DNA strand breaks." evidence="42">
    <original>R</original>
    <variation>E</variation>
    <location>
        <position position="34"/>
    </location>
</feature>
<feature type="mutagenesis site" description="Does not affect DNA-binding." evidence="33">
    <original>Q</original>
    <variation>A</variation>
    <location>
        <position position="40"/>
    </location>
</feature>
<feature type="mutagenesis site" description="No effect." evidence="33">
    <original>S</original>
    <variation>A</variation>
    <location>
        <position position="41"/>
    </location>
</feature>
<feature type="mutagenesis site" description="No effect." evidence="33">
    <original>P</original>
    <variation>G</variation>
    <location>
        <position position="42"/>
    </location>
</feature>
<feature type="mutagenesis site" description="No effect." evidence="33">
    <original>M</original>
    <variation>A</variation>
    <location>
        <position position="43"/>
    </location>
</feature>
<feature type="mutagenesis site" description="Strongly decreased homodimerization." evidence="42">
    <original>M</original>
    <variation>D</variation>
    <location>
        <position position="43"/>
    </location>
</feature>
<feature type="mutagenesis site" description="Abolished DNA-binding." evidence="33">
    <original>FDGKV</original>
    <variation>ADGKA</variation>
    <location>
        <begin position="44"/>
        <end position="48"/>
    </location>
</feature>
<feature type="mutagenesis site" description="Abolished DNA-binding." evidence="33">
    <original>F</original>
    <variation>A</variation>
    <location>
        <position position="44"/>
    </location>
</feature>
<feature type="mutagenesis site" description="Strongly decreased homodimerization." evidence="42">
    <original>F</original>
    <variation>D</variation>
    <location>
        <position position="44"/>
    </location>
</feature>
<feature type="mutagenesis site" description="Does not affect DNA-binding. Decreased poly-ADP-ribosyltransferase activity." evidence="33 41">
    <original>D</original>
    <variation>A</variation>
    <location>
        <position position="45"/>
    </location>
</feature>
<feature type="mutagenesis site" description="Abolished prolonged residence (trapping) to chromatin." evidence="93">
    <location>
        <begin position="119"/>
        <end position="120"/>
    </location>
</feature>
<feature type="mutagenesis site" description="Strongly decreased DNA-binding." evidence="33">
    <original>R</original>
    <variation>A</variation>
    <location>
        <position position="122"/>
    </location>
</feature>
<feature type="mutagenesis site" description="Abolished binding to DNA strand breaks." evidence="42">
    <original>R</original>
    <variation>E</variation>
    <location>
        <position position="138"/>
    </location>
</feature>
<feature type="mutagenesis site" description="Abolished DNA-binding." evidence="33">
    <original>LGMI</original>
    <variation>AGMA</variation>
    <location>
        <begin position="151"/>
        <end position="154"/>
    </location>
</feature>
<feature type="mutagenesis site" description="Abolished cleavage by caspase-7 (CASP7)." evidence="40">
    <original>D</original>
    <variation>N</variation>
    <location>
        <position position="214"/>
    </location>
</feature>
<feature type="mutagenesis site" description="Does not affect auto-poly-ADP-ribosylation." evidence="32">
    <original>Q</original>
    <variation>L</variation>
    <location>
        <position position="241"/>
    </location>
</feature>
<feature type="mutagenesis site" description="Decreased poly-ADP-ribosyltransferase activity upon binding to damaged DNA." evidence="41 52">
    <original>W</original>
    <variation>A</variation>
    <location>
        <position position="246"/>
    </location>
</feature>
<feature type="mutagenesis site" description="Decreased stability leading to impaired oly-ADP-ribosyltransferase activity." evidence="23">
    <original>C</original>
    <variation>A</variation>
    <location>
        <position position="298"/>
    </location>
</feature>
<feature type="mutagenesis site" description="Does not affect auto-poly-ADP-ribosylation." evidence="32">
    <original>D</original>
    <variation>A</variation>
    <location>
        <position position="314"/>
    </location>
</feature>
<feature type="mutagenesis site" description="Does not affect auto-poly-ADP-ribosylation." evidence="32">
    <original>V</original>
    <variation>A</variation>
    <location>
        <position position="315"/>
    </location>
</feature>
<feature type="mutagenesis site" description="Strongly reduced poly-ADP-ribosyltransferase and ability to regulate chromatin compaction." evidence="32">
    <original>T</original>
    <variation>A</variation>
    <location>
        <position position="316"/>
    </location>
</feature>
<feature type="mutagenesis site" description="Does not affect auto-poly-ADP-ribosylation." evidence="32">
    <original>A</original>
    <variation>G</variation>
    <location>
        <position position="317"/>
    </location>
</feature>
<feature type="mutagenesis site" description="Strongly reduced poly-ADP-ribosyltransferase activity. Able to bind damaged DNA, however, defects in the interdomain communication prevent unfolding of the PARP alpha-helical domain, blocking catalytic activation." evidence="32 41 52 53 72">
    <original>W</original>
    <variation>A</variation>
    <variation>R</variation>
    <variation>E</variation>
    <location>
        <position position="318"/>
    </location>
</feature>
<feature type="mutagenesis site" description="Does not affect auto-poly-ADP-ribosylation." evidence="32">
    <original>W</original>
    <variation>F</variation>
    <location>
        <position position="318"/>
    </location>
</feature>
<feature type="mutagenesis site" description="Does not affect auto-poly-ADP-ribosylation." evidence="32">
    <original>T</original>
    <variation>A</variation>
    <location>
        <position position="319"/>
    </location>
</feature>
<feature type="mutagenesis site" description="Does not affect auto-poly-ADP-ribosylation." evidence="32">
    <original>K</original>
    <variation>A</variation>
    <location>
        <position position="320"/>
    </location>
</feature>
<feature type="mutagenesis site" description="Does not affect translocation into the cytosol." evidence="99">
    <original>T</original>
    <variation>A</variation>
    <location>
        <position position="325"/>
    </location>
</feature>
<feature type="mutagenesis site" description="Does not affect auto-poly-ADP-ribosylation." evidence="32">
    <original>LKV</original>
    <variation>DKD</variation>
    <location>
        <begin position="348"/>
        <end position="350"/>
    </location>
</feature>
<feature type="mutagenesis site" description="Does not affect auto-poly-ADP-ribosylation." evidence="32">
    <original>F</original>
    <variation>Y</variation>
    <location>
        <position position="357"/>
    </location>
</feature>
<feature type="mutagenesis site" description="Does not affect auto-poly-ADP-ribosylation." evidence="32">
    <original>PP</original>
    <variation>GG</variation>
    <location>
        <begin position="358"/>
        <end position="359"/>
    </location>
</feature>
<feature type="mutagenesis site" description="Strongly decreased ability of the BRCT domain to bind intact DNA; when associated with Q-418." evidence="92">
    <original>K</original>
    <variation>Q</variation>
    <location>
        <position position="394"/>
    </location>
</feature>
<feature type="mutagenesis site" description="Strongly decreased ability of the BRCT domain to bind intact DNA." evidence="92">
    <original>KDEVK</original>
    <variation>QDEVQ</variation>
    <location>
        <begin position="405"/>
        <end position="409"/>
    </location>
</feature>
<feature type="mutagenesis site" description="Strongly decreased ability of the BRCT domain to bind intact DNA." evidence="92">
    <original>KLTGTANK</original>
    <variation>QLTGTANQ</variation>
    <location>
        <begin position="418"/>
        <end position="425"/>
    </location>
</feature>
<feature type="mutagenesis site" description="Strongly decreased ability of the BRCT domain to bind intact DNA; when associated with Q-394." evidence="92">
    <original>K</original>
    <variation>Q</variation>
    <location>
        <position position="418"/>
    </location>
</feature>
<feature type="mutagenesis site" description="Strongly decreased ability of the BRCT domain to bind intact DNA." evidence="92">
    <original>KK</original>
    <variation>QQ</variation>
    <location>
        <begin position="441"/>
        <end position="442"/>
    </location>
</feature>
<feature type="mutagenesis site" description="Strongly reduced interaction with TIMELESS." evidence="51">
    <original>VEVV</original>
    <variation>GEVQ</variation>
    <location>
        <begin position="490"/>
        <end position="493"/>
    </location>
</feature>
<feature type="mutagenesis site" description="Abolishes automodification on serine following interaction with HPF1, leading to delay dissociation from chromatin; when associated with A-507 and A-519." evidence="59 84 86">
    <original>S</original>
    <variation>A</variation>
    <location>
        <position position="499"/>
    </location>
</feature>
<feature type="mutagenesis site" description="Abolishes automodification on serine following interaction with HPF1, leading to delay dissociation from chromatin; when associated with A-499 and A-519." evidence="59 84 86">
    <original>S</original>
    <variation>A</variation>
    <location>
        <position position="507"/>
    </location>
</feature>
<feature type="mutagenesis site" description="Abolishes automodification on serine following interaction with HPF1, leading to delay dissociation from chromatin; when associated with A-499 and A-507." evidence="59 84 86">
    <original>S</original>
    <variation>A</variation>
    <location>
        <position position="519"/>
    </location>
</feature>
<feature type="mutagenesis site" description="Decreased poly-ADP-ribosyltransferase activity upon binding to damaged DNA." evidence="41 52">
    <original>N</original>
    <variation>A</variation>
    <location>
        <position position="567"/>
    </location>
</feature>
<feature type="mutagenesis site" description="Decreased poly-ADP-ribosyltransferase activity upon binding to damaged DNA. Abolished ability to mediate DNA intrastrand transfer (named 'monkey-bar mechanism')." evidence="41 52">
    <original>W</original>
    <variation>A</variation>
    <location>
        <position position="589"/>
    </location>
</feature>
<feature type="mutagenesis site" description="Decreased poly-ADP-ribosyltransferase activity upon binding to damaged DNA." evidence="41 52">
    <original>R</original>
    <variation>A</variation>
    <location>
        <position position="591"/>
    </location>
</feature>
<feature type="mutagenesis site" description="Abolished phosphorylation by PRKDC, inhibiting translocation into the cytosol." evidence="99">
    <original>T</original>
    <variation>A</variation>
    <location>
        <position position="594"/>
    </location>
</feature>
<feature type="mutagenesis site" description="Decreased poly-ADP-ribosyltransferase activity upon binding to damaged DNA." evidence="41 52">
    <original>K</original>
    <variation>A</variation>
    <location>
        <position position="633"/>
    </location>
</feature>
<feature type="mutagenesis site" description="Increased auto-poly-ADP-ribosylation." evidence="41">
    <original>LGKL</original>
    <variation>AGKA</variation>
    <location>
        <begin position="698"/>
        <end position="701"/>
    </location>
</feature>
<feature type="mutagenesis site" description="Increased auto-poly-ADP-ribosylation." evidence="41">
    <original>L</original>
    <variation>A</variation>
    <location>
        <position position="713"/>
    </location>
</feature>
<feature type="mutagenesis site" description="Leads to constitutive activity in absence of DNA damage due to unfolding of the PARP alpha-helical domain, relieving autoinhibition." evidence="41 53">
    <original>L</original>
    <variation>F</variation>
    <location>
        <position position="713"/>
    </location>
</feature>
<feature type="mutagenesis site" description="Able to bind BAD inhibitor in absence of DNA." evidence="62">
    <original>EMLDNLLD</original>
    <variation>AMLANLLA</variation>
    <location>
        <begin position="763"/>
        <end position="770"/>
    </location>
</feature>
<feature type="mutagenesis site" description="Increased auto-poly-ADP-ribosylation." evidence="41">
    <original>L</original>
    <variation>A</variation>
    <location>
        <position position="765"/>
    </location>
</feature>
<feature type="mutagenesis site" description="Able to bind EB-47 or BAD inhibitors in absence of DNA. Released from DNA strand break independently of EB-47 or BAD inhibitors." evidence="62 72">
    <original>DNLLD</original>
    <variation>ANLLA</variation>
    <location>
        <begin position="766"/>
        <end position="770"/>
    </location>
</feature>
<feature type="mutagenesis site" description="Increased auto-poly-ADP-ribosylation." evidence="41">
    <original>L</original>
    <variation>A</variation>
    <location>
        <position position="768"/>
    </location>
</feature>
<feature type="mutagenesis site" description="Increased DNA-independent poly-ADP-ribosyltransferase activity." evidence="53">
    <original>A</original>
    <variation>S</variation>
    <variation>L</variation>
    <location>
        <position position="774"/>
    </location>
</feature>
<feature type="mutagenesis site" description="1.5% of wild-type activity." evidence="103">
    <original>L</original>
    <variation>P</variation>
    <location>
        <position position="797"/>
    </location>
</feature>
<feature type="mutagenesis site" description="Strongly reduced serine ADP-ribosylation, caused by abolished interaction with HPF1." evidence="71">
    <original>H</original>
    <variation>A</variation>
    <location>
        <position position="826"/>
    </location>
</feature>
<feature type="mutagenesis site" description="Decreased polymerase activity, leading to the production of short poly-ADP-ribose chains." evidence="89">
    <original>H</original>
    <variation>E</variation>
    <location>
        <position position="826"/>
    </location>
</feature>
<feature type="mutagenesis site" description="Abolished interaction with TIMELESS." evidence="51">
    <location>
        <begin position="850"/>
        <end position="851"/>
    </location>
</feature>
<feature type="mutagenesis site" description="Poly-ADP-ribosyltransferase activity is impaired while mono-ADP-ribosyltransferase activity is not affected; produces a mixture of short and mono ADP-ribose chains." evidence="102">
    <original>H</original>
    <variation>A</variation>
    <location>
        <position position="862"/>
    </location>
</feature>
<feature type="mutagenesis site" description="Increased affinity for DNA damage sites." evidence="89">
    <original>R</original>
    <variation>A</variation>
    <location>
        <position position="865"/>
    </location>
</feature>
<feature type="mutagenesis site" description="4% of wild-type activity." evidence="103">
    <original>N</original>
    <variation>S</variation>
    <location>
        <position position="868"/>
    </location>
</feature>
<feature type="mutagenesis site" description="Increased DNA-independent poly-ADP-ribosyltransferase activity." evidence="53">
    <original>A</original>
    <variation>S</variation>
    <variation>L</variation>
    <location>
        <position position="870"/>
    </location>
</feature>
<feature type="mutagenesis site" description="Increased DNA-independent poly-ADP-ribosyltransferase activity." evidence="53">
    <original>G</original>
    <variation>L</variation>
    <location>
        <position position="871"/>
    </location>
</feature>
<feature type="mutagenesis site" description="Does not affect DNA-independent poly-ADP-ribosyltransferase activity." evidence="53">
    <original>G</original>
    <variation>S</variation>
    <location>
        <position position="871"/>
    </location>
</feature>
<feature type="mutagenesis site" description="Does not affect DNA-independent poly-ADP-ribosyltransferase activity." evidence="53">
    <original>P</original>
    <variation>G</variation>
    <location>
        <position position="882"/>
    </location>
</feature>
<feature type="mutagenesis site" description="Does not affect DNA-independent poly-ADP-ribosyltransferase activity." evidence="53">
    <original>EAPVT</original>
    <variation>ASSVA</variation>
    <location>
        <begin position="883"/>
        <end position="887"/>
    </location>
</feature>
<feature type="mutagenesis site" description="Does not affect ADP-ribosyltransferase activity." evidence="102">
    <original>E</original>
    <variation>Q</variation>
    <location>
        <position position="883"/>
    </location>
</feature>
<feature type="mutagenesis site" description="Does not affect DNA-independent poly-ADP-ribosyltransferase activity." evidence="53">
    <original>P</original>
    <variation>G</variation>
    <variation>S</variation>
    <location>
        <position position="885"/>
    </location>
</feature>
<feature type="mutagenesis site" description="&lt;0.5% of wild-type activity." evidence="103">
    <original>M</original>
    <variation>V</variation>
    <location>
        <position position="890"/>
    </location>
</feature>
<feature type="mutagenesis site" description="Abolishes enzymatic activity." evidence="103">
    <original>K</original>
    <variation>I</variation>
    <location>
        <position position="893"/>
    </location>
</feature>
<feature type="mutagenesis site" description="10% of wild-type activity." evidence="103">
    <original>F</original>
    <variation>S</variation>
    <location>
        <position position="897"/>
    </location>
</feature>
<feature type="mutagenesis site" description="0.6% of wild-type activity." evidence="103">
    <original>D</original>
    <variation>N</variation>
    <location>
        <position position="899"/>
    </location>
</feature>
<feature type="mutagenesis site" description="&lt;0.5% of wild-type activity." evidence="103">
    <original>C</original>
    <variation>R</variation>
    <location>
        <position position="908"/>
    </location>
</feature>
<feature type="mutagenesis site" description="Does not affect ADP-ribosyltransferase activity." evidence="102">
    <original>E</original>
    <variation>Q</variation>
    <location>
        <position position="923"/>
    </location>
</feature>
<feature type="mutagenesis site" description="1.5% of wild-type activity." evidence="103">
    <original>L</original>
    <variation>F</variation>
    <location>
        <position position="926"/>
    </location>
</feature>
<feature type="mutagenesis site" description="Does not affect ADP-ribosyltransferase activity." evidence="102">
    <original>E</original>
    <variation>Q</variation>
    <location>
        <position position="931"/>
    </location>
</feature>
<feature type="mutagenesis site" description="14% of wild-type activity and increased branching 15-fold." evidence="103">
    <original>Y</original>
    <variation>H</variation>
    <location>
        <position position="986"/>
    </location>
</feature>
<feature type="mutagenesis site" description="Poly-ADP-ribosyltransferase activity is inhibited while mono-ADP-ribosyltransferase activity is not affected; only monomers are added. Disrupts interaction with CHD1L and ability to recruit PARP2 to DNA damage sites." evidence="61 64 71 102 103">
    <original>E</original>
    <variation>A</variation>
    <variation>D</variation>
    <variation>Q</variation>
    <variation>K</variation>
    <location>
        <position position="988"/>
    </location>
</feature>
<feature type="mutagenesis site" description="Abolished interaction with TIMELESS." evidence="51">
    <original>D</original>
    <variation>G</variation>
    <location>
        <position position="993"/>
    </location>
</feature>
<feature type="mutagenesis site" description="1.5% of wild-type activity." evidence="103">
    <original>L</original>
    <variation>P</variation>
    <location>
        <position position="1003"/>
    </location>
</feature>
<feature type="mutagenesis site" description="Strongly reduced serine ADP-ribosylation, caused by abolished interaction with HPF1." evidence="71">
    <original>LW</original>
    <variation>EE</variation>
    <location>
        <begin position="1013"/>
        <end position="1014"/>
    </location>
</feature>
<feature type="sequence conflict" description="In Ref. 2; AAB59447." evidence="118" ref="2">
    <original>G</original>
    <variation>E</variation>
    <location>
        <position position="17"/>
    </location>
</feature>
<feature type="sequence conflict" description="In Ref. 1; AAA60137." evidence="118" ref="1">
    <original>E</original>
    <variation>Q</variation>
    <location>
        <position position="70"/>
    </location>
</feature>
<feature type="sequence conflict" description="In Ref. 2; AAB59447." evidence="118" ref="2">
    <original>E</original>
    <variation>K</variation>
    <location>
        <position position="212"/>
    </location>
</feature>
<feature type="sequence conflict" description="In Ref. 3; AAA60155." evidence="118" ref="3">
    <original>H</original>
    <variation>Q</variation>
    <location>
        <position position="613"/>
    </location>
</feature>
<feature type="sequence conflict" description="In Ref. 3; AAA60155." evidence="118" ref="3">
    <original>N</original>
    <variation>S</variation>
    <location>
        <position position="827"/>
    </location>
</feature>
<feature type="sequence conflict" description="In Ref. 3; AAA60155." evidence="118" ref="3">
    <original>C</original>
    <variation>Y</variation>
    <location>
        <position position="908"/>
    </location>
</feature>
<feature type="sequence conflict" description="In Ref. 3; AAA60155." evidence="118" ref="3">
    <original>N</original>
    <variation>I</variation>
    <location>
        <position position="980"/>
    </location>
</feature>
<feature type="turn" evidence="169">
    <location>
        <begin position="2"/>
        <end position="5"/>
    </location>
</feature>
<feature type="strand" evidence="175">
    <location>
        <begin position="8"/>
        <end position="13"/>
    </location>
</feature>
<feature type="strand" evidence="175">
    <location>
        <begin position="15"/>
        <end position="17"/>
    </location>
</feature>
<feature type="turn" evidence="175">
    <location>
        <begin position="22"/>
        <end position="24"/>
    </location>
</feature>
<feature type="strand" evidence="169">
    <location>
        <begin position="25"/>
        <end position="27"/>
    </location>
</feature>
<feature type="strand" evidence="175">
    <location>
        <begin position="32"/>
        <end position="40"/>
    </location>
</feature>
<feature type="strand" evidence="175">
    <location>
        <begin position="42"/>
        <end position="53"/>
    </location>
</feature>
<feature type="helix" evidence="175">
    <location>
        <begin position="54"/>
        <end position="59"/>
    </location>
</feature>
<feature type="helix" evidence="175">
    <location>
        <begin position="67"/>
        <end position="70"/>
    </location>
</feature>
<feature type="helix" evidence="175">
    <location>
        <begin position="74"/>
        <end position="76"/>
    </location>
</feature>
<feature type="helix" evidence="175">
    <location>
        <begin position="79"/>
        <end position="90"/>
    </location>
</feature>
<feature type="strand" evidence="171">
    <location>
        <begin position="102"/>
        <end position="105"/>
    </location>
</feature>
<feature type="strand" evidence="176">
    <location>
        <begin position="113"/>
        <end position="117"/>
    </location>
</feature>
<feature type="strand" evidence="176">
    <location>
        <begin position="119"/>
        <end position="121"/>
    </location>
</feature>
<feature type="turn" evidence="176">
    <location>
        <begin position="126"/>
        <end position="128"/>
    </location>
</feature>
<feature type="strand" evidence="176">
    <location>
        <begin position="137"/>
        <end position="145"/>
    </location>
</feature>
<feature type="strand" evidence="176">
    <location>
        <begin position="148"/>
        <end position="158"/>
    </location>
</feature>
<feature type="helix" evidence="176">
    <location>
        <begin position="160"/>
        <end position="165"/>
    </location>
</feature>
<feature type="helix" evidence="176">
    <location>
        <begin position="167"/>
        <end position="170"/>
    </location>
</feature>
<feature type="turn" evidence="176">
    <location>
        <begin position="174"/>
        <end position="176"/>
    </location>
</feature>
<feature type="helix" evidence="176">
    <location>
        <begin position="177"/>
        <end position="180"/>
    </location>
</feature>
<feature type="helix" evidence="176">
    <location>
        <begin position="184"/>
        <end position="186"/>
    </location>
</feature>
<feature type="helix" evidence="176">
    <location>
        <begin position="189"/>
        <end position="198"/>
    </location>
</feature>
<feature type="turn" evidence="170">
    <location>
        <begin position="204"/>
        <end position="206"/>
    </location>
</feature>
<feature type="strand" evidence="171">
    <location>
        <begin position="209"/>
        <end position="211"/>
    </location>
</feature>
<feature type="helix" evidence="173">
    <location>
        <begin position="226"/>
        <end position="255"/>
    </location>
</feature>
<feature type="helix" evidence="173">
    <location>
        <begin position="258"/>
        <end position="267"/>
    </location>
</feature>
<feature type="turn" evidence="168">
    <location>
        <begin position="273"/>
        <end position="275"/>
    </location>
</feature>
<feature type="helix" evidence="173">
    <location>
        <begin position="276"/>
        <end position="289"/>
    </location>
</feature>
<feature type="turn" evidence="173">
    <location>
        <begin position="296"/>
        <end position="298"/>
    </location>
</feature>
<feature type="strand" evidence="173">
    <location>
        <begin position="302"/>
        <end position="305"/>
    </location>
</feature>
<feature type="strand" evidence="173">
    <location>
        <begin position="308"/>
        <end position="311"/>
    </location>
</feature>
<feature type="strand" evidence="173">
    <location>
        <begin position="314"/>
        <end position="316"/>
    </location>
</feature>
<feature type="strand" evidence="173">
    <location>
        <begin position="324"/>
        <end position="327"/>
    </location>
</feature>
<feature type="helix" evidence="173">
    <location>
        <begin position="337"/>
        <end position="340"/>
    </location>
</feature>
<feature type="helix" evidence="173">
    <location>
        <begin position="342"/>
        <end position="347"/>
    </location>
</feature>
<feature type="turn" evidence="185">
    <location>
        <begin position="389"/>
        <end position="392"/>
    </location>
</feature>
<feature type="strand" evidence="185">
    <location>
        <begin position="394"/>
        <end position="397"/>
    </location>
</feature>
<feature type="helix" evidence="185">
    <location>
        <begin position="405"/>
        <end position="414"/>
    </location>
</feature>
<feature type="strand" evidence="185">
    <location>
        <begin position="418"/>
        <end position="420"/>
    </location>
</feature>
<feature type="strand" evidence="185">
    <location>
        <begin position="427"/>
        <end position="431"/>
    </location>
</feature>
<feature type="helix" evidence="185">
    <location>
        <begin position="434"/>
        <end position="438"/>
    </location>
</feature>
<feature type="helix" evidence="185">
    <location>
        <begin position="441"/>
        <end position="448"/>
    </location>
</feature>
<feature type="strand" evidence="185">
    <location>
        <begin position="452"/>
        <end position="455"/>
    </location>
</feature>
<feature type="helix" evidence="185">
    <location>
        <begin position="458"/>
        <end position="464"/>
    </location>
</feature>
<feature type="helix" evidence="185">
    <location>
        <begin position="469"/>
        <end position="472"/>
    </location>
</feature>
<feature type="turn" evidence="185">
    <location>
        <begin position="473"/>
        <end position="475"/>
    </location>
</feature>
<feature type="helix" evidence="184">
    <location>
        <begin position="535"/>
        <end position="537"/>
    </location>
</feature>
<feature type="turn" evidence="184">
    <location>
        <begin position="540"/>
        <end position="542"/>
    </location>
</feature>
<feature type="strand" evidence="184">
    <location>
        <begin position="543"/>
        <end position="545"/>
    </location>
</feature>
<feature type="strand" evidence="183">
    <location>
        <begin position="548"/>
        <end position="550"/>
    </location>
</feature>
<feature type="strand" evidence="184">
    <location>
        <begin position="554"/>
        <end position="561"/>
    </location>
</feature>
<feature type="turn" evidence="184">
    <location>
        <begin position="562"/>
        <end position="565"/>
    </location>
</feature>
<feature type="strand" evidence="184">
    <location>
        <begin position="566"/>
        <end position="581"/>
    </location>
</feature>
<feature type="strand" evidence="184">
    <location>
        <begin position="583"/>
        <end position="591"/>
    </location>
</feature>
<feature type="strand" evidence="184">
    <location>
        <begin position="597"/>
        <end position="606"/>
    </location>
</feature>
<feature type="helix" evidence="184">
    <location>
        <begin position="607"/>
        <end position="622"/>
    </location>
</feature>
<feature type="strand" evidence="184">
    <location>
        <begin position="639"/>
        <end position="641"/>
    </location>
</feature>
<feature type="helix" evidence="180">
    <location>
        <begin position="667"/>
        <end position="676"/>
    </location>
</feature>
<feature type="helix" evidence="180">
    <location>
        <begin position="679"/>
        <end position="688"/>
    </location>
</feature>
<feature type="turn" evidence="180">
    <location>
        <begin position="693"/>
        <end position="695"/>
    </location>
</feature>
<feature type="helix" evidence="180">
    <location>
        <begin position="698"/>
        <end position="700"/>
    </location>
</feature>
<feature type="helix" evidence="180">
    <location>
        <begin position="703"/>
        <end position="721"/>
    </location>
</feature>
<feature type="helix" evidence="180">
    <location>
        <begin position="726"/>
        <end position="739"/>
    </location>
</feature>
<feature type="strand" evidence="182">
    <location>
        <begin position="745"/>
        <end position="747"/>
    </location>
</feature>
<feature type="strand" evidence="166">
    <location>
        <begin position="752"/>
        <end position="754"/>
    </location>
</feature>
<feature type="helix" evidence="180">
    <location>
        <begin position="755"/>
        <end position="779"/>
    </location>
</feature>
<feature type="strand" evidence="177">
    <location>
        <begin position="785"/>
        <end position="787"/>
    </location>
</feature>
<feature type="helix" evidence="178">
    <location>
        <begin position="790"/>
        <end position="796"/>
    </location>
</feature>
<feature type="strand" evidence="178">
    <location>
        <begin position="799"/>
        <end position="803"/>
    </location>
</feature>
<feature type="strand" evidence="172">
    <location>
        <begin position="806"/>
        <end position="808"/>
    </location>
</feature>
<feature type="helix" evidence="178">
    <location>
        <begin position="809"/>
        <end position="820"/>
    </location>
</feature>
<feature type="helix" evidence="180">
    <location>
        <begin position="824"/>
        <end position="826"/>
    </location>
</feature>
<feature type="strand" evidence="178">
    <location>
        <begin position="829"/>
        <end position="841"/>
    </location>
</feature>
<feature type="helix" evidence="178">
    <location>
        <begin position="844"/>
        <end position="848"/>
    </location>
</feature>
<feature type="helix" evidence="178">
    <location>
        <begin position="849"/>
        <end position="851"/>
    </location>
</feature>
<feature type="strand" evidence="174">
    <location>
        <begin position="853"/>
        <end position="855"/>
    </location>
</feature>
<feature type="strand" evidence="178">
    <location>
        <begin position="857"/>
        <end position="863"/>
    </location>
</feature>
<feature type="helix" evidence="178">
    <location>
        <begin position="866"/>
        <end position="868"/>
    </location>
</feature>
<feature type="helix" evidence="178">
    <location>
        <begin position="869"/>
        <end position="875"/>
    </location>
</feature>
<feature type="strand" evidence="186">
    <location>
        <begin position="882"/>
        <end position="884"/>
    </location>
</feature>
<feature type="helix" evidence="180">
    <location>
        <begin position="886"/>
        <end position="888"/>
    </location>
</feature>
<feature type="strand" evidence="167">
    <location>
        <begin position="889"/>
        <end position="891"/>
    </location>
</feature>
<feature type="strand" evidence="178">
    <location>
        <begin position="893"/>
        <end position="900"/>
    </location>
</feature>
<feature type="helix" evidence="178">
    <location>
        <begin position="901"/>
        <end position="905"/>
    </location>
</feature>
<feature type="helix" evidence="178">
    <location>
        <begin position="906"/>
        <end position="908"/>
    </location>
</feature>
<feature type="strand" evidence="181">
    <location>
        <begin position="912"/>
        <end position="914"/>
    </location>
</feature>
<feature type="strand" evidence="178">
    <location>
        <begin position="916"/>
        <end position="925"/>
    </location>
</feature>
<feature type="strand" evidence="178">
    <location>
        <begin position="928"/>
        <end position="934"/>
    </location>
</feature>
<feature type="strand" evidence="179">
    <location>
        <begin position="938"/>
        <end position="940"/>
    </location>
</feature>
<feature type="strand" evidence="178">
    <location>
        <begin position="947"/>
        <end position="950"/>
    </location>
</feature>
<feature type="strand" evidence="178">
    <location>
        <begin position="952"/>
        <end position="956"/>
    </location>
</feature>
<feature type="helix" evidence="178">
    <location>
        <begin position="958"/>
        <end position="960"/>
    </location>
</feature>
<feature type="strand" evidence="178">
    <location>
        <begin position="962"/>
        <end position="964"/>
    </location>
</feature>
<feature type="strand" evidence="178">
    <location>
        <begin position="967"/>
        <end position="969"/>
    </location>
</feature>
<feature type="strand" evidence="178">
    <location>
        <begin position="974"/>
        <end position="976"/>
    </location>
</feature>
<feature type="strand" evidence="178">
    <location>
        <begin position="983"/>
        <end position="986"/>
    </location>
</feature>
<feature type="strand" evidence="178">
    <location>
        <begin position="988"/>
        <end position="993"/>
    </location>
</feature>
<feature type="helix" evidence="178">
    <location>
        <begin position="994"/>
        <end position="996"/>
    </location>
</feature>
<feature type="strand" evidence="178">
    <location>
        <begin position="997"/>
        <end position="1009"/>
    </location>
</feature>
<dbReference type="EC" id="2.4.2.30" evidence="24 28 49 51 59 81 102"/>
<dbReference type="EC" id="2.4.2.-" evidence="57 28 49 55 81 84 86 98"/>
<dbReference type="EMBL" id="M18112">
    <property type="protein sequence ID" value="AAA60137.1"/>
    <property type="molecule type" value="mRNA"/>
</dbReference>
<dbReference type="EMBL" id="J03473">
    <property type="protein sequence ID" value="AAB59447.1"/>
    <property type="molecule type" value="mRNA"/>
</dbReference>
<dbReference type="EMBL" id="M32721">
    <property type="protein sequence ID" value="AAA60155.1"/>
    <property type="molecule type" value="mRNA"/>
</dbReference>
<dbReference type="EMBL" id="M29786">
    <property type="protein sequence ID" value="AAA51663.1"/>
    <property type="molecule type" value="Genomic_DNA"/>
</dbReference>
<dbReference type="EMBL" id="M29545">
    <property type="protein sequence ID" value="AAA51663.1"/>
    <property type="status" value="JOINED"/>
    <property type="molecule type" value="Genomic_DNA"/>
</dbReference>
<dbReference type="EMBL" id="M29766">
    <property type="protein sequence ID" value="AAA51663.1"/>
    <property type="status" value="JOINED"/>
    <property type="molecule type" value="Genomic_DNA"/>
</dbReference>
<dbReference type="EMBL" id="M29767">
    <property type="protein sequence ID" value="AAA51663.1"/>
    <property type="status" value="JOINED"/>
    <property type="molecule type" value="Genomic_DNA"/>
</dbReference>
<dbReference type="EMBL" id="M29768">
    <property type="protein sequence ID" value="AAA51663.1"/>
    <property type="status" value="JOINED"/>
    <property type="molecule type" value="Genomic_DNA"/>
</dbReference>
<dbReference type="EMBL" id="M29769">
    <property type="protein sequence ID" value="AAA51663.1"/>
    <property type="status" value="JOINED"/>
    <property type="molecule type" value="Genomic_DNA"/>
</dbReference>
<dbReference type="EMBL" id="M29770">
    <property type="protein sequence ID" value="AAA51663.1"/>
    <property type="status" value="JOINED"/>
    <property type="molecule type" value="Genomic_DNA"/>
</dbReference>
<dbReference type="EMBL" id="M29771">
    <property type="protein sequence ID" value="AAA51663.1"/>
    <property type="status" value="JOINED"/>
    <property type="molecule type" value="Genomic_DNA"/>
</dbReference>
<dbReference type="EMBL" id="M29772">
    <property type="protein sequence ID" value="AAA51663.1"/>
    <property type="status" value="JOINED"/>
    <property type="molecule type" value="Genomic_DNA"/>
</dbReference>
<dbReference type="EMBL" id="M29773">
    <property type="protein sequence ID" value="AAA51663.1"/>
    <property type="status" value="JOINED"/>
    <property type="molecule type" value="Genomic_DNA"/>
</dbReference>
<dbReference type="EMBL" id="M29774">
    <property type="protein sequence ID" value="AAA51663.1"/>
    <property type="status" value="JOINED"/>
    <property type="molecule type" value="Genomic_DNA"/>
</dbReference>
<dbReference type="EMBL" id="M29775">
    <property type="protein sequence ID" value="AAA51663.1"/>
    <property type="status" value="JOINED"/>
    <property type="molecule type" value="Genomic_DNA"/>
</dbReference>
<dbReference type="EMBL" id="M29776">
    <property type="protein sequence ID" value="AAA51663.1"/>
    <property type="status" value="JOINED"/>
    <property type="molecule type" value="Genomic_DNA"/>
</dbReference>
<dbReference type="EMBL" id="M29777">
    <property type="protein sequence ID" value="AAA51663.1"/>
    <property type="status" value="JOINED"/>
    <property type="molecule type" value="Genomic_DNA"/>
</dbReference>
<dbReference type="EMBL" id="M29778">
    <property type="protein sequence ID" value="AAA51663.1"/>
    <property type="status" value="JOINED"/>
    <property type="molecule type" value="Genomic_DNA"/>
</dbReference>
<dbReference type="EMBL" id="M29779">
    <property type="protein sequence ID" value="AAA51663.1"/>
    <property type="status" value="JOINED"/>
    <property type="molecule type" value="Genomic_DNA"/>
</dbReference>
<dbReference type="EMBL" id="M29780">
    <property type="protein sequence ID" value="AAA51663.1"/>
    <property type="status" value="JOINED"/>
    <property type="molecule type" value="Genomic_DNA"/>
</dbReference>
<dbReference type="EMBL" id="M29781">
    <property type="protein sequence ID" value="AAA51663.1"/>
    <property type="status" value="JOINED"/>
    <property type="molecule type" value="Genomic_DNA"/>
</dbReference>
<dbReference type="EMBL" id="M29783">
    <property type="protein sequence ID" value="AAA51663.1"/>
    <property type="status" value="JOINED"/>
    <property type="molecule type" value="Genomic_DNA"/>
</dbReference>
<dbReference type="EMBL" id="M29784">
    <property type="protein sequence ID" value="AAA51663.1"/>
    <property type="status" value="JOINED"/>
    <property type="molecule type" value="Genomic_DNA"/>
</dbReference>
<dbReference type="EMBL" id="M29785">
    <property type="protein sequence ID" value="AAA51663.1"/>
    <property type="status" value="JOINED"/>
    <property type="molecule type" value="Genomic_DNA"/>
</dbReference>
<dbReference type="EMBL" id="M29544">
    <property type="protein sequence ID" value="AAA51663.1"/>
    <property type="status" value="JOINED"/>
    <property type="molecule type" value="Genomic_DNA"/>
</dbReference>
<dbReference type="EMBL" id="M29782">
    <property type="protein sequence ID" value="AAA51663.1"/>
    <property type="status" value="JOINED"/>
    <property type="molecule type" value="Genomic_DNA"/>
</dbReference>
<dbReference type="EMBL" id="AF524947">
    <property type="protein sequence ID" value="AAM75364.1"/>
    <property type="molecule type" value="Genomic_DNA"/>
</dbReference>
<dbReference type="EMBL" id="AL359704">
    <property type="status" value="NOT_ANNOTATED_CDS"/>
    <property type="molecule type" value="Genomic_DNA"/>
</dbReference>
<dbReference type="EMBL" id="AL359742">
    <property type="status" value="NOT_ANNOTATED_CDS"/>
    <property type="molecule type" value="Genomic_DNA"/>
</dbReference>
<dbReference type="EMBL" id="CH471098">
    <property type="protein sequence ID" value="EAW69783.1"/>
    <property type="molecule type" value="Genomic_DNA"/>
</dbReference>
<dbReference type="EMBL" id="BC037545">
    <property type="protein sequence ID" value="AAH37545.1"/>
    <property type="molecule type" value="mRNA"/>
</dbReference>
<dbReference type="EMBL" id="X56140">
    <property type="protein sequence ID" value="CAA39606.1"/>
    <property type="molecule type" value="Genomic_DNA"/>
</dbReference>
<dbReference type="EMBL" id="X56141">
    <property type="protein sequence ID" value="CAA39606.1"/>
    <property type="status" value="JOINED"/>
    <property type="molecule type" value="Genomic_DNA"/>
</dbReference>
<dbReference type="EMBL" id="X16674">
    <property type="protein sequence ID" value="CAA34663.1"/>
    <property type="molecule type" value="Genomic_DNA"/>
</dbReference>
<dbReference type="EMBL" id="M60436">
    <property type="protein sequence ID" value="AAA60000.1"/>
    <property type="molecule type" value="Genomic_DNA"/>
</dbReference>
<dbReference type="EMBL" id="M17081">
    <property type="protein sequence ID" value="AAA51599.1"/>
    <property type="status" value="ALT_SEQ"/>
    <property type="molecule type" value="mRNA"/>
</dbReference>
<dbReference type="CCDS" id="CCDS1554.1"/>
<dbReference type="PIR" id="A29725">
    <property type="entry name" value="A29725"/>
</dbReference>
<dbReference type="RefSeq" id="NP_001609.2">
    <property type="nucleotide sequence ID" value="NM_001618.4"/>
</dbReference>
<dbReference type="PDB" id="1UK0">
    <property type="method" value="X-ray"/>
    <property type="resolution" value="3.00 A"/>
    <property type="chains" value="A/B=662-1011"/>
</dbReference>
<dbReference type="PDB" id="1UK1">
    <property type="method" value="X-ray"/>
    <property type="resolution" value="3.00 A"/>
    <property type="chains" value="A/B=662-1011"/>
</dbReference>
<dbReference type="PDB" id="1WOK">
    <property type="method" value="X-ray"/>
    <property type="resolution" value="3.00 A"/>
    <property type="chains" value="A/B/C/D=662-1011"/>
</dbReference>
<dbReference type="PDB" id="2COK">
    <property type="method" value="NMR"/>
    <property type="chains" value="A=387-486"/>
</dbReference>
<dbReference type="PDB" id="2CR9">
    <property type="method" value="NMR"/>
    <property type="chains" value="A=518-643"/>
</dbReference>
<dbReference type="PDB" id="2CS2">
    <property type="method" value="NMR"/>
    <property type="chains" value="A=103-223"/>
</dbReference>
<dbReference type="PDB" id="2DMJ">
    <property type="method" value="NMR"/>
    <property type="chains" value="A=1-93"/>
</dbReference>
<dbReference type="PDB" id="2JVN">
    <property type="method" value="NMR"/>
    <property type="chains" value="A=233-358"/>
</dbReference>
<dbReference type="PDB" id="2L30">
    <property type="method" value="NMR"/>
    <property type="chains" value="A=1-108"/>
</dbReference>
<dbReference type="PDB" id="2L31">
    <property type="method" value="NMR"/>
    <property type="chains" value="A=103-214"/>
</dbReference>
<dbReference type="PDB" id="2N8A">
    <property type="method" value="NMR"/>
    <property type="chains" value="A=1-214"/>
</dbReference>
<dbReference type="PDB" id="2RCW">
    <property type="method" value="X-ray"/>
    <property type="resolution" value="2.80 A"/>
    <property type="chains" value="A=662-1011"/>
</dbReference>
<dbReference type="PDB" id="2RD6">
    <property type="method" value="X-ray"/>
    <property type="resolution" value="2.30 A"/>
    <property type="chains" value="A=662-1011"/>
</dbReference>
<dbReference type="PDB" id="2RIQ">
    <property type="method" value="X-ray"/>
    <property type="resolution" value="1.70 A"/>
    <property type="chains" value="A=216-366"/>
</dbReference>
<dbReference type="PDB" id="3GJW">
    <property type="method" value="X-ray"/>
    <property type="resolution" value="2.30 A"/>
    <property type="chains" value="A=662-1011"/>
</dbReference>
<dbReference type="PDB" id="3GN7">
    <property type="method" value="X-ray"/>
    <property type="resolution" value="2.50 A"/>
    <property type="chains" value="A=662-1011"/>
</dbReference>
<dbReference type="PDB" id="3L3L">
    <property type="method" value="X-ray"/>
    <property type="resolution" value="2.50 A"/>
    <property type="chains" value="A=662-1011"/>
</dbReference>
<dbReference type="PDB" id="3L3M">
    <property type="method" value="X-ray"/>
    <property type="resolution" value="2.50 A"/>
    <property type="chains" value="A=662-1011"/>
</dbReference>
<dbReference type="PDB" id="3OD8">
    <property type="method" value="X-ray"/>
    <property type="resolution" value="2.40 A"/>
    <property type="chains" value="A/B/C/D/E/F/G/H=2-96"/>
</dbReference>
<dbReference type="PDB" id="3ODA">
    <property type="method" value="X-ray"/>
    <property type="resolution" value="2.64 A"/>
    <property type="chains" value="A/B/C/D/E/F/G/H=2-96"/>
</dbReference>
<dbReference type="PDB" id="3ODC">
    <property type="method" value="X-ray"/>
    <property type="resolution" value="2.80 A"/>
    <property type="chains" value="A/B=105-206"/>
</dbReference>
<dbReference type="PDB" id="3ODE">
    <property type="method" value="X-ray"/>
    <property type="resolution" value="2.95 A"/>
    <property type="chains" value="A/B=105-206"/>
</dbReference>
<dbReference type="PDB" id="4AV1">
    <property type="method" value="X-ray"/>
    <property type="resolution" value="3.10 A"/>
    <property type="chains" value="A/B/C/D=5-202"/>
</dbReference>
<dbReference type="PDB" id="4DQY">
    <property type="method" value="X-ray"/>
    <property type="resolution" value="3.25 A"/>
    <property type="chains" value="A/D=1-96, B/E=216-366, C/F=518-1014"/>
</dbReference>
<dbReference type="PDB" id="4GV7">
    <property type="method" value="X-ray"/>
    <property type="resolution" value="2.89 A"/>
    <property type="chains" value="A/B/C/D=662-1011"/>
</dbReference>
<dbReference type="PDB" id="4HHY">
    <property type="method" value="X-ray"/>
    <property type="resolution" value="2.36 A"/>
    <property type="chains" value="A/B/C/D=660-1011"/>
</dbReference>
<dbReference type="PDB" id="4HHZ">
    <property type="method" value="X-ray"/>
    <property type="resolution" value="2.72 A"/>
    <property type="chains" value="A/B/C/D=660-1011"/>
</dbReference>
<dbReference type="PDB" id="4L6S">
    <property type="method" value="X-ray"/>
    <property type="resolution" value="2.20 A"/>
    <property type="chains" value="A/B=662-1011"/>
</dbReference>
<dbReference type="PDB" id="4OPX">
    <property type="method" value="X-ray"/>
    <property type="resolution" value="3.31 A"/>
    <property type="chains" value="A/D=1-97, A/D=207-366, C/F=518-1014"/>
</dbReference>
<dbReference type="PDB" id="4OQA">
    <property type="method" value="X-ray"/>
    <property type="resolution" value="3.65 A"/>
    <property type="chains" value="A/D=1-97, A/D=207-366, C/F=518-1014"/>
</dbReference>
<dbReference type="PDB" id="4OQB">
    <property type="method" value="X-ray"/>
    <property type="resolution" value="3.36 A"/>
    <property type="chains" value="A/D=1-97, A/D=207-366, C/F=518-1014"/>
</dbReference>
<dbReference type="PDB" id="4PJT">
    <property type="method" value="X-ray"/>
    <property type="resolution" value="2.35 A"/>
    <property type="chains" value="A/B/C/D=662-1011"/>
</dbReference>
<dbReference type="PDB" id="4R5W">
    <property type="method" value="X-ray"/>
    <property type="resolution" value="2.84 A"/>
    <property type="chains" value="A/B=662-1011"/>
</dbReference>
<dbReference type="PDB" id="4R6E">
    <property type="method" value="X-ray"/>
    <property type="resolution" value="2.20 A"/>
    <property type="chains" value="A/B/C/D=662-1011"/>
</dbReference>
<dbReference type="PDB" id="4RV6">
    <property type="method" value="X-ray"/>
    <property type="resolution" value="3.19 A"/>
    <property type="chains" value="A/B/C/D=662-1011"/>
</dbReference>
<dbReference type="PDB" id="4UND">
    <property type="method" value="X-ray"/>
    <property type="resolution" value="2.20 A"/>
    <property type="chains" value="A/B=662-1011"/>
</dbReference>
<dbReference type="PDB" id="4UXB">
    <property type="method" value="X-ray"/>
    <property type="resolution" value="3.22 A"/>
    <property type="chains" value="A/B=662-1011"/>
</dbReference>
<dbReference type="PDB" id="4XHU">
    <property type="method" value="X-ray"/>
    <property type="resolution" value="2.09 A"/>
    <property type="chains" value="A/C=661-1014"/>
</dbReference>
<dbReference type="PDB" id="4ZZZ">
    <property type="method" value="X-ray"/>
    <property type="resolution" value="1.90 A"/>
    <property type="chains" value="A/B=655-1014"/>
</dbReference>
<dbReference type="PDB" id="5A00">
    <property type="method" value="X-ray"/>
    <property type="resolution" value="2.75 A"/>
    <property type="chains" value="A=655-1014"/>
</dbReference>
<dbReference type="PDB" id="5DS3">
    <property type="method" value="X-ray"/>
    <property type="resolution" value="2.60 A"/>
    <property type="chains" value="A=788-1012"/>
</dbReference>
<dbReference type="PDB" id="5HA9">
    <property type="method" value="X-ray"/>
    <property type="resolution" value="4.01 A"/>
    <property type="chains" value="A/B=662-1011"/>
</dbReference>
<dbReference type="PDB" id="5KPN">
    <property type="method" value="X-ray"/>
    <property type="resolution" value="2.30 A"/>
    <property type="chains" value="A/B=662-1011"/>
</dbReference>
<dbReference type="PDB" id="5KPO">
    <property type="method" value="X-ray"/>
    <property type="resolution" value="2.65 A"/>
    <property type="chains" value="A/B=662-1011"/>
</dbReference>
<dbReference type="PDB" id="5KPP">
    <property type="method" value="X-ray"/>
    <property type="resolution" value="2.33 A"/>
    <property type="chains" value="A/B=662-1011"/>
</dbReference>
<dbReference type="PDB" id="5KPQ">
    <property type="method" value="X-ray"/>
    <property type="resolution" value="2.55 A"/>
    <property type="chains" value="A/B=662-1011"/>
</dbReference>
<dbReference type="PDB" id="5WRQ">
    <property type="method" value="X-ray"/>
    <property type="resolution" value="2.65 A"/>
    <property type="chains" value="A/B=662-1011"/>
</dbReference>
<dbReference type="PDB" id="5WRY">
    <property type="method" value="X-ray"/>
    <property type="resolution" value="2.30 A"/>
    <property type="chains" value="A/B=662-1011"/>
</dbReference>
<dbReference type="PDB" id="5WRZ">
    <property type="method" value="X-ray"/>
    <property type="resolution" value="2.20 A"/>
    <property type="chains" value="A/B=662-1011"/>
</dbReference>
<dbReference type="PDB" id="5WS0">
    <property type="method" value="X-ray"/>
    <property type="resolution" value="2.60 A"/>
    <property type="chains" value="A/B=662-1011"/>
</dbReference>
<dbReference type="PDB" id="5WS1">
    <property type="method" value="X-ray"/>
    <property type="resolution" value="1.90 A"/>
    <property type="chains" value="A/B=662-1011"/>
</dbReference>
<dbReference type="PDB" id="5WTC">
    <property type="method" value="X-ray"/>
    <property type="resolution" value="2.20 A"/>
    <property type="chains" value="A/B=662-1011"/>
</dbReference>
<dbReference type="PDB" id="5XSR">
    <property type="method" value="X-ray"/>
    <property type="resolution" value="2.30 A"/>
    <property type="chains" value="A=662-1011"/>
</dbReference>
<dbReference type="PDB" id="5XST">
    <property type="method" value="X-ray"/>
    <property type="resolution" value="2.30 A"/>
    <property type="chains" value="A=662-1010"/>
</dbReference>
<dbReference type="PDB" id="5XSU">
    <property type="method" value="X-ray"/>
    <property type="resolution" value="2.40 A"/>
    <property type="chains" value="A/B/C/D=662-1011"/>
</dbReference>
<dbReference type="PDB" id="6BHV">
    <property type="method" value="X-ray"/>
    <property type="resolution" value="2.30 A"/>
    <property type="chains" value="A/B/C/D=788-1012"/>
</dbReference>
<dbReference type="PDB" id="6GHK">
    <property type="method" value="X-ray"/>
    <property type="resolution" value="2.28 A"/>
    <property type="chains" value="A/B=662-1011"/>
</dbReference>
<dbReference type="PDB" id="6M3I">
    <property type="method" value="X-ray"/>
    <property type="resolution" value="1.98 A"/>
    <property type="chains" value="B=788-1014"/>
</dbReference>
<dbReference type="PDB" id="6NRF">
    <property type="method" value="X-ray"/>
    <property type="resolution" value="2.00 A"/>
    <property type="chains" value="A=788-1012"/>
</dbReference>
<dbReference type="PDB" id="6NRG">
    <property type="method" value="X-ray"/>
    <property type="resolution" value="1.70 A"/>
    <property type="chains" value="A=788-1012"/>
</dbReference>
<dbReference type="PDB" id="6NRH">
    <property type="method" value="X-ray"/>
    <property type="resolution" value="1.50 A"/>
    <property type="chains" value="A=788-1012"/>
</dbReference>
<dbReference type="PDB" id="6NRI">
    <property type="method" value="X-ray"/>
    <property type="resolution" value="2.20 A"/>
    <property type="chains" value="A=788-1012"/>
</dbReference>
<dbReference type="PDB" id="6NRJ">
    <property type="method" value="X-ray"/>
    <property type="resolution" value="1.65 A"/>
    <property type="chains" value="A=788-1012"/>
</dbReference>
<dbReference type="PDB" id="6NTU">
    <property type="method" value="X-ray"/>
    <property type="resolution" value="1.80 A"/>
    <property type="chains" value="A=788-1012"/>
</dbReference>
<dbReference type="PDB" id="6VKK">
    <property type="method" value="X-ray"/>
    <property type="resolution" value="2.10 A"/>
    <property type="chains" value="A/B/C/D=661-1011"/>
</dbReference>
<dbReference type="PDB" id="6VKO">
    <property type="method" value="X-ray"/>
    <property type="resolution" value="2.80 A"/>
    <property type="chains" value="A/B/C/D=661-1011"/>
</dbReference>
<dbReference type="PDB" id="6VKQ">
    <property type="method" value="X-ray"/>
    <property type="resolution" value="2.90 A"/>
    <property type="chains" value="A/B/C/D=661-1011"/>
</dbReference>
<dbReference type="PDB" id="6XVW">
    <property type="method" value="X-ray"/>
    <property type="resolution" value="2.00 A"/>
    <property type="chains" value="A/B=663-1014"/>
</dbReference>
<dbReference type="PDB" id="7AAA">
    <property type="method" value="X-ray"/>
    <property type="resolution" value="1.74 A"/>
    <property type="chains" value="A/B=662-1011"/>
</dbReference>
<dbReference type="PDB" id="7AAB">
    <property type="method" value="X-ray"/>
    <property type="resolution" value="2.80 A"/>
    <property type="chains" value="A/B=662-1011"/>
</dbReference>
<dbReference type="PDB" id="7AAC">
    <property type="method" value="X-ray"/>
    <property type="resolution" value="1.59 A"/>
    <property type="chains" value="A/B=662-1011"/>
</dbReference>
<dbReference type="PDB" id="7AAD">
    <property type="method" value="X-ray"/>
    <property type="resolution" value="2.21 A"/>
    <property type="chains" value="A/B=662-1011"/>
</dbReference>
<dbReference type="PDB" id="7CMW">
    <property type="method" value="X-ray"/>
    <property type="resolution" value="2.70 A"/>
    <property type="chains" value="A/B=662-1011"/>
</dbReference>
<dbReference type="PDB" id="7KK2">
    <property type="method" value="X-ray"/>
    <property type="resolution" value="1.70 A"/>
    <property type="chains" value="A/B=662-1011"/>
</dbReference>
<dbReference type="PDB" id="7KK3">
    <property type="method" value="X-ray"/>
    <property type="resolution" value="2.06 A"/>
    <property type="chains" value="A/B/C/D=662-1011"/>
</dbReference>
<dbReference type="PDB" id="7KK4">
    <property type="method" value="X-ray"/>
    <property type="resolution" value="1.96 A"/>
    <property type="chains" value="A/B=662-1011"/>
</dbReference>
<dbReference type="PDB" id="7KK5">
    <property type="method" value="X-ray"/>
    <property type="resolution" value="1.70 A"/>
    <property type="chains" value="A/B/C/D=662-1011"/>
</dbReference>
<dbReference type="PDB" id="7KK6">
    <property type="method" value="X-ray"/>
    <property type="resolution" value="2.06 A"/>
    <property type="chains" value="A/B=662-1011"/>
</dbReference>
<dbReference type="PDB" id="7ONR">
    <property type="method" value="X-ray"/>
    <property type="resolution" value="2.05 A"/>
    <property type="chains" value="A/B=662-1011"/>
</dbReference>
<dbReference type="PDB" id="7ONS">
    <property type="method" value="X-ray"/>
    <property type="resolution" value="1.97 A"/>
    <property type="chains" value="A/B=662-1011"/>
</dbReference>
<dbReference type="PDB" id="7ONT">
    <property type="method" value="X-ray"/>
    <property type="resolution" value="1.85 A"/>
    <property type="chains" value="A/B=662-1011"/>
</dbReference>
<dbReference type="PDB" id="7S68">
    <property type="method" value="X-ray"/>
    <property type="resolution" value="3.30 A"/>
    <property type="chains" value="A=1-366, B=527-786"/>
</dbReference>
<dbReference type="PDB" id="7S6H">
    <property type="method" value="X-ray"/>
    <property type="resolution" value="3.10 A"/>
    <property type="chains" value="A/C=1-366, B/D=518-1014"/>
</dbReference>
<dbReference type="PDB" id="7S6M">
    <property type="method" value="X-ray"/>
    <property type="resolution" value="3.20 A"/>
    <property type="chains" value="A/C=1-366, B/D=518-1014"/>
</dbReference>
<dbReference type="PDB" id="7S81">
    <property type="method" value="X-ray"/>
    <property type="resolution" value="3.60 A"/>
    <property type="chains" value="A/F/I/N=1-96, B/G/J/O=216-366, C/H/K/P=527-786"/>
</dbReference>
<dbReference type="PDB" id="7SCY">
    <property type="method" value="EM"/>
    <property type="resolution" value="4.10 A"/>
    <property type="chains" value="K=385-492"/>
</dbReference>
<dbReference type="PDB" id="7SCZ">
    <property type="method" value="EM"/>
    <property type="resolution" value="3.50 A"/>
    <property type="chains" value="K=385-492"/>
</dbReference>
<dbReference type="PDB" id="8FYY">
    <property type="method" value="X-ray"/>
    <property type="resolution" value="2.80 A"/>
    <property type="chains" value="A=788-1012"/>
</dbReference>
<dbReference type="PDB" id="8FYZ">
    <property type="method" value="X-ray"/>
    <property type="resolution" value="3.40 A"/>
    <property type="chains" value="A/B=788-1012"/>
</dbReference>
<dbReference type="PDB" id="8FZ1">
    <property type="method" value="X-ray"/>
    <property type="resolution" value="2.70 A"/>
    <property type="chains" value="A/B=788-1012"/>
</dbReference>
<dbReference type="PDB" id="8G0H">
    <property type="method" value="X-ray"/>
    <property type="resolution" value="3.80 A"/>
    <property type="chains" value="A/C=1-366, B/D=518-1014"/>
</dbReference>
<dbReference type="PDB" id="8HE7">
    <property type="method" value="X-ray"/>
    <property type="resolution" value="2.10 A"/>
    <property type="chains" value="A/B=662-1011"/>
</dbReference>
<dbReference type="PDB" id="8HLR">
    <property type="method" value="X-ray"/>
    <property type="resolution" value="2.85 A"/>
    <property type="chains" value="A/B=662-1011"/>
</dbReference>
<dbReference type="PDB" id="8JNZ">
    <property type="method" value="X-ray"/>
    <property type="resolution" value="2.84 A"/>
    <property type="chains" value="A/B=662-1011"/>
</dbReference>
<dbReference type="PDB" id="8U4W">
    <property type="method" value="X-ray"/>
    <property type="resolution" value="3.02 A"/>
    <property type="chains" value="A/B/C/D=788-1011"/>
</dbReference>
<dbReference type="PDB" id="9BPY">
    <property type="method" value="X-ray"/>
    <property type="resolution" value="2.80 A"/>
    <property type="chains" value="A/B/C/D=788-1012"/>
</dbReference>
<dbReference type="PDB" id="9CKC">
    <property type="method" value="X-ray"/>
    <property type="resolution" value="2.10 A"/>
    <property type="chains" value="C/D/E/F=522-534"/>
</dbReference>
<dbReference type="PDB" id="9DMC">
    <property type="method" value="X-ray"/>
    <property type="resolution" value="3.00 A"/>
    <property type="chains" value="A/B/C/D=788-1012"/>
</dbReference>
<dbReference type="PDB" id="9ETQ">
    <property type="method" value="X-ray"/>
    <property type="resolution" value="1.59 A"/>
    <property type="chains" value="A/B=662-1011"/>
</dbReference>
<dbReference type="PDB" id="9ETR">
    <property type="method" value="X-ray"/>
    <property type="resolution" value="1.82 A"/>
    <property type="chains" value="A/B=662-1011"/>
</dbReference>
<dbReference type="PDBsum" id="1UK0"/>
<dbReference type="PDBsum" id="1UK1"/>
<dbReference type="PDBsum" id="1WOK"/>
<dbReference type="PDBsum" id="2COK"/>
<dbReference type="PDBsum" id="2CR9"/>
<dbReference type="PDBsum" id="2CS2"/>
<dbReference type="PDBsum" id="2DMJ"/>
<dbReference type="PDBsum" id="2JVN"/>
<dbReference type="PDBsum" id="2L30"/>
<dbReference type="PDBsum" id="2L31"/>
<dbReference type="PDBsum" id="2N8A"/>
<dbReference type="PDBsum" id="2RCW"/>
<dbReference type="PDBsum" id="2RD6"/>
<dbReference type="PDBsum" id="2RIQ"/>
<dbReference type="PDBsum" id="3GJW"/>
<dbReference type="PDBsum" id="3GN7"/>
<dbReference type="PDBsum" id="3L3L"/>
<dbReference type="PDBsum" id="3L3M"/>
<dbReference type="PDBsum" id="3OD8"/>
<dbReference type="PDBsum" id="3ODA"/>
<dbReference type="PDBsum" id="3ODC"/>
<dbReference type="PDBsum" id="3ODE"/>
<dbReference type="PDBsum" id="4AV1"/>
<dbReference type="PDBsum" id="4DQY"/>
<dbReference type="PDBsum" id="4GV7"/>
<dbReference type="PDBsum" id="4HHY"/>
<dbReference type="PDBsum" id="4HHZ"/>
<dbReference type="PDBsum" id="4L6S"/>
<dbReference type="PDBsum" id="4OPX"/>
<dbReference type="PDBsum" id="4OQA"/>
<dbReference type="PDBsum" id="4OQB"/>
<dbReference type="PDBsum" id="4PJT"/>
<dbReference type="PDBsum" id="4R5W"/>
<dbReference type="PDBsum" id="4R6E"/>
<dbReference type="PDBsum" id="4RV6"/>
<dbReference type="PDBsum" id="4UND"/>
<dbReference type="PDBsum" id="4UXB"/>
<dbReference type="PDBsum" id="4XHU"/>
<dbReference type="PDBsum" id="4ZZZ"/>
<dbReference type="PDBsum" id="5A00"/>
<dbReference type="PDBsum" id="5DS3"/>
<dbReference type="PDBsum" id="5HA9"/>
<dbReference type="PDBsum" id="5KPN"/>
<dbReference type="PDBsum" id="5KPO"/>
<dbReference type="PDBsum" id="5KPP"/>
<dbReference type="PDBsum" id="5KPQ"/>
<dbReference type="PDBsum" id="5WRQ"/>
<dbReference type="PDBsum" id="5WRY"/>
<dbReference type="PDBsum" id="5WRZ"/>
<dbReference type="PDBsum" id="5WS0"/>
<dbReference type="PDBsum" id="5WS1"/>
<dbReference type="PDBsum" id="5WTC"/>
<dbReference type="PDBsum" id="5XSR"/>
<dbReference type="PDBsum" id="5XST"/>
<dbReference type="PDBsum" id="5XSU"/>
<dbReference type="PDBsum" id="6BHV"/>
<dbReference type="PDBsum" id="6GHK"/>
<dbReference type="PDBsum" id="6M3I"/>
<dbReference type="PDBsum" id="6NRF"/>
<dbReference type="PDBsum" id="6NRG"/>
<dbReference type="PDBsum" id="6NRH"/>
<dbReference type="PDBsum" id="6NRI"/>
<dbReference type="PDBsum" id="6NRJ"/>
<dbReference type="PDBsum" id="6NTU"/>
<dbReference type="PDBsum" id="6VKK"/>
<dbReference type="PDBsum" id="6VKO"/>
<dbReference type="PDBsum" id="6VKQ"/>
<dbReference type="PDBsum" id="6XVW"/>
<dbReference type="PDBsum" id="7AAA"/>
<dbReference type="PDBsum" id="7AAB"/>
<dbReference type="PDBsum" id="7AAC"/>
<dbReference type="PDBsum" id="7AAD"/>
<dbReference type="PDBsum" id="7CMW"/>
<dbReference type="PDBsum" id="7KK2"/>
<dbReference type="PDBsum" id="7KK3"/>
<dbReference type="PDBsum" id="7KK4"/>
<dbReference type="PDBsum" id="7KK5"/>
<dbReference type="PDBsum" id="7KK6"/>
<dbReference type="PDBsum" id="7ONR"/>
<dbReference type="PDBsum" id="7ONS"/>
<dbReference type="PDBsum" id="7ONT"/>
<dbReference type="PDBsum" id="7S68"/>
<dbReference type="PDBsum" id="7S6H"/>
<dbReference type="PDBsum" id="7S6M"/>
<dbReference type="PDBsum" id="7S81"/>
<dbReference type="PDBsum" id="7SCY"/>
<dbReference type="PDBsum" id="7SCZ"/>
<dbReference type="PDBsum" id="8FYY"/>
<dbReference type="PDBsum" id="8FYZ"/>
<dbReference type="PDBsum" id="8FZ1"/>
<dbReference type="PDBsum" id="8G0H"/>
<dbReference type="PDBsum" id="8HE7"/>
<dbReference type="PDBsum" id="8HLR"/>
<dbReference type="PDBsum" id="8JNZ"/>
<dbReference type="PDBsum" id="8U4W"/>
<dbReference type="PDBsum" id="9BPY"/>
<dbReference type="PDBsum" id="9CKC"/>
<dbReference type="PDBsum" id="9DMC"/>
<dbReference type="PDBsum" id="9ETQ"/>
<dbReference type="PDBsum" id="9ETR"/>
<dbReference type="BMRB" id="P09874"/>
<dbReference type="EMDB" id="EMD-25042"/>
<dbReference type="EMDB" id="EMD-25043"/>
<dbReference type="SMR" id="P09874"/>
<dbReference type="BioGRID" id="106652">
    <property type="interactions" value="1355"/>
</dbReference>
<dbReference type="CORUM" id="P09874"/>
<dbReference type="DIP" id="DIP-38N"/>
<dbReference type="ELM" id="P09874"/>
<dbReference type="FunCoup" id="P09874">
    <property type="interactions" value="2194"/>
</dbReference>
<dbReference type="IntAct" id="P09874">
    <property type="interactions" value="349"/>
</dbReference>
<dbReference type="MINT" id="P09874"/>
<dbReference type="STRING" id="9606.ENSP00000355759"/>
<dbReference type="BindingDB" id="P09874"/>
<dbReference type="ChEMBL" id="CHEMBL3105"/>
<dbReference type="DrugBank" id="DB04010">
    <property type="generic name" value="2-(3'-Methoxyphenyl) Benzimidazole-4-Carboxamide"/>
</dbReference>
<dbReference type="DrugBank" id="DB03509">
    <property type="generic name" value="2-(4-Chlorophenyl)-5-Quinoxalinecarboxamide"/>
</dbReference>
<dbReference type="DrugBank" id="DB07677">
    <property type="generic name" value="2-methyl-3,5,7,8-tetrahydro-4H-thiopyrano[4,3-d]pyrimidin-4-one"/>
</dbReference>
<dbReference type="DrugBank" id="DB03072">
    <property type="generic name" value="2-{3-[4-(4-Fluorophenyl)-3,6-Dihydro-1(2h)-Pyridinyl]Propyl}-8-Methyl-4(3h)-Quinazolinone"/>
</dbReference>
<dbReference type="DrugBank" id="DB16063">
    <property type="generic name" value="2X-121"/>
</dbReference>
<dbReference type="DrugBank" id="DB03722">
    <property type="generic name" value="3,4-Dihydro-5-Methyl-Isoquinolinone"/>
</dbReference>
<dbReference type="DrugBank" id="DB03073">
    <property type="generic name" value="3-Methoxybenzamide"/>
</dbReference>
<dbReference type="DrugBank" id="DB08058">
    <property type="generic name" value="4-[3-(1,4-diazepan-1-ylcarbonyl)-4-fluorobenzyl]phthalazin-1(2H)-one"/>
</dbReference>
<dbReference type="DrugBank" id="DB07787">
    <property type="generic name" value="5-FLUORO-1-[4-(4-PHENYL-3,6-DIHYDROPYRIDIN-1(2H)-YL)BUTYL]QUINAZOLINE-2,4(1H,3H)-DIONE"/>
</dbReference>
<dbReference type="DrugBank" id="DB07096">
    <property type="generic name" value="6-AMINO-BENZO[DE]ISOQUINOLINE-1,3-DIONE"/>
</dbReference>
<dbReference type="DrugBank" id="DB02597">
    <property type="generic name" value="[2(R,S)-2-Sulfanylheptanoyl]-Phe-Ala"/>
</dbReference>
<dbReference type="DrugBank" id="DB07330">
    <property type="generic name" value="A-620223"/>
</dbReference>
<dbReference type="DrugBank" id="DB02498">
    <property type="generic name" value="Carba-nicotinamide-adenine-dinucleotide"/>
</dbReference>
<dbReference type="DrugBank" id="DB00242">
    <property type="generic name" value="Cladribine"/>
</dbReference>
<dbReference type="DrugBank" id="DB15637">
    <property type="generic name" value="Fluzoparib"/>
</dbReference>
<dbReference type="DrugBank" id="DB13877">
    <property type="generic name" value="Iniparib"/>
</dbReference>
<dbReference type="DrugBank" id="DB06397">
    <property type="generic name" value="Nicaraven"/>
</dbReference>
<dbReference type="DrugBank" id="DB02701">
    <property type="generic name" value="Nicotinamide"/>
</dbReference>
<dbReference type="DrugBank" id="DB11793">
    <property type="generic name" value="Niraparib"/>
</dbReference>
<dbReference type="DrugBank" id="DB02690">
    <property type="generic name" value="NU1025"/>
</dbReference>
<dbReference type="DrugBank" id="DB08348">
    <property type="generic name" value="N~2~,N~2~-DIMETHYL-N~1~-(6-OXO-5,6-DIHYDROPHENANTHRIDIN-2-YL)GLYCINAMIDE"/>
</dbReference>
<dbReference type="DrugBank" id="DB09074">
    <property type="generic name" value="Olaparib"/>
</dbReference>
<dbReference type="DrugBank" id="DB02669">
    <property type="generic name" value="RB106"/>
</dbReference>
<dbReference type="DrugBank" id="DB12332">
    <property type="generic name" value="Rucaparib"/>
</dbReference>
<dbReference type="DrugBank" id="DB11760">
    <property type="generic name" value="Talazoparib"/>
</dbReference>
<dbReference type="DrugBank" id="DB00277">
    <property type="generic name" value="Theophylline"/>
</dbReference>
<dbReference type="DrugBank" id="DB07232">
    <property type="generic name" value="Veliparib"/>
</dbReference>
<dbReference type="DrugBank" id="DB01593">
    <property type="generic name" value="Zinc"/>
</dbReference>
<dbReference type="DrugBank" id="DB14487">
    <property type="generic name" value="Zinc acetate"/>
</dbReference>
<dbReference type="DrugBank" id="DB14533">
    <property type="generic name" value="Zinc chloride"/>
</dbReference>
<dbReference type="DrugBank" id="DB14548">
    <property type="generic name" value="Zinc sulfate, unspecified form"/>
</dbReference>
<dbReference type="DrugCentral" id="P09874"/>
<dbReference type="GuidetoPHARMACOLOGY" id="2771"/>
<dbReference type="MoonProt" id="P09874"/>
<dbReference type="GlyGen" id="P09874">
    <property type="glycosylation" value="1 site, 1 O-linked glycan (1 site)"/>
</dbReference>
<dbReference type="iPTMnet" id="P09874"/>
<dbReference type="MetOSite" id="P09874"/>
<dbReference type="PhosphoSitePlus" id="P09874"/>
<dbReference type="SwissPalm" id="P09874"/>
<dbReference type="BioMuta" id="PARP1"/>
<dbReference type="DMDM" id="130781"/>
<dbReference type="CPTAC" id="CPTAC-3240"/>
<dbReference type="CPTAC" id="CPTAC-3241"/>
<dbReference type="CPTAC" id="CPTAC-556"/>
<dbReference type="CPTAC" id="CPTAC-557"/>
<dbReference type="CPTAC" id="CPTAC-5899"/>
<dbReference type="jPOST" id="P09874"/>
<dbReference type="MassIVE" id="P09874"/>
<dbReference type="PaxDb" id="9606-ENSP00000355759"/>
<dbReference type="PeptideAtlas" id="P09874"/>
<dbReference type="ProteomicsDB" id="52271"/>
<dbReference type="Pumba" id="P09874"/>
<dbReference type="Antibodypedia" id="3545">
    <property type="antibodies" value="1922 antibodies from 50 providers"/>
</dbReference>
<dbReference type="CPTC" id="P09874">
    <property type="antibodies" value="1 antibody"/>
</dbReference>
<dbReference type="DNASU" id="142"/>
<dbReference type="Ensembl" id="ENST00000366794.10">
    <property type="protein sequence ID" value="ENSP00000355759.5"/>
    <property type="gene ID" value="ENSG00000143799.14"/>
</dbReference>
<dbReference type="GeneID" id="142"/>
<dbReference type="KEGG" id="hsa:142"/>
<dbReference type="MANE-Select" id="ENST00000366794.10">
    <property type="protein sequence ID" value="ENSP00000355759.5"/>
    <property type="RefSeq nucleotide sequence ID" value="NM_001618.4"/>
    <property type="RefSeq protein sequence ID" value="NP_001609.2"/>
</dbReference>
<dbReference type="UCSC" id="uc001hqd.5">
    <property type="organism name" value="human"/>
</dbReference>
<dbReference type="AGR" id="HGNC:270"/>
<dbReference type="CTD" id="142"/>
<dbReference type="DisGeNET" id="142"/>
<dbReference type="GeneCards" id="PARP1"/>
<dbReference type="HGNC" id="HGNC:270">
    <property type="gene designation" value="PARP1"/>
</dbReference>
<dbReference type="HPA" id="ENSG00000143799">
    <property type="expression patterns" value="Low tissue specificity"/>
</dbReference>
<dbReference type="MalaCards" id="PARP1"/>
<dbReference type="MIM" id="173870">
    <property type="type" value="gene"/>
</dbReference>
<dbReference type="neXtProt" id="NX_P09874"/>
<dbReference type="OpenTargets" id="ENSG00000143799"/>
<dbReference type="PharmGKB" id="PA32"/>
<dbReference type="VEuPathDB" id="HostDB:ENSG00000143799"/>
<dbReference type="eggNOG" id="KOG1037">
    <property type="taxonomic scope" value="Eukaryota"/>
</dbReference>
<dbReference type="GeneTree" id="ENSGT00940000156058"/>
<dbReference type="HOGENOM" id="CLU_004841_0_0_1"/>
<dbReference type="InParanoid" id="P09874"/>
<dbReference type="OMA" id="MNFKYKY"/>
<dbReference type="OrthoDB" id="429950at2759"/>
<dbReference type="PAN-GO" id="P09874">
    <property type="GO annotations" value="5 GO annotations based on evolutionary models"/>
</dbReference>
<dbReference type="PhylomeDB" id="P09874"/>
<dbReference type="TreeFam" id="TF316616"/>
<dbReference type="BRENDA" id="2.4.2.30">
    <property type="organism ID" value="2681"/>
</dbReference>
<dbReference type="PathwayCommons" id="P09874"/>
<dbReference type="Reactome" id="R-HSA-110362">
    <property type="pathway name" value="POLB-Dependent Long Patch Base Excision Repair"/>
</dbReference>
<dbReference type="Reactome" id="R-HSA-192814">
    <property type="pathway name" value="vRNA Synthesis"/>
</dbReference>
<dbReference type="Reactome" id="R-HSA-2173795">
    <property type="pathway name" value="Downregulation of SMAD2/3:SMAD4 transcriptional activity"/>
</dbReference>
<dbReference type="Reactome" id="R-HSA-3108214">
    <property type="pathway name" value="SUMOylation of DNA damage response and repair proteins"/>
</dbReference>
<dbReference type="Reactome" id="R-HSA-5685939">
    <property type="pathway name" value="HDR through MMEJ (alt-NHEJ)"/>
</dbReference>
<dbReference type="Reactome" id="R-HSA-5696394">
    <property type="pathway name" value="DNA Damage Recognition in GG-NER"/>
</dbReference>
<dbReference type="Reactome" id="R-HSA-5696395">
    <property type="pathway name" value="Formation of Incision Complex in GG-NER"/>
</dbReference>
<dbReference type="Reactome" id="R-HSA-5696400">
    <property type="pathway name" value="Dual Incision in GG-NER"/>
</dbReference>
<dbReference type="SignaLink" id="P09874"/>
<dbReference type="SIGNOR" id="P09874"/>
<dbReference type="BioGRID-ORCS" id="142">
    <property type="hits" value="41 hits in 1169 CRISPR screens"/>
</dbReference>
<dbReference type="CD-CODE" id="8C2F96ED">
    <property type="entry name" value="Centrosome"/>
</dbReference>
<dbReference type="CD-CODE" id="91857CE7">
    <property type="entry name" value="Nucleolus"/>
</dbReference>
<dbReference type="CD-CODE" id="D1F4711B">
    <property type="entry name" value="PARP1-DNA condensate"/>
</dbReference>
<dbReference type="CD-CODE" id="DEE660B4">
    <property type="entry name" value="Stress granule"/>
</dbReference>
<dbReference type="CD-CODE" id="FB4E32DD">
    <property type="entry name" value="Presynaptic clusters and postsynaptic densities"/>
</dbReference>
<dbReference type="ChiTaRS" id="PARP1">
    <property type="organism name" value="human"/>
</dbReference>
<dbReference type="EvolutionaryTrace" id="P09874"/>
<dbReference type="GeneWiki" id="PARP1"/>
<dbReference type="GenomeRNAi" id="142"/>
<dbReference type="Pharos" id="P09874">
    <property type="development level" value="Tclin"/>
</dbReference>
<dbReference type="PRO" id="PR:P09874"/>
<dbReference type="Proteomes" id="UP000005640">
    <property type="component" value="Chromosome 1"/>
</dbReference>
<dbReference type="RNAct" id="P09874">
    <property type="molecule type" value="protein"/>
</dbReference>
<dbReference type="Bgee" id="ENSG00000143799">
    <property type="expression patterns" value="Expressed in ventricular zone and 212 other cell types or tissues"/>
</dbReference>
<dbReference type="ExpressionAtlas" id="P09874">
    <property type="expression patterns" value="baseline and differential"/>
</dbReference>
<dbReference type="GO" id="GO:0000785">
    <property type="term" value="C:chromatin"/>
    <property type="evidence" value="ECO:0000314"/>
    <property type="project" value="UniProtKB"/>
</dbReference>
<dbReference type="GO" id="GO:0000781">
    <property type="term" value="C:chromosome, telomeric region"/>
    <property type="evidence" value="ECO:0007005"/>
    <property type="project" value="BHF-UCL"/>
</dbReference>
<dbReference type="GO" id="GO:0005829">
    <property type="term" value="C:cytosol"/>
    <property type="evidence" value="ECO:0000314"/>
    <property type="project" value="UniProtKB"/>
</dbReference>
<dbReference type="GO" id="GO:0016020">
    <property type="term" value="C:membrane"/>
    <property type="evidence" value="ECO:0007005"/>
    <property type="project" value="UniProtKB"/>
</dbReference>
<dbReference type="GO" id="GO:0005739">
    <property type="term" value="C:mitochondrion"/>
    <property type="evidence" value="ECO:0000314"/>
    <property type="project" value="MGI"/>
</dbReference>
<dbReference type="GO" id="GO:0016604">
    <property type="term" value="C:nuclear body"/>
    <property type="evidence" value="ECO:0000314"/>
    <property type="project" value="HPA"/>
</dbReference>
<dbReference type="GO" id="GO:0005635">
    <property type="term" value="C:nuclear envelope"/>
    <property type="evidence" value="ECO:0000314"/>
    <property type="project" value="UniProtKB"/>
</dbReference>
<dbReference type="GO" id="GO:0043596">
    <property type="term" value="C:nuclear replication fork"/>
    <property type="evidence" value="ECO:0000314"/>
    <property type="project" value="UniProtKB"/>
</dbReference>
<dbReference type="GO" id="GO:0005730">
    <property type="term" value="C:nucleolus"/>
    <property type="evidence" value="ECO:0000314"/>
    <property type="project" value="UniProtKB"/>
</dbReference>
<dbReference type="GO" id="GO:0005654">
    <property type="term" value="C:nucleoplasm"/>
    <property type="evidence" value="ECO:0000314"/>
    <property type="project" value="HPA"/>
</dbReference>
<dbReference type="GO" id="GO:0005634">
    <property type="term" value="C:nucleus"/>
    <property type="evidence" value="ECO:0000314"/>
    <property type="project" value="UniProtKB"/>
</dbReference>
<dbReference type="GO" id="GO:0032991">
    <property type="term" value="C:protein-containing complex"/>
    <property type="evidence" value="ECO:0000314"/>
    <property type="project" value="CAFA"/>
</dbReference>
<dbReference type="GO" id="GO:0032993">
    <property type="term" value="C:protein-DNA complex"/>
    <property type="evidence" value="ECO:0000314"/>
    <property type="project" value="CAFA"/>
</dbReference>
<dbReference type="GO" id="GO:0090734">
    <property type="term" value="C:site of DNA damage"/>
    <property type="evidence" value="ECO:0000314"/>
    <property type="project" value="UniProtKB"/>
</dbReference>
<dbReference type="GO" id="GO:0035861">
    <property type="term" value="C:site of double-strand break"/>
    <property type="evidence" value="ECO:0000314"/>
    <property type="project" value="UniProtKB"/>
</dbReference>
<dbReference type="GO" id="GO:0005667">
    <property type="term" value="C:transcription regulator complex"/>
    <property type="evidence" value="ECO:0000314"/>
    <property type="project" value="BHF-UCL"/>
</dbReference>
<dbReference type="GO" id="GO:0003682">
    <property type="term" value="F:chromatin binding"/>
    <property type="evidence" value="ECO:0000314"/>
    <property type="project" value="UniProt"/>
</dbReference>
<dbReference type="GO" id="GO:0003684">
    <property type="term" value="F:damaged DNA binding"/>
    <property type="evidence" value="ECO:0000314"/>
    <property type="project" value="UniProtKB"/>
</dbReference>
<dbReference type="GO" id="GO:0003677">
    <property type="term" value="F:DNA binding"/>
    <property type="evidence" value="ECO:0000314"/>
    <property type="project" value="UniProtKB"/>
</dbReference>
<dbReference type="GO" id="GO:0008047">
    <property type="term" value="F:enzyme activator activity"/>
    <property type="evidence" value="ECO:0000314"/>
    <property type="project" value="BHF-UCL"/>
</dbReference>
<dbReference type="GO" id="GO:0019899">
    <property type="term" value="F:enzyme binding"/>
    <property type="evidence" value="ECO:0000353"/>
    <property type="project" value="UniProtKB"/>
</dbReference>
<dbReference type="GO" id="GO:0042826">
    <property type="term" value="F:histone deacetylase binding"/>
    <property type="evidence" value="ECO:0007669"/>
    <property type="project" value="Ensembl"/>
</dbReference>
<dbReference type="GO" id="GO:0042802">
    <property type="term" value="F:identical protein binding"/>
    <property type="evidence" value="ECO:0000353"/>
    <property type="project" value="IntAct"/>
</dbReference>
<dbReference type="GO" id="GO:0051287">
    <property type="term" value="F:NAD binding"/>
    <property type="evidence" value="ECO:0007669"/>
    <property type="project" value="Ensembl"/>
</dbReference>
<dbReference type="GO" id="GO:0140294">
    <property type="term" value="F:NAD DNA ADP-ribosyltransferase activity"/>
    <property type="evidence" value="ECO:0000314"/>
    <property type="project" value="UniProtKB"/>
</dbReference>
<dbReference type="GO" id="GO:0003950">
    <property type="term" value="F:NAD+ poly-ADP-ribosyltransferase activity"/>
    <property type="evidence" value="ECO:0000314"/>
    <property type="project" value="UniProtKB"/>
</dbReference>
<dbReference type="GO" id="GO:0140822">
    <property type="term" value="F:NAD+-histone H2BE35 glutamate ADP-ribosyltransferase activity"/>
    <property type="evidence" value="ECO:0000250"/>
    <property type="project" value="UniProt"/>
</dbReference>
<dbReference type="GO" id="GO:0140816">
    <property type="term" value="F:NAD+-histone H2BS6 serine ADP-ribosyltransferase activity"/>
    <property type="evidence" value="ECO:0000314"/>
    <property type="project" value="UniProt"/>
</dbReference>
<dbReference type="GO" id="GO:0140817">
    <property type="term" value="F:NAD+-histone H3S10 serine ADP-ribosyltransferase activity"/>
    <property type="evidence" value="ECO:0000314"/>
    <property type="project" value="UniProt"/>
</dbReference>
<dbReference type="GO" id="GO:1990404">
    <property type="term" value="F:NAD+-protein mono-ADP-ribosyltransferase activity"/>
    <property type="evidence" value="ECO:0000314"/>
    <property type="project" value="UniProtKB"/>
</dbReference>
<dbReference type="GO" id="GO:0140806">
    <property type="term" value="F:NAD+-protein-aspartate ADP-ribosyltransferase activity"/>
    <property type="evidence" value="ECO:0000314"/>
    <property type="project" value="UniProtKB"/>
</dbReference>
<dbReference type="GO" id="GO:0140807">
    <property type="term" value="F:NAD+-protein-glutamate ADP-ribosyltransferase activity"/>
    <property type="evidence" value="ECO:0000314"/>
    <property type="project" value="UniProtKB"/>
</dbReference>
<dbReference type="GO" id="GO:0140815">
    <property type="term" value="F:NAD+-protein-histidine ADP-ribosyltransferase activity"/>
    <property type="evidence" value="ECO:0000314"/>
    <property type="project" value="UniProtKB"/>
</dbReference>
<dbReference type="GO" id="GO:0140805">
    <property type="term" value="F:NAD+-protein-serine ADP-ribosyltransferase activity"/>
    <property type="evidence" value="ECO:0000314"/>
    <property type="project" value="UniProtKB"/>
</dbReference>
<dbReference type="GO" id="GO:0140808">
    <property type="term" value="F:NAD+-protein-tyrosine ADP-ribosyltransferase activity"/>
    <property type="evidence" value="ECO:0000314"/>
    <property type="project" value="UniProtKB"/>
</dbReference>
<dbReference type="GO" id="GO:0030331">
    <property type="term" value="F:nuclear estrogen receptor binding"/>
    <property type="evidence" value="ECO:0007669"/>
    <property type="project" value="Ensembl"/>
</dbReference>
<dbReference type="GO" id="GO:0031491">
    <property type="term" value="F:nucleosome binding"/>
    <property type="evidence" value="ECO:0000314"/>
    <property type="project" value="UniProtKB"/>
</dbReference>
<dbReference type="GO" id="GO:0016779">
    <property type="term" value="F:nucleotidyltransferase activity"/>
    <property type="evidence" value="ECO:0007669"/>
    <property type="project" value="UniProtKB-KW"/>
</dbReference>
<dbReference type="GO" id="GO:0042803">
    <property type="term" value="F:protein homodimerization activity"/>
    <property type="evidence" value="ECO:0000314"/>
    <property type="project" value="UniProtKB"/>
</dbReference>
<dbReference type="GO" id="GO:0019901">
    <property type="term" value="F:protein kinase binding"/>
    <property type="evidence" value="ECO:0000353"/>
    <property type="project" value="UniProtKB"/>
</dbReference>
<dbReference type="GO" id="GO:0070412">
    <property type="term" value="F:R-SMAD binding"/>
    <property type="evidence" value="ECO:0007669"/>
    <property type="project" value="Ensembl"/>
</dbReference>
<dbReference type="GO" id="GO:0003723">
    <property type="term" value="F:RNA binding"/>
    <property type="evidence" value="ECO:0007005"/>
    <property type="project" value="UniProtKB"/>
</dbReference>
<dbReference type="GO" id="GO:0061629">
    <property type="term" value="F:RNA polymerase II-specific DNA-binding transcription factor binding"/>
    <property type="evidence" value="ECO:0000353"/>
    <property type="project" value="BHF-UCL"/>
</dbReference>
<dbReference type="GO" id="GO:0140537">
    <property type="term" value="F:transcription regulator activator activity"/>
    <property type="evidence" value="ECO:0007669"/>
    <property type="project" value="Ensembl"/>
</dbReference>
<dbReference type="GO" id="GO:0031625">
    <property type="term" value="F:ubiquitin protein ligase binding"/>
    <property type="evidence" value="ECO:0007669"/>
    <property type="project" value="Ensembl"/>
</dbReference>
<dbReference type="GO" id="GO:0008270">
    <property type="term" value="F:zinc ion binding"/>
    <property type="evidence" value="ECO:0000314"/>
    <property type="project" value="UniProtKB"/>
</dbReference>
<dbReference type="GO" id="GO:0006915">
    <property type="term" value="P:apoptotic process"/>
    <property type="evidence" value="ECO:0000314"/>
    <property type="project" value="UniProtKB"/>
</dbReference>
<dbReference type="GO" id="GO:1990966">
    <property type="term" value="P:ATP generation from poly-ADP-D-ribose"/>
    <property type="evidence" value="ECO:0000314"/>
    <property type="project" value="UniProtKB"/>
</dbReference>
<dbReference type="GO" id="GO:0016051">
    <property type="term" value="P:carbohydrate biosynthetic process"/>
    <property type="evidence" value="ECO:0007669"/>
    <property type="project" value="Ensembl"/>
</dbReference>
<dbReference type="GO" id="GO:1904646">
    <property type="term" value="P:cellular response to amyloid-beta"/>
    <property type="evidence" value="ECO:0007669"/>
    <property type="project" value="Ensembl"/>
</dbReference>
<dbReference type="GO" id="GO:0032869">
    <property type="term" value="P:cellular response to insulin stimulus"/>
    <property type="evidence" value="ECO:0000314"/>
    <property type="project" value="BHF-UCL"/>
</dbReference>
<dbReference type="GO" id="GO:1990090">
    <property type="term" value="P:cellular response to nerve growth factor stimulus"/>
    <property type="evidence" value="ECO:0007669"/>
    <property type="project" value="Ensembl"/>
</dbReference>
<dbReference type="GO" id="GO:0034599">
    <property type="term" value="P:cellular response to oxidative stress"/>
    <property type="evidence" value="ECO:0000315"/>
    <property type="project" value="MGI"/>
</dbReference>
<dbReference type="GO" id="GO:0034644">
    <property type="term" value="P:cellular response to UV"/>
    <property type="evidence" value="ECO:0000315"/>
    <property type="project" value="BHF-UCL"/>
</dbReference>
<dbReference type="GO" id="GO:0071294">
    <property type="term" value="P:cellular response to zinc ion"/>
    <property type="evidence" value="ECO:0007669"/>
    <property type="project" value="Ensembl"/>
</dbReference>
<dbReference type="GO" id="GO:0046697">
    <property type="term" value="P:decidualization"/>
    <property type="evidence" value="ECO:0000250"/>
    <property type="project" value="UniProtKB"/>
</dbReference>
<dbReference type="GO" id="GO:0030592">
    <property type="term" value="P:DNA ADP-ribosylation"/>
    <property type="evidence" value="ECO:0000314"/>
    <property type="project" value="UniProtKB"/>
</dbReference>
<dbReference type="GO" id="GO:0006974">
    <property type="term" value="P:DNA damage response"/>
    <property type="evidence" value="ECO:0000314"/>
    <property type="project" value="UniProtKB"/>
</dbReference>
<dbReference type="GO" id="GO:0006281">
    <property type="term" value="P:DNA repair"/>
    <property type="evidence" value="ECO:0000314"/>
    <property type="project" value="UniProt"/>
</dbReference>
<dbReference type="GO" id="GO:0006302">
    <property type="term" value="P:double-strand break repair"/>
    <property type="evidence" value="ECO:0000314"/>
    <property type="project" value="UniProtKB"/>
</dbReference>
<dbReference type="GO" id="GO:0045087">
    <property type="term" value="P:innate immune response"/>
    <property type="evidence" value="ECO:0007669"/>
    <property type="project" value="UniProtKB-KW"/>
</dbReference>
<dbReference type="GO" id="GO:0030225">
    <property type="term" value="P:macrophage differentiation"/>
    <property type="evidence" value="ECO:0000304"/>
    <property type="project" value="UniProtKB"/>
</dbReference>
<dbReference type="GO" id="GO:0032042">
    <property type="term" value="P:mitochondrial DNA metabolic process"/>
    <property type="evidence" value="ECO:0000315"/>
    <property type="project" value="MGI"/>
</dbReference>
<dbReference type="GO" id="GO:0043504">
    <property type="term" value="P:mitochondrial DNA repair"/>
    <property type="evidence" value="ECO:0000315"/>
    <property type="project" value="MGI"/>
</dbReference>
<dbReference type="GO" id="GO:0007005">
    <property type="term" value="P:mitochondrion organization"/>
    <property type="evidence" value="ECO:0000315"/>
    <property type="project" value="MGI"/>
</dbReference>
<dbReference type="GO" id="GO:1904178">
    <property type="term" value="P:negative regulation of adipose tissue development"/>
    <property type="evidence" value="ECO:0000250"/>
    <property type="project" value="UniProt"/>
</dbReference>
<dbReference type="GO" id="GO:2001170">
    <property type="term" value="P:negative regulation of ATP biosynthetic process"/>
    <property type="evidence" value="ECO:0000315"/>
    <property type="project" value="ParkinsonsUK-UCL"/>
</dbReference>
<dbReference type="GO" id="GO:0160049">
    <property type="term" value="P:negative regulation of cGAS/STING signaling pathway"/>
    <property type="evidence" value="ECO:0000314"/>
    <property type="project" value="UniProt"/>
</dbReference>
<dbReference type="GO" id="GO:0045892">
    <property type="term" value="P:negative regulation of DNA-templated transcription"/>
    <property type="evidence" value="ECO:0000250"/>
    <property type="project" value="UniProt"/>
</dbReference>
<dbReference type="GO" id="GO:0045824">
    <property type="term" value="P:negative regulation of innate immune response"/>
    <property type="evidence" value="ECO:0000314"/>
    <property type="project" value="UniProtKB"/>
</dbReference>
<dbReference type="GO" id="GO:1904357">
    <property type="term" value="P:negative regulation of telomere maintenance via telomere lengthening"/>
    <property type="evidence" value="ECO:0000250"/>
    <property type="project" value="BHF-UCL"/>
</dbReference>
<dbReference type="GO" id="GO:0000122">
    <property type="term" value="P:negative regulation of transcription by RNA polymerase II"/>
    <property type="evidence" value="ECO:0000314"/>
    <property type="project" value="UniProtKB"/>
</dbReference>
<dbReference type="GO" id="GO:0034244">
    <property type="term" value="P:negative regulation of transcription elongation by RNA polymerase II"/>
    <property type="evidence" value="ECO:0000314"/>
    <property type="project" value="UniProt"/>
</dbReference>
<dbReference type="GO" id="GO:0043123">
    <property type="term" value="P:positive regulation of canonical NF-kappaB signal transduction"/>
    <property type="evidence" value="ECO:0000314"/>
    <property type="project" value="UniProt"/>
</dbReference>
<dbReference type="GO" id="GO:0010613">
    <property type="term" value="P:positive regulation of cardiac muscle hypertrophy"/>
    <property type="evidence" value="ECO:0000250"/>
    <property type="project" value="UniProtKB"/>
</dbReference>
<dbReference type="GO" id="GO:0032786">
    <property type="term" value="P:positive regulation of DNA-templated transcription, elongation"/>
    <property type="evidence" value="ECO:0000314"/>
    <property type="project" value="UniProt"/>
</dbReference>
<dbReference type="GO" id="GO:1905168">
    <property type="term" value="P:positive regulation of double-strand break repair via homologous recombination"/>
    <property type="evidence" value="ECO:0000314"/>
    <property type="project" value="UniProtKB"/>
</dbReference>
<dbReference type="GO" id="GO:0033148">
    <property type="term" value="P:positive regulation of intracellular estrogen receptor signaling pathway"/>
    <property type="evidence" value="ECO:0007669"/>
    <property type="project" value="Ensembl"/>
</dbReference>
<dbReference type="GO" id="GO:0051901">
    <property type="term" value="P:positive regulation of mitochondrial depolarization"/>
    <property type="evidence" value="ECO:0007669"/>
    <property type="project" value="Ensembl"/>
</dbReference>
<dbReference type="GO" id="GO:1904762">
    <property type="term" value="P:positive regulation of myofibroblast differentiation"/>
    <property type="evidence" value="ECO:0007669"/>
    <property type="project" value="Ensembl"/>
</dbReference>
<dbReference type="GO" id="GO:0060545">
    <property type="term" value="P:positive regulation of necroptotic process"/>
    <property type="evidence" value="ECO:0000250"/>
    <property type="project" value="UniProtKB"/>
</dbReference>
<dbReference type="GO" id="GO:1900182">
    <property type="term" value="P:positive regulation of protein localization to nucleus"/>
    <property type="evidence" value="ECO:0007669"/>
    <property type="project" value="Ensembl"/>
</dbReference>
<dbReference type="GO" id="GO:1903518">
    <property type="term" value="P:positive regulation of single strand break repair"/>
    <property type="evidence" value="ECO:0000318"/>
    <property type="project" value="GO_Central"/>
</dbReference>
<dbReference type="GO" id="GO:0060391">
    <property type="term" value="P:positive regulation of SMAD protein signal transduction"/>
    <property type="evidence" value="ECO:0007669"/>
    <property type="project" value="Ensembl"/>
</dbReference>
<dbReference type="GO" id="GO:0045944">
    <property type="term" value="P:positive regulation of transcription by RNA polymerase II"/>
    <property type="evidence" value="ECO:0000314"/>
    <property type="project" value="NTNU_SB"/>
</dbReference>
<dbReference type="GO" id="GO:0070213">
    <property type="term" value="P:protein auto-ADP-ribosylation"/>
    <property type="evidence" value="ECO:0000314"/>
    <property type="project" value="UniProtKB"/>
</dbReference>
<dbReference type="GO" id="GO:0016540">
    <property type="term" value="P:protein autoprocessing"/>
    <property type="evidence" value="ECO:0007669"/>
    <property type="project" value="Ensembl"/>
</dbReference>
<dbReference type="GO" id="GO:0071168">
    <property type="term" value="P:protein localization to chromatin"/>
    <property type="evidence" value="ECO:0000314"/>
    <property type="project" value="UniProt"/>
</dbReference>
<dbReference type="GO" id="GO:0036211">
    <property type="term" value="P:protein modification process"/>
    <property type="evidence" value="ECO:0000315"/>
    <property type="project" value="MGI"/>
</dbReference>
<dbReference type="GO" id="GO:0070212">
    <property type="term" value="P:protein poly-ADP-ribosylation"/>
    <property type="evidence" value="ECO:0000314"/>
    <property type="project" value="UniProtKB"/>
</dbReference>
<dbReference type="GO" id="GO:1905051">
    <property type="term" value="P:regulation of base-excision repair"/>
    <property type="evidence" value="ECO:0000314"/>
    <property type="project" value="UniProt"/>
</dbReference>
<dbReference type="GO" id="GO:0045188">
    <property type="term" value="P:regulation of circadian sleep/wake cycle, non-REM sleep"/>
    <property type="evidence" value="ECO:0000250"/>
    <property type="project" value="UniProtKB"/>
</dbReference>
<dbReference type="GO" id="GO:1903376">
    <property type="term" value="P:regulation of oxidative stress-induced neuron intrinsic apoptotic signaling pathway"/>
    <property type="evidence" value="ECO:0007669"/>
    <property type="project" value="Ensembl"/>
</dbReference>
<dbReference type="GO" id="GO:0032880">
    <property type="term" value="P:regulation of protein localization"/>
    <property type="evidence" value="ECO:0000315"/>
    <property type="project" value="MGI"/>
</dbReference>
<dbReference type="GO" id="GO:0071932">
    <property type="term" value="P:replication fork reversal"/>
    <property type="evidence" value="ECO:0000314"/>
    <property type="project" value="UniProtKB"/>
</dbReference>
<dbReference type="GO" id="GO:1904044">
    <property type="term" value="P:response to aldosterone"/>
    <property type="evidence" value="ECO:0007669"/>
    <property type="project" value="Ensembl"/>
</dbReference>
<dbReference type="GO" id="GO:0010332">
    <property type="term" value="P:response to gamma radiation"/>
    <property type="evidence" value="ECO:0007669"/>
    <property type="project" value="Ensembl"/>
</dbReference>
<dbReference type="GO" id="GO:0023019">
    <property type="term" value="P:signal transduction involved in regulation of gene expression"/>
    <property type="evidence" value="ECO:0007669"/>
    <property type="project" value="Ensembl"/>
</dbReference>
<dbReference type="GO" id="GO:0000723">
    <property type="term" value="P:telomere maintenance"/>
    <property type="evidence" value="ECO:0000304"/>
    <property type="project" value="BHF-UCL"/>
</dbReference>
<dbReference type="GO" id="GO:0006366">
    <property type="term" value="P:transcription by RNA polymerase II"/>
    <property type="evidence" value="ECO:0000304"/>
    <property type="project" value="ProtInc"/>
</dbReference>
<dbReference type="GO" id="GO:0007179">
    <property type="term" value="P:transforming growth factor beta receptor signaling pathway"/>
    <property type="evidence" value="ECO:0007669"/>
    <property type="project" value="Ensembl"/>
</dbReference>
<dbReference type="CDD" id="cd17747">
    <property type="entry name" value="BRCT_PARP1"/>
    <property type="match status" value="1"/>
</dbReference>
<dbReference type="CDD" id="cd01437">
    <property type="entry name" value="parp_like"/>
    <property type="match status" value="1"/>
</dbReference>
<dbReference type="CDD" id="cd08001">
    <property type="entry name" value="WGR_PARP1_like"/>
    <property type="match status" value="1"/>
</dbReference>
<dbReference type="FunFam" id="1.10.20.130:FF:000001">
    <property type="entry name" value="Poly [ADP-ribose] polymerase"/>
    <property type="match status" value="1"/>
</dbReference>
<dbReference type="FunFam" id="1.20.142.10:FF:000001">
    <property type="entry name" value="Poly [ADP-ribose] polymerase"/>
    <property type="match status" value="1"/>
</dbReference>
<dbReference type="FunFam" id="2.20.25.630:FF:000001">
    <property type="entry name" value="Poly [ADP-ribose] polymerase"/>
    <property type="match status" value="1"/>
</dbReference>
<dbReference type="FunFam" id="3.30.1740.10:FF:000002">
    <property type="entry name" value="Poly [ADP-ribose] polymerase"/>
    <property type="match status" value="1"/>
</dbReference>
<dbReference type="FunFam" id="3.30.1740.10:FF:000003">
    <property type="entry name" value="Poly [ADP-ribose] polymerase"/>
    <property type="match status" value="1"/>
</dbReference>
<dbReference type="FunFam" id="3.40.50.10190:FF:000030">
    <property type="entry name" value="Poly [ADP-ribose] polymerase"/>
    <property type="match status" value="1"/>
</dbReference>
<dbReference type="FunFam" id="3.90.228.10:FF:000002">
    <property type="entry name" value="Poly [ADP-ribose] polymerase"/>
    <property type="match status" value="1"/>
</dbReference>
<dbReference type="Gene3D" id="1.10.20.130">
    <property type="match status" value="1"/>
</dbReference>
<dbReference type="Gene3D" id="2.20.25.630">
    <property type="match status" value="1"/>
</dbReference>
<dbReference type="Gene3D" id="3.90.228.10">
    <property type="match status" value="1"/>
</dbReference>
<dbReference type="Gene3D" id="3.40.50.10190">
    <property type="entry name" value="BRCT domain"/>
    <property type="match status" value="1"/>
</dbReference>
<dbReference type="Gene3D" id="1.20.142.10">
    <property type="entry name" value="Poly(ADP-ribose) polymerase, regulatory domain"/>
    <property type="match status" value="1"/>
</dbReference>
<dbReference type="Gene3D" id="3.30.1740.10">
    <property type="entry name" value="Zinc finger, PARP-type"/>
    <property type="match status" value="2"/>
</dbReference>
<dbReference type="InterPro" id="IPR050800">
    <property type="entry name" value="ARTD/PARP"/>
</dbReference>
<dbReference type="InterPro" id="IPR001357">
    <property type="entry name" value="BRCT_dom"/>
</dbReference>
<dbReference type="InterPro" id="IPR036420">
    <property type="entry name" value="BRCT_dom_sf"/>
</dbReference>
<dbReference type="InterPro" id="IPR038650">
    <property type="entry name" value="PADR1_C_dom_sf"/>
</dbReference>
<dbReference type="InterPro" id="IPR008288">
    <property type="entry name" value="PARP"/>
</dbReference>
<dbReference type="InterPro" id="IPR049296">
    <property type="entry name" value="PARP1-like_PADR1_N"/>
</dbReference>
<dbReference type="InterPro" id="IPR012982">
    <property type="entry name" value="PARP1-like_PADR1_Zn_ribbon"/>
</dbReference>
<dbReference type="InterPro" id="IPR012317">
    <property type="entry name" value="Poly(ADP-ribose)pol_cat_dom"/>
</dbReference>
<dbReference type="InterPro" id="IPR004102">
    <property type="entry name" value="Poly(ADP-ribose)pol_reg_dom"/>
</dbReference>
<dbReference type="InterPro" id="IPR036616">
    <property type="entry name" value="Poly(ADP-ribose)pol_reg_dom_sf"/>
</dbReference>
<dbReference type="InterPro" id="IPR036930">
    <property type="entry name" value="WGR_dom_sf"/>
</dbReference>
<dbReference type="InterPro" id="IPR008893">
    <property type="entry name" value="WGR_domain"/>
</dbReference>
<dbReference type="InterPro" id="IPR001510">
    <property type="entry name" value="Znf_PARP"/>
</dbReference>
<dbReference type="InterPro" id="IPR036957">
    <property type="entry name" value="Znf_PARP_sf"/>
</dbReference>
<dbReference type="PANTHER" id="PTHR10459">
    <property type="entry name" value="DNA LIGASE"/>
    <property type="match status" value="1"/>
</dbReference>
<dbReference type="PANTHER" id="PTHR10459:SF112">
    <property type="entry name" value="POLY [ADP-RIBOSE] POLYMERASE 1"/>
    <property type="match status" value="1"/>
</dbReference>
<dbReference type="Pfam" id="PF00533">
    <property type="entry name" value="BRCT"/>
    <property type="match status" value="1"/>
</dbReference>
<dbReference type="Pfam" id="PF21728">
    <property type="entry name" value="PADR1_N"/>
    <property type="match status" value="1"/>
</dbReference>
<dbReference type="Pfam" id="PF00644">
    <property type="entry name" value="PARP"/>
    <property type="match status" value="1"/>
</dbReference>
<dbReference type="Pfam" id="PF02877">
    <property type="entry name" value="PARP_reg"/>
    <property type="match status" value="1"/>
</dbReference>
<dbReference type="Pfam" id="PF05406">
    <property type="entry name" value="WGR"/>
    <property type="match status" value="1"/>
</dbReference>
<dbReference type="Pfam" id="PF00645">
    <property type="entry name" value="zf-PARP"/>
    <property type="match status" value="2"/>
</dbReference>
<dbReference type="Pfam" id="PF08063">
    <property type="entry name" value="Zn_ribbon_PADR1"/>
    <property type="match status" value="1"/>
</dbReference>
<dbReference type="PIRSF" id="PIRSF000489">
    <property type="entry name" value="NAD_ADPRT"/>
    <property type="match status" value="1"/>
</dbReference>
<dbReference type="SMART" id="SM00292">
    <property type="entry name" value="BRCT"/>
    <property type="match status" value="1"/>
</dbReference>
<dbReference type="SMART" id="SM01335">
    <property type="entry name" value="PADR1"/>
    <property type="match status" value="1"/>
</dbReference>
<dbReference type="SMART" id="SM00773">
    <property type="entry name" value="WGR"/>
    <property type="match status" value="1"/>
</dbReference>
<dbReference type="SMART" id="SM01336">
    <property type="entry name" value="zf-PARP"/>
    <property type="match status" value="2"/>
</dbReference>
<dbReference type="SUPFAM" id="SSF56399">
    <property type="entry name" value="ADP-ribosylation"/>
    <property type="match status" value="1"/>
</dbReference>
<dbReference type="SUPFAM" id="SSF52113">
    <property type="entry name" value="BRCT domain"/>
    <property type="match status" value="1"/>
</dbReference>
<dbReference type="SUPFAM" id="SSF47587">
    <property type="entry name" value="Domain of poly(ADP-ribose) polymerase"/>
    <property type="match status" value="1"/>
</dbReference>
<dbReference type="SUPFAM" id="SSF57716">
    <property type="entry name" value="Glucocorticoid receptor-like (DNA-binding domain)"/>
    <property type="match status" value="2"/>
</dbReference>
<dbReference type="SUPFAM" id="SSF142921">
    <property type="entry name" value="WGR domain-like"/>
    <property type="match status" value="1"/>
</dbReference>
<dbReference type="PROSITE" id="PS50172">
    <property type="entry name" value="BRCT"/>
    <property type="match status" value="1"/>
</dbReference>
<dbReference type="PROSITE" id="PS52007">
    <property type="entry name" value="PADR1"/>
    <property type="match status" value="1"/>
</dbReference>
<dbReference type="PROSITE" id="PS51060">
    <property type="entry name" value="PARP_ALPHA_HD"/>
    <property type="match status" value="1"/>
</dbReference>
<dbReference type="PROSITE" id="PS51059">
    <property type="entry name" value="PARP_CATALYTIC"/>
    <property type="match status" value="1"/>
</dbReference>
<dbReference type="PROSITE" id="PS51977">
    <property type="entry name" value="WGR"/>
    <property type="match status" value="1"/>
</dbReference>
<dbReference type="PROSITE" id="PS00347">
    <property type="entry name" value="ZF_PARP_1"/>
    <property type="match status" value="2"/>
</dbReference>
<dbReference type="PROSITE" id="PS50064">
    <property type="entry name" value="ZF_PARP_2"/>
    <property type="match status" value="2"/>
</dbReference>
<evidence type="ECO:0000250" key="1">
    <source>
        <dbReference type="UniProtKB" id="P11103"/>
    </source>
</evidence>
<evidence type="ECO:0000250" key="2">
    <source>
        <dbReference type="UniProtKB" id="P27008"/>
    </source>
</evidence>
<evidence type="ECO:0000250" key="3">
    <source>
        <dbReference type="UniProtKB" id="Q9UGN5"/>
    </source>
</evidence>
<evidence type="ECO:0000255" key="4"/>
<evidence type="ECO:0000255" key="5">
    <source>
        <dbReference type="PROSITE-ProRule" id="PRU00033"/>
    </source>
</evidence>
<evidence type="ECO:0000255" key="6">
    <source>
        <dbReference type="PROSITE-ProRule" id="PRU00264"/>
    </source>
</evidence>
<evidence type="ECO:0000255" key="7">
    <source>
        <dbReference type="PROSITE-ProRule" id="PRU00397"/>
    </source>
</evidence>
<evidence type="ECO:0000255" key="8">
    <source>
        <dbReference type="PROSITE-ProRule" id="PRU00398"/>
    </source>
</evidence>
<evidence type="ECO:0000255" key="9">
    <source>
        <dbReference type="PROSITE-ProRule" id="PRU01321"/>
    </source>
</evidence>
<evidence type="ECO:0000255" key="10">
    <source>
        <dbReference type="PROSITE-ProRule" id="PRU01351"/>
    </source>
</evidence>
<evidence type="ECO:0000256" key="11">
    <source>
        <dbReference type="SAM" id="MobiDB-lite"/>
    </source>
</evidence>
<evidence type="ECO:0000269" key="12">
    <source>
    </source>
</evidence>
<evidence type="ECO:0000269" key="13">
    <source>
    </source>
</evidence>
<evidence type="ECO:0000269" key="14">
    <source>
    </source>
</evidence>
<evidence type="ECO:0000269" key="15">
    <source>
    </source>
</evidence>
<evidence type="ECO:0000269" key="16">
    <source>
    </source>
</evidence>
<evidence type="ECO:0000269" key="17">
    <source>
    </source>
</evidence>
<evidence type="ECO:0000269" key="18">
    <source>
    </source>
</evidence>
<evidence type="ECO:0000269" key="19">
    <source>
    </source>
</evidence>
<evidence type="ECO:0000269" key="20">
    <source>
    </source>
</evidence>
<evidence type="ECO:0000269" key="21">
    <source>
    </source>
</evidence>
<evidence type="ECO:0000269" key="22">
    <source>
    </source>
</evidence>
<evidence type="ECO:0000269" key="23">
    <source>
    </source>
</evidence>
<evidence type="ECO:0000269" key="24">
    <source>
    </source>
</evidence>
<evidence type="ECO:0000269" key="25">
    <source>
    </source>
</evidence>
<evidence type="ECO:0000269" key="26">
    <source>
    </source>
</evidence>
<evidence type="ECO:0000269" key="27">
    <source>
    </source>
</evidence>
<evidence type="ECO:0000269" key="28">
    <source>
    </source>
</evidence>
<evidence type="ECO:0000269" key="29">
    <source>
    </source>
</evidence>
<evidence type="ECO:0000269" key="30">
    <source>
    </source>
</evidence>
<evidence type="ECO:0000269" key="31">
    <source>
    </source>
</evidence>
<evidence type="ECO:0000269" key="32">
    <source>
    </source>
</evidence>
<evidence type="ECO:0000269" key="33">
    <source>
    </source>
</evidence>
<evidence type="ECO:0000269" key="34">
    <source>
    </source>
</evidence>
<evidence type="ECO:0000269" key="35">
    <source>
    </source>
</evidence>
<evidence type="ECO:0000269" key="36">
    <source>
    </source>
</evidence>
<evidence type="ECO:0000269" key="37">
    <source>
    </source>
</evidence>
<evidence type="ECO:0000269" key="38">
    <source>
    </source>
</evidence>
<evidence type="ECO:0000269" key="39">
    <source>
    </source>
</evidence>
<evidence type="ECO:0000269" key="40">
    <source>
    </source>
</evidence>
<evidence type="ECO:0000269" key="41">
    <source>
    </source>
</evidence>
<evidence type="ECO:0000269" key="42">
    <source>
    </source>
</evidence>
<evidence type="ECO:0000269" key="43">
    <source>
    </source>
</evidence>
<evidence type="ECO:0000269" key="44">
    <source>
    </source>
</evidence>
<evidence type="ECO:0000269" key="45">
    <source>
    </source>
</evidence>
<evidence type="ECO:0000269" key="46">
    <source>
    </source>
</evidence>
<evidence type="ECO:0000269" key="47">
    <source>
    </source>
</evidence>
<evidence type="ECO:0000269" key="48">
    <source>
    </source>
</evidence>
<evidence type="ECO:0000269" key="49">
    <source>
    </source>
</evidence>
<evidence type="ECO:0000269" key="50">
    <source>
    </source>
</evidence>
<evidence type="ECO:0000269" key="51">
    <source>
    </source>
</evidence>
<evidence type="ECO:0000269" key="52">
    <source>
    </source>
</evidence>
<evidence type="ECO:0000269" key="53">
    <source>
    </source>
</evidence>
<evidence type="ECO:0000269" key="54">
    <source>
    </source>
</evidence>
<evidence type="ECO:0000269" key="55">
    <source>
    </source>
</evidence>
<evidence type="ECO:0000269" key="56">
    <source>
    </source>
</evidence>
<evidence type="ECO:0000269" key="57">
    <source>
    </source>
</evidence>
<evidence type="ECO:0000269" key="58">
    <source>
    </source>
</evidence>
<evidence type="ECO:0000269" key="59">
    <source>
    </source>
</evidence>
<evidence type="ECO:0000269" key="60">
    <source>
    </source>
</evidence>
<evidence type="ECO:0000269" key="61">
    <source>
    </source>
</evidence>
<evidence type="ECO:0000269" key="62">
    <source>
    </source>
</evidence>
<evidence type="ECO:0000269" key="63">
    <source>
    </source>
</evidence>
<evidence type="ECO:0000269" key="64">
    <source>
    </source>
</evidence>
<evidence type="ECO:0000269" key="65">
    <source>
    </source>
</evidence>
<evidence type="ECO:0000269" key="66">
    <source>
    </source>
</evidence>
<evidence type="ECO:0000269" key="67">
    <source>
    </source>
</evidence>
<evidence type="ECO:0000269" key="68">
    <source>
    </source>
</evidence>
<evidence type="ECO:0000269" key="69">
    <source>
    </source>
</evidence>
<evidence type="ECO:0000269" key="70">
    <source>
    </source>
</evidence>
<evidence type="ECO:0000269" key="71">
    <source>
    </source>
</evidence>
<evidence type="ECO:0000269" key="72">
    <source>
    </source>
</evidence>
<evidence type="ECO:0000269" key="73">
    <source>
    </source>
</evidence>
<evidence type="ECO:0000269" key="74">
    <source>
    </source>
</evidence>
<evidence type="ECO:0000269" key="75">
    <source>
    </source>
</evidence>
<evidence type="ECO:0000269" key="76">
    <source>
    </source>
</evidence>
<evidence type="ECO:0000269" key="77">
    <source>
    </source>
</evidence>
<evidence type="ECO:0000269" key="78">
    <source>
    </source>
</evidence>
<evidence type="ECO:0000269" key="79">
    <source>
    </source>
</evidence>
<evidence type="ECO:0000269" key="80">
    <source>
    </source>
</evidence>
<evidence type="ECO:0000269" key="81">
    <source>
    </source>
</evidence>
<evidence type="ECO:0000269" key="82">
    <source>
    </source>
</evidence>
<evidence type="ECO:0000269" key="83">
    <source>
    </source>
</evidence>
<evidence type="ECO:0000269" key="84">
    <source>
    </source>
</evidence>
<evidence type="ECO:0000269" key="85">
    <source>
    </source>
</evidence>
<evidence type="ECO:0000269" key="86">
    <source>
    </source>
</evidence>
<evidence type="ECO:0000269" key="87">
    <source>
    </source>
</evidence>
<evidence type="ECO:0000269" key="88">
    <source>
    </source>
</evidence>
<evidence type="ECO:0000269" key="89">
    <source>
    </source>
</evidence>
<evidence type="ECO:0000269" key="90">
    <source>
    </source>
</evidence>
<evidence type="ECO:0000269" key="91">
    <source>
    </source>
</evidence>
<evidence type="ECO:0000269" key="92">
    <source>
    </source>
</evidence>
<evidence type="ECO:0000269" key="93">
    <source>
    </source>
</evidence>
<evidence type="ECO:0000269" key="94">
    <source>
    </source>
</evidence>
<evidence type="ECO:0000269" key="95">
    <source>
    </source>
</evidence>
<evidence type="ECO:0000269" key="96">
    <source>
    </source>
</evidence>
<evidence type="ECO:0000269" key="97">
    <source>
    </source>
</evidence>
<evidence type="ECO:0000269" key="98">
    <source>
    </source>
</evidence>
<evidence type="ECO:0000269" key="99">
    <source>
    </source>
</evidence>
<evidence type="ECO:0000269" key="100">
    <source>
    </source>
</evidence>
<evidence type="ECO:0000269" key="101">
    <source>
    </source>
</evidence>
<evidence type="ECO:0000269" key="102">
    <source>
    </source>
</evidence>
<evidence type="ECO:0000269" key="103">
    <source>
    </source>
</evidence>
<evidence type="ECO:0000269" key="104">
    <source>
    </source>
</evidence>
<evidence type="ECO:0000269" key="105">
    <source>
    </source>
</evidence>
<evidence type="ECO:0000269" key="106">
    <source ref="12"/>
</evidence>
<evidence type="ECO:0000269" key="107">
    <source ref="5"/>
</evidence>
<evidence type="ECO:0000303" key="108">
    <source>
    </source>
</evidence>
<evidence type="ECO:0000303" key="109">
    <source>
    </source>
</evidence>
<evidence type="ECO:0000303" key="110">
    <source>
    </source>
</evidence>
<evidence type="ECO:0000303" key="111">
    <source>
    </source>
</evidence>
<evidence type="ECO:0000303" key="112">
    <source>
    </source>
</evidence>
<evidence type="ECO:0000303" key="113">
    <source>
    </source>
</evidence>
<evidence type="ECO:0000303" key="114">
    <source>
    </source>
</evidence>
<evidence type="ECO:0000303" key="115">
    <source>
    </source>
</evidence>
<evidence type="ECO:0000303" key="116">
    <source>
    </source>
</evidence>
<evidence type="ECO:0000303" key="117">
    <source ref="11"/>
</evidence>
<evidence type="ECO:0000305" key="118"/>
<evidence type="ECO:0000305" key="119">
    <source>
    </source>
</evidence>
<evidence type="ECO:0000305" key="120">
    <source>
    </source>
</evidence>
<evidence type="ECO:0000305" key="121">
    <source>
    </source>
</evidence>
<evidence type="ECO:0000305" key="122">
    <source>
    </source>
</evidence>
<evidence type="ECO:0000305" key="123">
    <source>
    </source>
</evidence>
<evidence type="ECO:0000305" key="124">
    <source>
    </source>
</evidence>
<evidence type="ECO:0000312" key="125">
    <source>
        <dbReference type="HGNC" id="HGNC:270"/>
    </source>
</evidence>
<evidence type="ECO:0007744" key="126">
    <source>
        <dbReference type="PDB" id="2N8A"/>
    </source>
</evidence>
<evidence type="ECO:0007744" key="127">
    <source>
        <dbReference type="PDB" id="2RIQ"/>
    </source>
</evidence>
<evidence type="ECO:0007744" key="128">
    <source>
        <dbReference type="PDB" id="3OD8"/>
    </source>
</evidence>
<evidence type="ECO:0007744" key="129">
    <source>
        <dbReference type="PDB" id="3ODA"/>
    </source>
</evidence>
<evidence type="ECO:0007744" key="130">
    <source>
        <dbReference type="PDB" id="3ODC"/>
    </source>
</evidence>
<evidence type="ECO:0007744" key="131">
    <source>
        <dbReference type="PDB" id="3ODE"/>
    </source>
</evidence>
<evidence type="ECO:0007744" key="132">
    <source>
        <dbReference type="PDB" id="4AV1"/>
    </source>
</evidence>
<evidence type="ECO:0007744" key="133">
    <source>
        <dbReference type="PDB" id="4DQY"/>
    </source>
</evidence>
<evidence type="ECO:0007744" key="134">
    <source>
        <dbReference type="PDB" id="4OPX"/>
    </source>
</evidence>
<evidence type="ECO:0007744" key="135">
    <source>
        <dbReference type="PDB" id="4OQA"/>
    </source>
</evidence>
<evidence type="ECO:0007744" key="136">
    <source>
        <dbReference type="PDB" id="4OQB"/>
    </source>
</evidence>
<evidence type="ECO:0007744" key="137">
    <source>
        <dbReference type="PDB" id="4XHU"/>
    </source>
</evidence>
<evidence type="ECO:0007744" key="138">
    <source>
        <dbReference type="PDB" id="5DS3"/>
    </source>
</evidence>
<evidence type="ECO:0007744" key="139">
    <source>
        <dbReference type="PDB" id="6BHV"/>
    </source>
</evidence>
<evidence type="ECO:0007744" key="140">
    <source>
        <dbReference type="PDB" id="6M3I"/>
    </source>
</evidence>
<evidence type="ECO:0007744" key="141">
    <source>
        <dbReference type="PDB" id="6NTU"/>
    </source>
</evidence>
<evidence type="ECO:0007744" key="142">
    <source>
        <dbReference type="PDB" id="6VKK"/>
    </source>
</evidence>
<evidence type="ECO:0007744" key="143">
    <source>
        <dbReference type="PDB" id="6VKO"/>
    </source>
</evidence>
<evidence type="ECO:0007744" key="144">
    <source>
        <dbReference type="PDB" id="6VKQ"/>
    </source>
</evidence>
<evidence type="ECO:0007744" key="145">
    <source>
        <dbReference type="PDB" id="7KK2"/>
    </source>
</evidence>
<evidence type="ECO:0007744" key="146">
    <source>
        <dbReference type="PDB" id="7KK3"/>
    </source>
</evidence>
<evidence type="ECO:0007744" key="147">
    <source>
        <dbReference type="PDB" id="7KK4"/>
    </source>
</evidence>
<evidence type="ECO:0007744" key="148">
    <source>
        <dbReference type="PDB" id="7KK5"/>
    </source>
</evidence>
<evidence type="ECO:0007744" key="149">
    <source>
        <dbReference type="PDB" id="7KK6"/>
    </source>
</evidence>
<evidence type="ECO:0007744" key="150">
    <source>
        <dbReference type="PDB" id="7SCY"/>
    </source>
</evidence>
<evidence type="ECO:0007744" key="151">
    <source>
        <dbReference type="PDB" id="7SCZ"/>
    </source>
</evidence>
<evidence type="ECO:0007744" key="152">
    <source>
    </source>
</evidence>
<evidence type="ECO:0007744" key="153">
    <source>
    </source>
</evidence>
<evidence type="ECO:0007744" key="154">
    <source>
    </source>
</evidence>
<evidence type="ECO:0007744" key="155">
    <source>
    </source>
</evidence>
<evidence type="ECO:0007744" key="156">
    <source>
    </source>
</evidence>
<evidence type="ECO:0007744" key="157">
    <source>
    </source>
</evidence>
<evidence type="ECO:0007744" key="158">
    <source>
    </source>
</evidence>
<evidence type="ECO:0007744" key="159">
    <source>
    </source>
</evidence>
<evidence type="ECO:0007744" key="160">
    <source>
    </source>
</evidence>
<evidence type="ECO:0007744" key="161">
    <source>
    </source>
</evidence>
<evidence type="ECO:0007744" key="162">
    <source>
    </source>
</evidence>
<evidence type="ECO:0007744" key="163">
    <source>
    </source>
</evidence>
<evidence type="ECO:0007744" key="164">
    <source>
    </source>
</evidence>
<evidence type="ECO:0007744" key="165">
    <source>
    </source>
</evidence>
<evidence type="ECO:0007829" key="166">
    <source>
        <dbReference type="PDB" id="1UK0"/>
    </source>
</evidence>
<evidence type="ECO:0007829" key="167">
    <source>
        <dbReference type="PDB" id="1WOK"/>
    </source>
</evidence>
<evidence type="ECO:0007829" key="168">
    <source>
        <dbReference type="PDB" id="2JVN"/>
    </source>
</evidence>
<evidence type="ECO:0007829" key="169">
    <source>
        <dbReference type="PDB" id="2L30"/>
    </source>
</evidence>
<evidence type="ECO:0007829" key="170">
    <source>
        <dbReference type="PDB" id="2L31"/>
    </source>
</evidence>
<evidence type="ECO:0007829" key="171">
    <source>
        <dbReference type="PDB" id="2N8A"/>
    </source>
</evidence>
<evidence type="ECO:0007829" key="172">
    <source>
        <dbReference type="PDB" id="2RCW"/>
    </source>
</evidence>
<evidence type="ECO:0007829" key="173">
    <source>
        <dbReference type="PDB" id="2RIQ"/>
    </source>
</evidence>
<evidence type="ECO:0007829" key="174">
    <source>
        <dbReference type="PDB" id="3GN7"/>
    </source>
</evidence>
<evidence type="ECO:0007829" key="175">
    <source>
        <dbReference type="PDB" id="3OD8"/>
    </source>
</evidence>
<evidence type="ECO:0007829" key="176">
    <source>
        <dbReference type="PDB" id="3ODC"/>
    </source>
</evidence>
<evidence type="ECO:0007829" key="177">
    <source>
        <dbReference type="PDB" id="4R6E"/>
    </source>
</evidence>
<evidence type="ECO:0007829" key="178">
    <source>
        <dbReference type="PDB" id="6NRH"/>
    </source>
</evidence>
<evidence type="ECO:0007829" key="179">
    <source>
        <dbReference type="PDB" id="6VKK"/>
    </source>
</evidence>
<evidence type="ECO:0007829" key="180">
    <source>
        <dbReference type="PDB" id="7AAC"/>
    </source>
</evidence>
<evidence type="ECO:0007829" key="181">
    <source>
        <dbReference type="PDB" id="7KK5"/>
    </source>
</evidence>
<evidence type="ECO:0007829" key="182">
    <source>
        <dbReference type="PDB" id="7ONS"/>
    </source>
</evidence>
<evidence type="ECO:0007829" key="183">
    <source>
        <dbReference type="PDB" id="7S68"/>
    </source>
</evidence>
<evidence type="ECO:0007829" key="184">
    <source>
        <dbReference type="PDB" id="7S6H"/>
    </source>
</evidence>
<evidence type="ECO:0007829" key="185">
    <source>
        <dbReference type="PDB" id="7SCZ"/>
    </source>
</evidence>
<evidence type="ECO:0007829" key="186">
    <source>
        <dbReference type="PDB" id="8FZ1"/>
    </source>
</evidence>
<accession>P09874</accession>
<accession>B1ANJ4</accession>
<accession>Q8IUZ9</accession>
<keyword id="KW-0002">3D-structure</keyword>
<keyword id="KW-0007">Acetylation</keyword>
<keyword id="KW-0013">ADP-ribosylation</keyword>
<keyword id="KW-0021">Allosteric enzyme</keyword>
<keyword id="KW-0053">Apoptosis</keyword>
<keyword id="KW-0158">Chromosome</keyword>
<keyword id="KW-0963">Cytoplasm</keyword>
<keyword id="KW-0903">Direct protein sequencing</keyword>
<keyword id="KW-0227">DNA damage</keyword>
<keyword id="KW-0234">DNA repair</keyword>
<keyword id="KW-0238">DNA-binding</keyword>
<keyword id="KW-0328">Glycosyltransferase</keyword>
<keyword id="KW-0391">Immunity</keyword>
<keyword id="KW-0399">Innate immunity</keyword>
<keyword id="KW-1017">Isopeptide bond</keyword>
<keyword id="KW-0479">Metal-binding</keyword>
<keyword id="KW-0520">NAD</keyword>
<keyword id="KW-0548">Nucleotidyltransferase</keyword>
<keyword id="KW-0539">Nucleus</keyword>
<keyword id="KW-0597">Phosphoprotein</keyword>
<keyword id="KW-1267">Proteomics identification</keyword>
<keyword id="KW-1185">Reference proteome</keyword>
<keyword id="KW-0677">Repeat</keyword>
<keyword id="KW-0804">Transcription</keyword>
<keyword id="KW-0805">Transcription regulation</keyword>
<keyword id="KW-0808">Transferase</keyword>
<keyword id="KW-0832">Ubl conjugation</keyword>
<keyword id="KW-0862">Zinc</keyword>
<keyword id="KW-0863">Zinc-finger</keyword>
<organism>
    <name type="scientific">Homo sapiens</name>
    <name type="common">Human</name>
    <dbReference type="NCBI Taxonomy" id="9606"/>
    <lineage>
        <taxon>Eukaryota</taxon>
        <taxon>Metazoa</taxon>
        <taxon>Chordata</taxon>
        <taxon>Craniata</taxon>
        <taxon>Vertebrata</taxon>
        <taxon>Euteleostomi</taxon>
        <taxon>Mammalia</taxon>
        <taxon>Eutheria</taxon>
        <taxon>Euarchontoglires</taxon>
        <taxon>Primates</taxon>
        <taxon>Haplorrhini</taxon>
        <taxon>Catarrhini</taxon>
        <taxon>Hominidae</taxon>
        <taxon>Homo</taxon>
    </lineage>
</organism>
<protein>
    <recommendedName>
        <fullName evidence="111 113">Poly [ADP-ribose] polymerase 1</fullName>
        <shortName evidence="108">PARP-1</shortName>
        <ecNumber evidence="24 28 49 51 59 81 102">2.4.2.30</ecNumber>
    </recommendedName>
    <alternativeName>
        <fullName evidence="112">ADP-ribosyltransferase diphtheria toxin-like 1</fullName>
        <shortName evidence="112">ARTD1</shortName>
    </alternativeName>
    <alternativeName>
        <fullName evidence="118">DNA ADP-ribosyltransferase PARP1</fullName>
        <ecNumber evidence="57">2.4.2.-</ecNumber>
    </alternativeName>
    <alternativeName>
        <fullName evidence="117">NAD(+) ADP-ribosyltransferase 1</fullName>
        <shortName evidence="117">ADPRT 1</shortName>
    </alternativeName>
    <alternativeName>
        <fullName>Poly[ADP-ribose] synthase 1</fullName>
    </alternativeName>
    <alternativeName>
        <fullName evidence="118">Protein poly-ADP-ribosyltransferase PARP1</fullName>
        <ecNumber evidence="28 49 55 81 84 86 98">2.4.2.-</ecNumber>
    </alternativeName>
    <component>
        <recommendedName>
            <fullName evidence="118">Poly [ADP-ribose] polymerase 1, processed C-terminus</fullName>
        </recommendedName>
        <alternativeName>
            <fullName evidence="114">Poly [ADP-ribose] polymerase 1, 89-kDa form</fullName>
        </alternativeName>
    </component>
    <component>
        <recommendedName>
            <fullName evidence="118">Poly [ADP-ribose] polymerase 1, processed N-terminus</fullName>
            <shortName evidence="115">NT-PARP-1</shortName>
        </recommendedName>
        <alternativeName>
            <fullName evidence="114">Poly [ADP-ribose] polymerase 1, 24-kDa form</fullName>
        </alternativeName>
        <alternativeName>
            <fullName evidence="116">Poly [ADP-ribose] polymerase 1, 28-kDa form</fullName>
        </alternativeName>
    </component>
</protein>
<proteinExistence type="evidence at protein level"/>
<reference key="1">
    <citation type="journal article" date="1987" name="Biochem. Biophys. Res. Commun.">
        <title>Nucleotide sequence of a full-length cDNA for human fibroblast poly(ADP-ribose) polymerase.</title>
        <authorList>
            <person name="Uchida K."/>
            <person name="Morita T."/>
            <person name="Sato T."/>
            <person name="Ogura T."/>
            <person name="Yamashita R."/>
            <person name="Noguchi S."/>
            <person name="Suzuki H."/>
            <person name="Nyunoya H."/>
            <person name="Miwa M."/>
            <person name="Sugimura T."/>
        </authorList>
    </citation>
    <scope>NUCLEOTIDE SEQUENCE [MRNA]</scope>
    <source>
        <tissue>Fibroblast</tissue>
    </source>
</reference>
<reference key="2">
    <citation type="journal article" date="1987" name="J. Biol. Chem.">
        <title>Primary structure of human poly(ADP-ribose) synthetase as deduced from cDNA sequence.</title>
        <authorList>
            <person name="Kurosaki T."/>
            <person name="Ushiro H."/>
            <person name="Mitsuuchi Y."/>
            <person name="Suzuki S."/>
            <person name="Matsuda M."/>
            <person name="Matsuda Y."/>
            <person name="Katunuma N."/>
            <person name="Kangawa K."/>
            <person name="Matsuo H."/>
            <person name="Hirose T."/>
            <person name="Inayama S."/>
            <person name="Shizuta Y."/>
        </authorList>
    </citation>
    <scope>NUCLEOTIDE SEQUENCE [MRNA]</scope>
    <source>
        <tissue>Fibroblast</tissue>
    </source>
</reference>
<reference key="3">
    <citation type="journal article" date="1987" name="Proc. Natl. Acad. Sci. U.S.A.">
        <title>cDNA sequence, protein structure, and chromosomal location of the human gene for poly(ADP-ribose) polymerase.</title>
        <authorList>
            <person name="Cherney B.W."/>
            <person name="McBride O.W."/>
            <person name="Chen D."/>
            <person name="Alkhatib H."/>
            <person name="Bhatia K."/>
            <person name="Hensley P."/>
            <person name="Smulson M.E."/>
        </authorList>
    </citation>
    <scope>NUCLEOTIDE SEQUENCE [MRNA]</scope>
    <scope>VARIANT ARG-940</scope>
</reference>
<reference key="4">
    <citation type="journal article" date="1989" name="DNA">
        <title>Human nuclear NAD+ ADP-ribosyltransferase(polymerizing): organization of the gene.</title>
        <authorList>
            <person name="Auer B."/>
            <person name="Nagl U."/>
            <person name="Herzog H."/>
            <person name="Schneider R."/>
            <person name="Schweiger M."/>
        </authorList>
    </citation>
    <scope>NUCLEOTIDE SEQUENCE [GENOMIC DNA]</scope>
</reference>
<reference key="5">
    <citation type="submission" date="2002-06" db="EMBL/GenBank/DDBJ databases">
        <authorList>
            <consortium name="NIEHS SNPs program"/>
        </authorList>
    </citation>
    <scope>NUCLEOTIDE SEQUENCE [GENOMIC DNA]</scope>
    <scope>VARIANTS THR-188; ILE-334; TYR-383; ALA-762 AND ARG-940</scope>
</reference>
<reference key="6">
    <citation type="journal article" date="2006" name="Nature">
        <title>The DNA sequence and biological annotation of human chromosome 1.</title>
        <authorList>
            <person name="Gregory S.G."/>
            <person name="Barlow K.F."/>
            <person name="McLay K.E."/>
            <person name="Kaul R."/>
            <person name="Swarbreck D."/>
            <person name="Dunham A."/>
            <person name="Scott C.E."/>
            <person name="Howe K.L."/>
            <person name="Woodfine K."/>
            <person name="Spencer C.C.A."/>
            <person name="Jones M.C."/>
            <person name="Gillson C."/>
            <person name="Searle S."/>
            <person name="Zhou Y."/>
            <person name="Kokocinski F."/>
            <person name="McDonald L."/>
            <person name="Evans R."/>
            <person name="Phillips K."/>
            <person name="Atkinson A."/>
            <person name="Cooper R."/>
            <person name="Jones C."/>
            <person name="Hall R.E."/>
            <person name="Andrews T.D."/>
            <person name="Lloyd C."/>
            <person name="Ainscough R."/>
            <person name="Almeida J.P."/>
            <person name="Ambrose K.D."/>
            <person name="Anderson F."/>
            <person name="Andrew R.W."/>
            <person name="Ashwell R.I.S."/>
            <person name="Aubin K."/>
            <person name="Babbage A.K."/>
            <person name="Bagguley C.L."/>
            <person name="Bailey J."/>
            <person name="Beasley H."/>
            <person name="Bethel G."/>
            <person name="Bird C.P."/>
            <person name="Bray-Allen S."/>
            <person name="Brown J.Y."/>
            <person name="Brown A.J."/>
            <person name="Buckley D."/>
            <person name="Burton J."/>
            <person name="Bye J."/>
            <person name="Carder C."/>
            <person name="Chapman J.C."/>
            <person name="Clark S.Y."/>
            <person name="Clarke G."/>
            <person name="Clee C."/>
            <person name="Cobley V."/>
            <person name="Collier R.E."/>
            <person name="Corby N."/>
            <person name="Coville G.J."/>
            <person name="Davies J."/>
            <person name="Deadman R."/>
            <person name="Dunn M."/>
            <person name="Earthrowl M."/>
            <person name="Ellington A.G."/>
            <person name="Errington H."/>
            <person name="Frankish A."/>
            <person name="Frankland J."/>
            <person name="French L."/>
            <person name="Garner P."/>
            <person name="Garnett J."/>
            <person name="Gay L."/>
            <person name="Ghori M.R.J."/>
            <person name="Gibson R."/>
            <person name="Gilby L.M."/>
            <person name="Gillett W."/>
            <person name="Glithero R.J."/>
            <person name="Grafham D.V."/>
            <person name="Griffiths C."/>
            <person name="Griffiths-Jones S."/>
            <person name="Grocock R."/>
            <person name="Hammond S."/>
            <person name="Harrison E.S.I."/>
            <person name="Hart E."/>
            <person name="Haugen E."/>
            <person name="Heath P.D."/>
            <person name="Holmes S."/>
            <person name="Holt K."/>
            <person name="Howden P.J."/>
            <person name="Hunt A.R."/>
            <person name="Hunt S.E."/>
            <person name="Hunter G."/>
            <person name="Isherwood J."/>
            <person name="James R."/>
            <person name="Johnson C."/>
            <person name="Johnson D."/>
            <person name="Joy A."/>
            <person name="Kay M."/>
            <person name="Kershaw J.K."/>
            <person name="Kibukawa M."/>
            <person name="Kimberley A.M."/>
            <person name="King A."/>
            <person name="Knights A.J."/>
            <person name="Lad H."/>
            <person name="Laird G."/>
            <person name="Lawlor S."/>
            <person name="Leongamornlert D.A."/>
            <person name="Lloyd D.M."/>
            <person name="Loveland J."/>
            <person name="Lovell J."/>
            <person name="Lush M.J."/>
            <person name="Lyne R."/>
            <person name="Martin S."/>
            <person name="Mashreghi-Mohammadi M."/>
            <person name="Matthews L."/>
            <person name="Matthews N.S.W."/>
            <person name="McLaren S."/>
            <person name="Milne S."/>
            <person name="Mistry S."/>
            <person name="Moore M.J.F."/>
            <person name="Nickerson T."/>
            <person name="O'Dell C.N."/>
            <person name="Oliver K."/>
            <person name="Palmeiri A."/>
            <person name="Palmer S.A."/>
            <person name="Parker A."/>
            <person name="Patel D."/>
            <person name="Pearce A.V."/>
            <person name="Peck A.I."/>
            <person name="Pelan S."/>
            <person name="Phelps K."/>
            <person name="Phillimore B.J."/>
            <person name="Plumb R."/>
            <person name="Rajan J."/>
            <person name="Raymond C."/>
            <person name="Rouse G."/>
            <person name="Saenphimmachak C."/>
            <person name="Sehra H.K."/>
            <person name="Sheridan E."/>
            <person name="Shownkeen R."/>
            <person name="Sims S."/>
            <person name="Skuce C.D."/>
            <person name="Smith M."/>
            <person name="Steward C."/>
            <person name="Subramanian S."/>
            <person name="Sycamore N."/>
            <person name="Tracey A."/>
            <person name="Tromans A."/>
            <person name="Van Helmond Z."/>
            <person name="Wall M."/>
            <person name="Wallis J.M."/>
            <person name="White S."/>
            <person name="Whitehead S.L."/>
            <person name="Wilkinson J.E."/>
            <person name="Willey D.L."/>
            <person name="Williams H."/>
            <person name="Wilming L."/>
            <person name="Wray P.W."/>
            <person name="Wu Z."/>
            <person name="Coulson A."/>
            <person name="Vaudin M."/>
            <person name="Sulston J.E."/>
            <person name="Durbin R.M."/>
            <person name="Hubbard T."/>
            <person name="Wooster R."/>
            <person name="Dunham I."/>
            <person name="Carter N.P."/>
            <person name="McVean G."/>
            <person name="Ross M.T."/>
            <person name="Harrow J."/>
            <person name="Olson M.V."/>
            <person name="Beck S."/>
            <person name="Rogers J."/>
            <person name="Bentley D.R."/>
        </authorList>
    </citation>
    <scope>NUCLEOTIDE SEQUENCE [LARGE SCALE GENOMIC DNA]</scope>
</reference>
<reference key="7">
    <citation type="submission" date="2005-07" db="EMBL/GenBank/DDBJ databases">
        <authorList>
            <person name="Mural R.J."/>
            <person name="Istrail S."/>
            <person name="Sutton G.G."/>
            <person name="Florea L."/>
            <person name="Halpern A.L."/>
            <person name="Mobarry C.M."/>
            <person name="Lippert R."/>
            <person name="Walenz B."/>
            <person name="Shatkay H."/>
            <person name="Dew I."/>
            <person name="Miller J.R."/>
            <person name="Flanigan M.J."/>
            <person name="Edwards N.J."/>
            <person name="Bolanos R."/>
            <person name="Fasulo D."/>
            <person name="Halldorsson B.V."/>
            <person name="Hannenhalli S."/>
            <person name="Turner R."/>
            <person name="Yooseph S."/>
            <person name="Lu F."/>
            <person name="Nusskern D.R."/>
            <person name="Shue B.C."/>
            <person name="Zheng X.H."/>
            <person name="Zhong F."/>
            <person name="Delcher A.L."/>
            <person name="Huson D.H."/>
            <person name="Kravitz S.A."/>
            <person name="Mouchard L."/>
            <person name="Reinert K."/>
            <person name="Remington K.A."/>
            <person name="Clark A.G."/>
            <person name="Waterman M.S."/>
            <person name="Eichler E.E."/>
            <person name="Adams M.D."/>
            <person name="Hunkapiller M.W."/>
            <person name="Myers E.W."/>
            <person name="Venter J.C."/>
        </authorList>
    </citation>
    <scope>NUCLEOTIDE SEQUENCE [LARGE SCALE GENOMIC DNA]</scope>
</reference>
<reference key="8">
    <citation type="journal article" date="2004" name="Genome Res.">
        <title>The status, quality, and expansion of the NIH full-length cDNA project: the Mammalian Gene Collection (MGC).</title>
        <authorList>
            <consortium name="The MGC Project Team"/>
        </authorList>
    </citation>
    <scope>NUCLEOTIDE SEQUENCE [LARGE SCALE MRNA]</scope>
    <scope>VARIANT ALA-762</scope>
    <source>
        <tissue>Brain</tissue>
    </source>
</reference>
<reference key="9">
    <citation type="journal article" date="1990" name="Eur. J. Biochem.">
        <title>Human poly(ADP-ribose) polymerase gene. Cloning of the promoter region.</title>
        <authorList>
            <person name="Yokoyama Y."/>
            <person name="Kawamoto T."/>
            <person name="Mitsuuchi Y."/>
            <person name="Kurosaki T."/>
            <person name="Toda K."/>
            <person name="Ushiro H."/>
            <person name="Terashima M."/>
            <person name="Sumimoto H."/>
            <person name="Kuribayashi I."/>
            <person name="Yamamoto Y."/>
            <person name="Maeda T."/>
            <person name="Ikeda H."/>
            <person name="Sagara Y."/>
            <person name="Shizuta Y."/>
        </authorList>
    </citation>
    <scope>NUCLEOTIDE SEQUENCE [GENOMIC DNA] OF 1-95</scope>
</reference>
<reference key="10">
    <citation type="journal article" date="1990" name="Biochem. Biophys. Res. Commun.">
        <title>Characterization of a putative promoter region of the human poly(ADP-ribose) polymerase gene: structural similarity to that of the DNA polymerase beta gene.</title>
        <authorList>
            <person name="Ogura T."/>
            <person name="Nyunoya H."/>
            <person name="Takahashi-Masutani M."/>
            <person name="Miwa M."/>
            <person name="Sugimura T."/>
            <person name="Esumi H."/>
        </authorList>
    </citation>
    <scope>NUCLEOTIDE SEQUENCE [GENOMIC DNA] OF 1-40</scope>
</reference>
<reference key="11">
    <citation type="submission" date="1991-07" db="EMBL/GenBank/DDBJ databases">
        <title>Human pADPRT is involved in the regulation of its own gene.</title>
        <authorList>
            <person name="Herzog H."/>
            <person name="Schneider R."/>
            <person name="Hirsch-Kauffmann M."/>
            <person name="Schnitzer D."/>
            <person name="Schweiger M."/>
        </authorList>
    </citation>
    <scope>NUCLEOTIDE SEQUENCE [GENOMIC DNA] OF 1-40</scope>
</reference>
<reference key="12">
    <citation type="submission" date="2008-12" db="UniProtKB">
        <authorList>
            <person name="Bienvenut W.V."/>
            <person name="Zebisch A."/>
            <person name="Lilla S."/>
            <person name="von Kriegsheim A."/>
            <person name="Lempens A."/>
            <person name="Kolch W."/>
        </authorList>
    </citation>
    <scope>PROTEIN SEQUENCE OF 2-10; 35-47; 66-78; 109-119; 183-197; 209-221; 263-282; 453-467; 487-496; 529-548; 552-564; 572-582; 637-654; 668-695; 748-761; 780-796; 803-816 AND 859-903</scope>
    <scope>CLEAVAGE OF INITIATOR METHIONINE</scope>
    <scope>ACETYLATION AT ALA-2</scope>
    <scope>IDENTIFICATION BY MASS SPECTROMETRY</scope>
    <source>
        <tissue>Colon carcinoma</tissue>
        <tissue>Ovarian carcinoma</tissue>
    </source>
</reference>
<reference key="13">
    <citation type="journal article" date="2007" name="Clin. Exp. Immunol.">
        <title>Txk, a member of the non-receptor tyrosine kinase of the Tec family, forms a complex with poly(ADP-ribose) polymerase 1 and elongation factor 1alpha and regulates interferon-gamma gene transcription in Th1 cells.</title>
        <authorList>
            <person name="Maruyama T."/>
            <person name="Nara K."/>
            <person name="Yoshikawa H."/>
            <person name="Suzuki N."/>
        </authorList>
    </citation>
    <scope>PROTEIN SEQUENCE OF 166-177 AND 356-367</scope>
    <scope>FUNCTION</scope>
    <scope>INTERACTION WITH EEF1A1 AND TXK</scope>
    <scope>PHOSPHORYLATION BY TXK</scope>
    <scope>SUBCELLULAR LOCATION</scope>
</reference>
<reference key="14">
    <citation type="journal article" date="1987" name="Eur. J. Cell Biol.">
        <title>Isolation of a cDNA clone for human NAD+: protein ADP-ribosyltransferase.</title>
        <authorList>
            <person name="Schneider R."/>
            <person name="Auer B."/>
            <person name="Kuhne C."/>
            <person name="Herzog H."/>
            <person name="Klocker H."/>
            <person name="Burtscher H.J."/>
            <person name="Hirsch-Kauffmann M."/>
            <person name="Wintersberger U."/>
            <person name="Schweiger M."/>
        </authorList>
    </citation>
    <scope>NUCLEOTIDE SEQUENCE [MRNA] OF 381-420 AND 682-710</scope>
</reference>
<reference key="15">
    <citation type="journal article" date="1987" name="Biochem. Biophys. Res. Commun.">
        <title>Molecular cloning of cDNA for human poly(ADP-ribose) polymerase and expression of its gene during HL-60 cell differentiation.</title>
        <authorList>
            <person name="Suzuki H."/>
            <person name="Uchida K."/>
            <person name="Shima H."/>
            <person name="Sato T."/>
            <person name="Okamoto T."/>
            <person name="Kimura T."/>
            <person name="Miwa M."/>
        </authorList>
    </citation>
    <scope>NUCLEOTIDE SEQUENCE [MRNA] OF 441-1014</scope>
</reference>
<reference key="16">
    <citation type="journal article" date="1987" name="Biochem. Biophys. Res. Commun.">
        <authorList>
            <person name="Suzuki H."/>
            <person name="Uchida K."/>
            <person name="Shima H."/>
            <person name="Sato T."/>
            <person name="Okamoto T."/>
            <person name="Kimura T."/>
            <person name="Miwa M."/>
        </authorList>
    </citation>
    <scope>ERRATUM OF PUBMED:3113420</scope>
</reference>
<reference key="17">
    <citation type="journal article" date="1990" name="Proc. Natl. Acad. Sci. U.S.A.">
        <title>The second zinc-finger domain of poly(ADP-ribose) polymerase determines specificity for single-stranded breaks in DNA.</title>
        <authorList>
            <person name="Gradwohl G."/>
            <person name="Menissier-de Murcia J."/>
            <person name="Molinete M."/>
            <person name="Simonin F."/>
            <person name="Koken M.H.M."/>
            <person name="Hoeijmakers J.H.J."/>
            <person name="de Murcia G.M."/>
        </authorList>
    </citation>
    <scope>ANALYSIS OF ZINC-FINGERS</scope>
</reference>
<reference key="18">
    <citation type="journal article" date="1990" name="J. Biol. Chem.">
        <title>The zinc fingers of human poly(ADP-ribose) polymerase are differentially required for the recognition of DNA breaks and nicks and the consequent enzyme activation. Other structures recognize intact DNA.</title>
        <authorList>
            <person name="Ikelima M."/>
            <person name="Noguchi S."/>
            <person name="Yamashita R."/>
            <person name="Ogura T."/>
            <person name="Sugimura T."/>
            <person name="Gill D.M."/>
            <person name="Miwa M."/>
        </authorList>
    </citation>
    <scope>ANALYSIS OF ZINC-FINGERS</scope>
</reference>
<reference key="19">
    <citation type="journal article" date="1990" name="J. Biol. Chem.">
        <title>Expression and site-directed mutagenesis of the catalytic domain of human poly(ADP-ribose)polymerase in Escherichia coli. Lysine 893 is critical for activity.</title>
        <authorList>
            <person name="Simonin F."/>
            <person name="Menissier-de Murcia J."/>
            <person name="Poch O."/>
            <person name="Muller S."/>
            <person name="Gradwohl G."/>
            <person name="Molinete M."/>
            <person name="Penning C."/>
            <person name="Keith G."/>
            <person name="de Murcia G.M."/>
        </authorList>
    </citation>
    <scope>MUTAGENESIS OF CATALYTIC DOMAIN</scope>
</reference>
<reference key="20">
    <citation type="journal article" date="1992" name="EMBO J.">
        <title>The human poly(ADP-ribose) polymerase nuclear localization signal is a bipartite element functionally separate from DNA binding and catalytic activity.</title>
        <authorList>
            <person name="Schreiber V."/>
            <person name="Molinete M."/>
            <person name="Boeuf H."/>
            <person name="de Murcia G.M."/>
            <person name="Menissier-de Murcia J."/>
        </authorList>
    </citation>
    <scope>NUCLEAR LOCALIZATION SIGNAL</scope>
</reference>
<reference key="21">
    <citation type="journal article" date="1995" name="J. Biol. Chem.">
        <title>Role of glutamic acid 988 of human poly-ADP-ribose polymerase in polymer formation. Evidence for active site similarities to the ADP-ribosylating toxins.</title>
        <authorList>
            <person name="Marsischky G.T."/>
            <person name="Wilson B.A."/>
            <person name="Collier R.J."/>
        </authorList>
    </citation>
    <scope>CATALYTIC ACTIVITY</scope>
    <scope>ACTIVE SITE</scope>
    <scope>BIOPHYSICOCHEMICAL PROPERTIES</scope>
    <scope>MUTAGENESIS OF HIS-862; GLU-883; GLU-923; GLU-931 AND GLU-988</scope>
</reference>
<reference key="22">
    <citation type="journal article" date="1995" name="Nature">
        <title>Identification and inhibition of the ICE/CED-3 protease necessary for mammalian apoptosis.</title>
        <authorList>
            <person name="Nicholson D.W."/>
            <person name="Ali A."/>
            <person name="Thornberry N.A."/>
            <person name="Vaillancourt J.P."/>
            <person name="Ding C.K."/>
            <person name="Gallant M."/>
            <person name="Gareau Y."/>
            <person name="Griffin P.R."/>
            <person name="Labelle M."/>
            <person name="Lazebnik Y.A."/>
            <person name="Munday N.A."/>
            <person name="Raju S.M."/>
            <person name="Smulson M.E."/>
            <person name="Yamin T.-T."/>
            <person name="Li V.L."/>
            <person name="Miller D.K."/>
        </authorList>
    </citation>
    <scope>PROTEOLYTIC CLEAVAGE</scope>
</reference>
<reference key="23">
    <citation type="journal article" date="1997" name="Biochemistry">
        <title>Random mutagenesis of the poly(ADP-ribose) polymerase catalytic domain reveals amino acids involved in polymer branching.</title>
        <authorList>
            <person name="Rolli V."/>
            <person name="O'Farrell M."/>
            <person name="Menissier-de Murcia J."/>
            <person name="de Murcia G.M."/>
        </authorList>
    </citation>
    <scope>FUNCTION</scope>
    <scope>ACTIVE SITE</scope>
    <scope>MUTAGENESIS OF LEU-797; ASN-868; MET-890; LYS-893; PHE-897; ASP-899; CYS-908; LEU-926; TYR-986; GLU-988 AND LEU-1003</scope>
</reference>
<reference key="24">
    <citation type="journal article" date="1998" name="Cancer Res.">
        <title>Irreversible binding of poly(ADP)ribose polymerase cleavage product to DNA ends revealed by atomic force microscopy: possible role in apoptosis.</title>
        <authorList>
            <person name="Smulson M.E."/>
            <person name="Pang D."/>
            <person name="Jung M."/>
            <person name="Dimtchev A."/>
            <person name="Chasovskikh S."/>
            <person name="Spoonde A."/>
            <person name="Simbulan-Rosenthal C."/>
            <person name="Rosenthal D."/>
            <person name="Yakovlev A."/>
            <person name="Dritschilo A."/>
        </authorList>
    </citation>
    <scope>PROTEOLYTIC CLEAVAGE</scope>
    <scope>SUBCELLULAR LOCATION</scope>
</reference>
<reference key="25">
    <citation type="journal article" date="1998" name="Nucleic Acids Res.">
        <title>Functional association of poly(ADP-ribose) polymerase with DNA polymerase alpha-primase complex: a link between DNA strand break detection and DNA replication.</title>
        <authorList>
            <person name="Dantzer F."/>
            <person name="Nasheuer H.P."/>
            <person name="Vonesch J.L."/>
            <person name="de Murcia G."/>
            <person name="Menissier-de Murcia J."/>
        </authorList>
    </citation>
    <scope>INTERACTION WITH POLA1</scope>
    <scope>SUBCELLULAR LOCATION</scope>
</reference>
<reference key="26">
    <citation type="journal article" date="1999" name="J. Biol. Chem.">
        <title>Cleavage of automodified poly(ADP-ribose) polymerase during apoptosis. Evidence for involvement of caspase-7.</title>
        <authorList>
            <person name="Germain M."/>
            <person name="Affar E.B."/>
            <person name="D'Amours D."/>
            <person name="Dixit V.M."/>
            <person name="Salvesen G.S."/>
            <person name="Poirier G.G."/>
        </authorList>
    </citation>
    <scope>PROTEOLYTIC CLEAVAGE</scope>
</reference>
<reference key="27">
    <citation type="journal article" date="1999" name="Oncogene">
        <title>Suppression of the poly(ADP-ribose) polymerase activity by DNA-dependent protein kinase in vitro.</title>
        <authorList>
            <person name="Ariumi Y."/>
            <person name="Masutani M."/>
            <person name="Copeland T.D."/>
            <person name="Mimori T."/>
            <person name="Sugimura T."/>
            <person name="Shimotohno K."/>
            <person name="Ueda K."/>
            <person name="Hatanaka M."/>
            <person name="Noda M."/>
        </authorList>
    </citation>
    <scope>PHOSPHORYLATION</scope>
</reference>
<reference key="28">
    <citation type="journal article" date="2004" name="Cell">
        <title>NAD+-dependent modulation of chromatin structure and transcription by nucleosome binding properties of PARP-1.</title>
        <authorList>
            <person name="Kim M.Y."/>
            <person name="Mauro S."/>
            <person name="Gevry N."/>
            <person name="Lis J.T."/>
            <person name="Kraus W.L."/>
        </authorList>
    </citation>
    <scope>FUNCTION</scope>
    <scope>INTERACTION WITH NUCLEOSOMES</scope>
    <scope>SUBCELLULAR LOCATION</scope>
    <scope>ADP-RIBOSYLATION</scope>
</reference>
<reference key="29">
    <citation type="journal article" date="2004" name="Hum. Mol. Genet.">
        <title>Aprataxin, a novel protein that protects against genotoxic stress.</title>
        <authorList>
            <person name="Gueven N."/>
            <person name="Becherel O.J."/>
            <person name="Kijas A.W."/>
            <person name="Chen P."/>
            <person name="Howe O."/>
            <person name="Rudolph J.H."/>
            <person name="Gatti R."/>
            <person name="Date H."/>
            <person name="Onodera O."/>
            <person name="Taucher-Scholz G."/>
            <person name="Lavin M.F."/>
        </authorList>
    </citation>
    <scope>INTERACTION WITH APTX</scope>
</reference>
<reference key="30">
    <citation type="journal article" date="2006" name="Apoptosis">
        <title>Nuclear caspase-3 and caspase-7 activation, and poly(ADP-ribose) polymerase cleavage are early events in camptothecin-induced apoptosis.</title>
        <authorList>
            <person name="Rodriguez-Hernandez A."/>
            <person name="Brea-Calvo G."/>
            <person name="Fernandez-Ayala D.J."/>
            <person name="Cordero M."/>
            <person name="Navas P."/>
            <person name="Sanchez-Alcazar J.A."/>
        </authorList>
    </citation>
    <scope>PROTEOLYTIC CLEAVAGE</scope>
</reference>
<reference key="31">
    <citation type="journal article" date="2006" name="Mol. Cell. Endocrinol.">
        <title>The poly(ADP-ribose) polymerase 1 interacts with Sry and modulates its biological functions.</title>
        <authorList>
            <person name="Li Y."/>
            <person name="Oh H.J."/>
            <person name="Lau Y.-F.C."/>
        </authorList>
    </citation>
    <scope>INTERACTION WITH SRY</scope>
</reference>
<reference key="32">
    <citation type="journal article" date="2007" name="EMBO J.">
        <title>A novel human AP endonuclease with conserved zinc-finger-like motifs involved in DNA strand break responses.</title>
        <authorList>
            <person name="Kanno S."/>
            <person name="Kuzuoka H."/>
            <person name="Sasao S."/>
            <person name="Hong Z."/>
            <person name="Lan L."/>
            <person name="Nakajima S."/>
            <person name="Yasui A."/>
        </authorList>
    </citation>
    <scope>INTERACTION WITH APLF</scope>
    <scope>FUNCTION</scope>
</reference>
<reference key="33">
    <citation type="journal article" date="2007" name="Science">
        <title>ATM and ATR substrate analysis reveals extensive protein networks responsive to DNA damage.</title>
        <authorList>
            <person name="Matsuoka S."/>
            <person name="Ballif B.A."/>
            <person name="Smogorzewska A."/>
            <person name="McDonald E.R. III"/>
            <person name="Hurov K.E."/>
            <person name="Luo J."/>
            <person name="Bakalarski C.E."/>
            <person name="Zhao Z."/>
            <person name="Solimini N."/>
            <person name="Lerenthal Y."/>
            <person name="Shiloh Y."/>
            <person name="Gygi S.P."/>
            <person name="Elledge S.J."/>
        </authorList>
    </citation>
    <scope>PHOSPHORYLATION [LARGE SCALE ANALYSIS] AT SER-179</scope>
    <scope>IDENTIFICATION BY MASS SPECTROMETRY [LARGE SCALE ANALYSIS]</scope>
    <source>
        <tissue>Embryonic kidney</tissue>
    </source>
</reference>
<reference key="34">
    <citation type="journal article" date="2008" name="Nature">
        <title>Poly(ADP-ribose)-binding zinc finger motifs in DNA repair/checkpoint proteins.</title>
        <authorList>
            <person name="Ahel I."/>
            <person name="Ahel D."/>
            <person name="Matsusaka T."/>
            <person name="Clark A.J."/>
            <person name="Pines J."/>
            <person name="Boulton S.J."/>
            <person name="West S.C."/>
        </authorList>
    </citation>
    <scope>FUNCTION</scope>
    <scope>CATALYTIC ACTIVITY</scope>
</reference>
<reference key="35">
    <citation type="journal article" date="2008" name="Proc. Natl. Acad. Sci. U.S.A.">
        <title>A quantitative atlas of mitotic phosphorylation.</title>
        <authorList>
            <person name="Dephoure N."/>
            <person name="Zhou C."/>
            <person name="Villen J."/>
            <person name="Beausoleil S.A."/>
            <person name="Bakalarski C.E."/>
            <person name="Elledge S.J."/>
            <person name="Gygi S.P."/>
        </authorList>
    </citation>
    <scope>PHOSPHORYLATION [LARGE SCALE ANALYSIS] AT THR-368 AND SER-782</scope>
    <scope>IDENTIFICATION BY MASS SPECTROMETRY [LARGE SCALE ANALYSIS]</scope>
    <source>
        <tissue>Cervix carcinoma</tissue>
    </source>
</reference>
<reference key="36">
    <citation type="journal article" date="2009" name="Biochem. Pharmacol.">
        <title>Poly(ADP-ribose) polymerase-1 (PARP-1) transcriptionally regulates angiotensin AT2 receptor (AT2R) and AT2R binding protein (ATBP) genes.</title>
        <authorList>
            <person name="Reinemund J."/>
            <person name="Seidel K."/>
            <person name="Steckelings U.M."/>
            <person name="Zaade D."/>
            <person name="Klare S."/>
            <person name="Rompe F."/>
            <person name="Katerbaum M."/>
            <person name="Schacherl J."/>
            <person name="Li Y."/>
            <person name="Menk M."/>
            <person name="Schefe J.H."/>
            <person name="Goldin-Lang P."/>
            <person name="Szabo C."/>
            <person name="Olah G."/>
            <person name="Unger T."/>
            <person name="Funke-Kaiser H."/>
        </authorList>
    </citation>
    <scope>FUNCTION</scope>
</reference>
<reference key="37">
    <citation type="journal article" date="2009" name="EMBO J.">
        <title>PARP-1 transcriptional activity is regulated by sumoylation upon heat shock.</title>
        <authorList>
            <person name="Martin N."/>
            <person name="Schwamborn K."/>
            <person name="Schreiber V."/>
            <person name="Werner A."/>
            <person name="Guillier C."/>
            <person name="Zhang X.D."/>
            <person name="Bischof O."/>
            <person name="Seeler J.S."/>
            <person name="Dejean A."/>
        </authorList>
    </citation>
    <scope>INTERACTION WITH RNF4</scope>
</reference>
<reference key="38">
    <citation type="journal article" date="2009" name="J. Am. Chem. Soc.">
        <title>Identification of the ADP-ribosylation sites in the PARP-1 automodification domain: analysis and implications.</title>
        <authorList>
            <person name="Tao Z."/>
            <person name="Gao P."/>
            <person name="Liu H.W."/>
        </authorList>
    </citation>
    <scope>FUNCTION</scope>
    <scope>CATALYTIC ACTIVITY</scope>
    <scope>MUTAGENESIS OF GLU-988</scope>
    <scope>ADP-RIBOSYLATION AT ASP-387; GLU-488 AND GLU-491</scope>
</reference>
<reference key="39">
    <citation type="journal article" date="2009" name="J. Biol. Chem.">
        <title>The metastasis efficiency modifier ribosomal RNA processing 1 homolog B (RRP1B) is a chromatin-associated factor.</title>
        <authorList>
            <person name="Crawford N.P."/>
            <person name="Yang H."/>
            <person name="Mattaini K.R."/>
            <person name="Hunter K.W."/>
        </authorList>
    </citation>
    <scope>INTERACTION WITH RRP1B</scope>
</reference>
<reference key="40">
    <citation type="journal article" date="2009" name="Sci. Signal.">
        <title>Quantitative phosphoproteomic analysis of T cell receptor signaling reveals system-wide modulation of protein-protein interactions.</title>
        <authorList>
            <person name="Mayya V."/>
            <person name="Lundgren D.H."/>
            <person name="Hwang S.-I."/>
            <person name="Rezaul K."/>
            <person name="Wu L."/>
            <person name="Eng J.K."/>
            <person name="Rodionov V."/>
            <person name="Han D.K."/>
        </authorList>
    </citation>
    <scope>PHOSPHORYLATION [LARGE SCALE ANALYSIS] AT SER-782</scope>
    <scope>IDENTIFICATION BY MASS SPECTROMETRY [LARGE SCALE ANALYSIS]</scope>
    <source>
        <tissue>Leukemic T-cell</tissue>
    </source>
</reference>
<reference key="41">
    <citation type="journal article" date="2009" name="Science">
        <title>Poly(ADP-ribose)-dependent regulation of DNA repair by the chromatin remodeling enzyme ALC1.</title>
        <authorList>
            <person name="Ahel D."/>
            <person name="Horejsi Z."/>
            <person name="Wiechens N."/>
            <person name="Polo S.E."/>
            <person name="Garcia-Wilson E."/>
            <person name="Ahel I."/>
            <person name="Flynn H."/>
            <person name="Skehel M."/>
            <person name="West S.C."/>
            <person name="Jackson S.P."/>
            <person name="Owen-Hughes T."/>
            <person name="Boulton S.J."/>
        </authorList>
    </citation>
    <scope>FUNCTION</scope>
    <scope>POLY-ADP-RIBOSYLATION</scope>
    <scope>INTERACTION WITH CHD1L</scope>
</reference>
<reference key="42">
    <citation type="journal article" date="2009" name="Science">
        <title>Lysine acetylation targets protein complexes and co-regulates major cellular functions.</title>
        <authorList>
            <person name="Choudhary C."/>
            <person name="Kumar C."/>
            <person name="Gnad F."/>
            <person name="Nielsen M.L."/>
            <person name="Rehman M."/>
            <person name="Walther T.C."/>
            <person name="Olsen J.V."/>
            <person name="Mann M."/>
        </authorList>
    </citation>
    <scope>ACETYLATION [LARGE SCALE ANALYSIS] AT LYS-97; LYS-105; LYS-131; LYS-600 AND LYS-621</scope>
    <scope>IDENTIFICATION BY MASS SPECTROMETRY [LARGE SCALE ANALYSIS]</scope>
</reference>
<reference key="43">
    <citation type="journal article" date="2010" name="J. Biol. Chem.">
        <title>PARP-3 is a mono-ADP-ribosylase that activates PARP-1 in the absence of DNA.</title>
        <authorList>
            <person name="Loseva O."/>
            <person name="Jemth A.S."/>
            <person name="Bryant H.E."/>
            <person name="Schueler H."/>
            <person name="Lehtioe L."/>
            <person name="Karlberg T."/>
            <person name="Helleday T."/>
        </authorList>
    </citation>
    <scope>INTERACTION WITH PARP3</scope>
</reference>
<reference key="44">
    <citation type="journal article" date="2010" name="J. Biol. Chem.">
        <title>The Zn3 domain of human poly(ADP-ribose) polymerase-1 (PARP-1) functions in both DNA-dependent poly(ADP-ribose) synthesis activity and chromatin compaction.</title>
        <authorList>
            <person name="Langelier M.F."/>
            <person name="Ruhl D.D."/>
            <person name="Planck J.L."/>
            <person name="Kraus W.L."/>
            <person name="Pascal J.M."/>
        </authorList>
    </citation>
    <scope>FUNCTION</scope>
    <scope>ACTIVITY REGULATION</scope>
    <scope>DOMAIN</scope>
    <scope>ADP-RIBOSYLATION</scope>
    <scope>MUTAGENESIS OF GLN-241; ASP-314; VAL-315; THR-316; ALA-317; TRP-318; THR-319; LYS-320; 348-LEU--VAL-350; PHE-357 AND 358-PRO-PRO-359</scope>
</reference>
<reference key="45">
    <citation type="journal article" date="2010" name="Sci. Signal.">
        <title>Quantitative phosphoproteomics reveals widespread full phosphorylation site occupancy during mitosis.</title>
        <authorList>
            <person name="Olsen J.V."/>
            <person name="Vermeulen M."/>
            <person name="Santamaria A."/>
            <person name="Kumar C."/>
            <person name="Miller M.L."/>
            <person name="Jensen L.J."/>
            <person name="Gnad F."/>
            <person name="Cox J."/>
            <person name="Jensen T.S."/>
            <person name="Nigg E.A."/>
            <person name="Brunak S."/>
            <person name="Mann M."/>
        </authorList>
    </citation>
    <scope>PHOSPHORYLATION [LARGE SCALE ANALYSIS] AT SER-41 AND SER-782</scope>
    <scope>IDENTIFICATION BY MASS SPECTROMETRY [LARGE SCALE ANALYSIS]</scope>
    <source>
        <tissue>Cervix carcinoma</tissue>
    </source>
</reference>
<reference key="46">
    <citation type="journal article" date="2010" name="Trends Biochem. Sci.">
        <title>Toward a unified nomenclature for mammalian ADP-ribosyltransferases.</title>
        <authorList>
            <person name="Hottiger M.O."/>
            <person name="Hassa P.O."/>
            <person name="Luscher B."/>
            <person name="Schuler H."/>
            <person name="Koch-Nolte F."/>
        </authorList>
    </citation>
    <scope>NOMENCLATURE</scope>
</reference>
<reference key="47">
    <citation type="journal article" date="2011" name="BMC Syst. Biol.">
        <title>Initial characterization of the human central proteome.</title>
        <authorList>
            <person name="Burkard T.R."/>
            <person name="Planyavsky M."/>
            <person name="Kaupe I."/>
            <person name="Breitwieser F.P."/>
            <person name="Buerckstuemmer T."/>
            <person name="Bennett K.L."/>
            <person name="Superti-Furga G."/>
            <person name="Colinge J."/>
        </authorList>
    </citation>
    <scope>IDENTIFICATION BY MASS SPECTROMETRY [LARGE SCALE ANALYSIS]</scope>
</reference>
<reference key="48">
    <citation type="journal article" date="2011" name="Cancer Res.">
        <title>hPuf-A/KIAA0020 modulates PARP-1 cleavage upon genotoxic stress.</title>
        <authorList>
            <person name="Chang H.Y."/>
            <person name="Fan C.C."/>
            <person name="Chu P.C."/>
            <person name="Hong B.E."/>
            <person name="Lee H.J."/>
            <person name="Chang M.S."/>
        </authorList>
    </citation>
    <scope>INTERACTION WITH PUM3</scope>
</reference>
<reference key="49">
    <citation type="journal article" date="2011" name="Oncogene">
        <title>Poly(ADP-ribose)-dependent regulation of Snail1 protein stability.</title>
        <authorList>
            <person name="Rodriguez M.I."/>
            <person name="Gonzalez-Flores A."/>
            <person name="Dantzer F."/>
            <person name="Collard J."/>
            <person name="de Herreros A.G."/>
            <person name="Oliver F.J."/>
        </authorList>
    </citation>
    <scope>INTERACTION WITH SNAI1</scope>
</reference>
<reference key="50">
    <citation type="journal article" date="2011" name="PLoS ONE">
        <title>Ubiquitin ligase RNF146 regulates tankyrase and Axin to promote Wnt signaling.</title>
        <authorList>
            <person name="Callow M.G."/>
            <person name="Tran H."/>
            <person name="Phu L."/>
            <person name="Lau T."/>
            <person name="Lee J."/>
            <person name="Sandoval W.N."/>
            <person name="Liu P.S."/>
            <person name="Bheddah S."/>
            <person name="Tao J."/>
            <person name="Lill J.R."/>
            <person name="Hongo J.A."/>
            <person name="Davis D."/>
            <person name="Kirkpatrick D.S."/>
            <person name="Polakis P."/>
            <person name="Costa M."/>
        </authorList>
    </citation>
    <scope>INTERACTION WITH RNF146</scope>
    <scope>SUBCELLULAR LOCATION</scope>
</reference>
<reference key="51">
    <citation type="journal article" date="2011" name="Science">
        <title>SIRT6 promotes DNA repair under stress by activating PARP1.</title>
        <authorList>
            <person name="Mao Z."/>
            <person name="Hine C."/>
            <person name="Tian X."/>
            <person name="Van Meter M."/>
            <person name="Au M."/>
            <person name="Vaidya A."/>
            <person name="Seluanov A."/>
            <person name="Gorbunova V."/>
        </authorList>
    </citation>
    <scope>FUNCTION</scope>
    <scope>ADP-RIBOSYLATION AT LYS-521</scope>
</reference>
<reference key="52">
    <citation type="journal article" date="2011" name="Sci. Signal.">
        <title>System-wide temporal characterization of the proteome and phosphoproteome of human embryonic stem cell differentiation.</title>
        <authorList>
            <person name="Rigbolt K.T."/>
            <person name="Prokhorova T.A."/>
            <person name="Akimov V."/>
            <person name="Henningsen J."/>
            <person name="Johansen P.T."/>
            <person name="Kratchmarova I."/>
            <person name="Kassem M."/>
            <person name="Mann M."/>
            <person name="Olsen J.V."/>
            <person name="Blagoev B."/>
        </authorList>
    </citation>
    <scope>PHOSPHORYLATION [LARGE SCALE ANALYSIS] AT SER-782</scope>
    <scope>IDENTIFICATION BY MASS SPECTROMETRY [LARGE SCALE ANALYSIS]</scope>
</reference>
<reference key="53">
    <citation type="journal article" date="2012" name="Biol. Open">
        <title>Taperin (c9orf75), a mutated gene in nonsyndromic deafness, encodes a vertebrate specific, nuclear localized protein phosphatase one alpha (PP1alpha) docking protein.</title>
        <authorList>
            <person name="Ferrar T."/>
            <person name="Chamousset D."/>
            <person name="De Wever V."/>
            <person name="Nimick M."/>
            <person name="Andersen J."/>
            <person name="Trinkle-Mulcahy L."/>
            <person name="Moorhead G.B."/>
        </authorList>
    </citation>
    <scope>INTERACTION WITH TPRN</scope>
</reference>
<reference key="54">
    <citation type="journal article" date="2012" name="Cell">
        <title>Exome capture reveals ZNF423 and CEP164 mutations, linking renal ciliopathies to DNA damage response signaling.</title>
        <authorList>
            <person name="Chaki M."/>
            <person name="Airik R."/>
            <person name="Ghosh A.K."/>
            <person name="Giles R.H."/>
            <person name="Chen R."/>
            <person name="Slaats G.G."/>
            <person name="Wang H."/>
            <person name="Hurd T.W."/>
            <person name="Zhou W."/>
            <person name="Cluckey A."/>
            <person name="Gee H.Y."/>
            <person name="Ramaswami G."/>
            <person name="Hong C.J."/>
            <person name="Hamilton B.A."/>
            <person name="Cervenka I."/>
            <person name="Ganji R.S."/>
            <person name="Bryja V."/>
            <person name="Arts H.H."/>
            <person name="van Reeuwijk J."/>
            <person name="Oud M.M."/>
            <person name="Letteboer S.J."/>
            <person name="Roepman R."/>
            <person name="Husson H."/>
            <person name="Ibraghimov-Beskrovnaya O."/>
            <person name="Yasunaga T."/>
            <person name="Walz G."/>
            <person name="Eley L."/>
            <person name="Sayer J.A."/>
            <person name="Schermer B."/>
            <person name="Liebau M.C."/>
            <person name="Benzing T."/>
            <person name="Le Corre S."/>
            <person name="Drummond I."/>
            <person name="Janssen S."/>
            <person name="Allen S.J."/>
            <person name="Natarajan S."/>
            <person name="O'Toole J.F."/>
            <person name="Attanasio M."/>
            <person name="Saunier S."/>
            <person name="Antignac C."/>
            <person name="Koenekoop R.K."/>
            <person name="Ren H."/>
            <person name="Lopez I."/>
            <person name="Nayir A."/>
            <person name="Stoetzel C."/>
            <person name="Dollfus H."/>
            <person name="Massoudi R."/>
            <person name="Gleeson J.G."/>
            <person name="Andreoli S.P."/>
            <person name="Doherty D.G."/>
            <person name="Lindstrad A."/>
            <person name="Golzio C."/>
            <person name="Katsanis N."/>
            <person name="Pape L."/>
            <person name="Abboud E.B."/>
            <person name="Al-Rajhi A.A."/>
            <person name="Lewis R.A."/>
            <person name="Omran H."/>
            <person name="Lee E.Y."/>
            <person name="Wang S."/>
            <person name="Sekiguchi J.M."/>
            <person name="Saunders R."/>
            <person name="Johnson C.A."/>
            <person name="Garner E."/>
            <person name="Vanselow K."/>
            <person name="Andersen J.S."/>
            <person name="Shlomai J."/>
            <person name="Nurnberg G."/>
            <person name="Nurnberg P."/>
            <person name="Levy S."/>
            <person name="Smogorzewska A."/>
            <person name="Otto E.A."/>
            <person name="Hildebrandt F."/>
        </authorList>
    </citation>
    <scope>INTERACTION WITH ZNF423</scope>
</reference>
<reference key="55">
    <citation type="journal article" date="2012" name="J. Biomed. Sci.">
        <title>Suppressive regulation of KSHV RTA with O-GlcNAcylation.</title>
        <authorList>
            <person name="Ko Y.C."/>
            <person name="Tsai W.H."/>
            <person name="Wang P.W."/>
            <person name="Wu I.L."/>
            <person name="Lin S.Y."/>
            <person name="Chen Y.L."/>
            <person name="Chen J.Y."/>
            <person name="Lin S.F."/>
        </authorList>
    </citation>
    <scope>INTERACTION WITH HUMAN HERPESVIRUS 8 PROTEIN RTA/ORF50 (MICROBIAL INFECTION)</scope>
</reference>
<reference key="56">
    <citation type="journal article" date="2012" name="Mol. Cell">
        <title>Inflammasome-activated caspase 7 cleaves PARP1 to enhance the expression of a subset of NF-kappaB target genes.</title>
        <authorList>
            <person name="Erener S."/>
            <person name="Petrilli V."/>
            <person name="Kassner I."/>
            <person name="Minotti R."/>
            <person name="Castillo R."/>
            <person name="Santoro R."/>
            <person name="Hassa P.O."/>
            <person name="Tschopp J."/>
            <person name="Hottiger M.O."/>
        </authorList>
    </citation>
    <scope>FUNCTION</scope>
    <scope>PROTEOLYTIC CLEAVAGE</scope>
    <scope>MUTAGENESIS OF ASP-214</scope>
</reference>
<reference key="57">
    <citation type="journal article" date="2012" name="Mol. Cell. Proteomics">
        <title>Systematic analysis of protein pools, isoforms, and modifications affecting turnover and subcellular localization.</title>
        <authorList>
            <person name="Ahmad Y."/>
            <person name="Boisvert F.M."/>
            <person name="Lundberg E."/>
            <person name="Uhlen M."/>
            <person name="Lamond A.I."/>
        </authorList>
    </citation>
    <scope>SUBCELLULAR LOCATION [LARGE SCALE ANALYSIS]</scope>
</reference>
<reference key="58">
    <citation type="journal article" date="2012" name="Proc. Natl. Acad. Sci. U.S.A.">
        <title>Caspase-7 uses an exosite to promote poly(ADP ribose) polymerase 1 proteolysis.</title>
        <authorList>
            <person name="Boucher D."/>
            <person name="Blais V."/>
            <person name="Denault J.B."/>
        </authorList>
    </citation>
    <scope>PROTEOLYTIC CLEAVAGE</scope>
</reference>
<reference key="59">
    <citation type="journal article" date="2012" name="Proc. Natl. Acad. Sci. U.S.A.">
        <title>Sirtuin 6 (SIRT6) rescues the decline of homologous recombination repair during replicative senescence.</title>
        <authorList>
            <person name="Mao Z."/>
            <person name="Tian X."/>
            <person name="Van Meter M."/>
            <person name="Ke Z."/>
            <person name="Gorbunova V."/>
            <person name="Seluanov A."/>
        </authorList>
    </citation>
    <scope>ADP-RIBOSYLATION</scope>
</reference>
<reference key="60">
    <citation type="journal article" date="2012" name="Proc. Natl. Acad. Sci. U.S.A.">
        <title>N-terminal acetylome analyses and functional insights of the N-terminal acetyltransferase NatB.</title>
        <authorList>
            <person name="Van Damme P."/>
            <person name="Lasa M."/>
            <person name="Polevoda B."/>
            <person name="Gazquez C."/>
            <person name="Elosegui-Artola A."/>
            <person name="Kim D.S."/>
            <person name="De Juan-Pardo E."/>
            <person name="Demeyer K."/>
            <person name="Hole K."/>
            <person name="Larrea E."/>
            <person name="Timmerman E."/>
            <person name="Prieto J."/>
            <person name="Arnesen T."/>
            <person name="Sherman F."/>
            <person name="Gevaert K."/>
            <person name="Aldabe R."/>
        </authorList>
    </citation>
    <scope>ACETYLATION [LARGE SCALE ANALYSIS] AT ALA-2</scope>
    <scope>CLEAVAGE OF INITIATOR METHIONINE [LARGE SCALE ANALYSIS]</scope>
    <scope>IDENTIFICATION BY MASS SPECTROMETRY [LARGE SCALE ANALYSIS]</scope>
</reference>
<reference key="61">
    <citation type="journal article" date="2013" name="Cell Cycle">
        <title>ZNF365 promotes stalled replication forks recovery to maintain genome stability.</title>
        <authorList>
            <person name="Zhang Y."/>
            <person name="Park E."/>
            <person name="Kim C.S."/>
            <person name="Paik J.H."/>
        </authorList>
    </citation>
    <scope>INTERACTION WITH ZNF365</scope>
</reference>
<reference key="62">
    <citation type="journal article" date="2013" name="J. Proteome Res.">
        <title>Toward a comprehensive characterization of a human cancer cell phosphoproteome.</title>
        <authorList>
            <person name="Zhou H."/>
            <person name="Di Palma S."/>
            <person name="Preisinger C."/>
            <person name="Peng M."/>
            <person name="Polat A.N."/>
            <person name="Heck A.J."/>
            <person name="Mohammed S."/>
        </authorList>
    </citation>
    <scope>PHOSPHORYLATION [LARGE SCALE ANALYSIS] AT SER-41; SER-177; SER-179; SER-185; SER-274; SER-277; SER-782 AND SER-786</scope>
    <scope>IDENTIFICATION BY MASS SPECTROMETRY [LARGE SCALE ANALYSIS]</scope>
    <source>
        <tissue>Cervix carcinoma</tissue>
        <tissue>Erythroleukemia</tissue>
    </source>
</reference>
<reference key="63">
    <citation type="journal article" date="2013" name="Mol. Cell. Biol.">
        <title>BAL1 and its partner E3 ligase, BBAP, link Poly(ADP-ribose) activation, ubiquitylation, and double-strand DNA repair independent of ATM, MDC1, and RNF8.</title>
        <authorList>
            <person name="Yan Q."/>
            <person name="Xu R."/>
            <person name="Zhu L."/>
            <person name="Cheng X."/>
            <person name="Wang Z."/>
            <person name="Manis J."/>
            <person name="Shipp M.A."/>
        </authorList>
    </citation>
    <scope>FUNCTION</scope>
    <scope>SUBCELLULAR LOCATION</scope>
    <scope>INTERACTION WITH PARP9</scope>
</reference>
<reference key="64">
    <citation type="journal article" date="2014" name="J. Proteomics">
        <title>An enzyme assisted RP-RPLC approach for in-depth analysis of human liver phosphoproteome.</title>
        <authorList>
            <person name="Bian Y."/>
            <person name="Song C."/>
            <person name="Cheng K."/>
            <person name="Dong M."/>
            <person name="Wang F."/>
            <person name="Huang J."/>
            <person name="Sun D."/>
            <person name="Wang L."/>
            <person name="Ye M."/>
            <person name="Zou H."/>
        </authorList>
    </citation>
    <scope>PHOSPHORYLATION [LARGE SCALE ANALYSIS] AT SER-364</scope>
    <scope>IDENTIFICATION BY MASS SPECTROMETRY [LARGE SCALE ANALYSIS]</scope>
    <source>
        <tissue>Liver</tissue>
    </source>
</reference>
<reference key="65">
    <citation type="journal article" date="2014" name="Nat. Commun.">
        <title>Family-wide analysis of poly(ADP-ribose) polymerase activity.</title>
        <authorList>
            <person name="Vyas S."/>
            <person name="Matic I."/>
            <person name="Uchima L."/>
            <person name="Rood J."/>
            <person name="Zaja R."/>
            <person name="Hay R.T."/>
            <person name="Ahel I."/>
            <person name="Chang P."/>
        </authorList>
    </citation>
    <scope>FUNCTION</scope>
    <scope>CATALYTIC ACTIVITY</scope>
</reference>
<reference key="66">
    <citation type="journal article" date="2014" name="Nat. Struct. Mol. Biol.">
        <title>Uncovering global SUMOylation signaling networks in a site-specific manner.</title>
        <authorList>
            <person name="Hendriks I.A."/>
            <person name="D'Souza R.C."/>
            <person name="Yang B."/>
            <person name="Verlaan-de Vries M."/>
            <person name="Mann M."/>
            <person name="Vertegaal A.C."/>
        </authorList>
    </citation>
    <scope>SUMOYLATION [LARGE SCALE ANALYSIS] AT LYS-486; LYS-512 AND LYS-748</scope>
    <scope>IDENTIFICATION BY MASS SPECTROMETRY [LARGE SCALE ANALYSIS]</scope>
</reference>
<reference key="67">
    <citation type="journal article" date="2014" name="Nucleic Acids Res.">
        <title>PARG is dispensable for recovery from transient replicative stress but required to prevent detrimental accumulation of poly(ADP-ribose) upon prolonged replicative stress.</title>
        <authorList>
            <person name="Illuzzi G."/>
            <person name="Fouquerel E."/>
            <person name="Ame J.C."/>
            <person name="Noll A."/>
            <person name="Rehmet K."/>
            <person name="Nasheuer H.P."/>
            <person name="Dantzer F."/>
            <person name="Schreiber V."/>
        </authorList>
    </citation>
    <scope>FUNCTION</scope>
</reference>
<reference key="68">
    <citation type="journal article" date="2014" name="Proc. Natl. Acad. Sci. U.S.A.">
        <title>Mapping of SUMO sites and analysis of SUMOylation changes induced by external stimuli.</title>
        <authorList>
            <person name="Impens F."/>
            <person name="Radoshevich L."/>
            <person name="Cossart P."/>
            <person name="Ribet D."/>
        </authorList>
    </citation>
    <scope>SUMOYLATION [LARGE SCALE ANALYSIS] AT LYS-203; LYS-486 AND LYS-748</scope>
    <scope>IDENTIFICATION BY MASS SPECTROMETRY [LARGE SCALE ANALYSIS]</scope>
</reference>
<reference key="69">
    <citation type="journal article" date="2015" name="Cell Rep.">
        <title>SUMO-2 orchestrates chromatin modifiers in response to DNA damage.</title>
        <authorList>
            <person name="Hendriks I.A."/>
            <person name="Treffers L.W."/>
            <person name="Verlaan-de Vries M."/>
            <person name="Olsen J.V."/>
            <person name="Vertegaal A.C."/>
        </authorList>
    </citation>
    <scope>SUMOYLATION [LARGE SCALE ANALYSIS] AT LYS-203; LYS-467; LYS-486 AND LYS-512</scope>
    <scope>IDENTIFICATION BY MASS SPECTROMETRY [LARGE SCALE ANALYSIS]</scope>
</reference>
<reference key="70">
    <citation type="journal article" date="2015" name="Mol. Cell. Proteomics">
        <title>System-wide analysis of SUMOylation dynamics in response to replication stress reveals novel small ubiquitin-like modified target proteins and acceptor lysines relevant for genome stability.</title>
        <authorList>
            <person name="Xiao Z."/>
            <person name="Chang J.G."/>
            <person name="Hendriks I.A."/>
            <person name="Sigurdsson J.O."/>
            <person name="Olsen J.V."/>
            <person name="Vertegaal A.C."/>
        </authorList>
    </citation>
    <scope>SUMOYLATION [LARGE SCALE ANALYSIS] AT LYS-512</scope>
    <scope>IDENTIFICATION BY MASS SPECTROMETRY [LARGE SCALE ANALYSIS]</scope>
</reference>
<reference key="71">
    <citation type="journal article" date="2015" name="Nature">
        <title>A human tRNA synthetase is a potent PARP1-activating effector target for resveratrol.</title>
        <authorList>
            <person name="Sajish M."/>
            <person name="Schimmel P."/>
        </authorList>
    </citation>
    <scope>INTERACTION WITH YARS1</scope>
</reference>
<reference key="72">
    <citation type="journal article" date="2016" name="Mol. Cell">
        <title>HPF1/C4orf27 is a PARP-1-interacting protein that regulates PARP-1 ADP-ribosylation activity.</title>
        <authorList>
            <person name="Gibbs-Seymour I."/>
            <person name="Fontana P."/>
            <person name="Rack J.G."/>
            <person name="Ahel I."/>
        </authorList>
    </citation>
    <scope>FUNCTION</scope>
    <scope>CATALYTIC ACTIVITY</scope>
    <scope>INTERACTION WITH HPF1</scope>
</reference>
<reference key="73">
    <citation type="journal article" date="2016" name="Nucleic Acids Res.">
        <title>Poly(ADP-ribose) polymerases covalently modify strand break termini in DNA fragments in vitro.</title>
        <authorList>
            <person name="Talhaoui I."/>
            <person name="Lebedeva N.A."/>
            <person name="Zarkovic G."/>
            <person name="Saint-Pierre C."/>
            <person name="Kutuzov M.M."/>
            <person name="Sukhanova M.V."/>
            <person name="Matkarimov B.T."/>
            <person name="Gasparutto D."/>
            <person name="Saparbaev M.K."/>
            <person name="Lavrik O.I."/>
            <person name="Ishchenko A.A."/>
        </authorList>
    </citation>
    <scope>FUNCTION</scope>
    <scope>CATALYTIC ACTIVITY</scope>
</reference>
<reference key="74">
    <citation type="journal article" date="2016" name="Science">
        <title>ADP-ribose-derived nuclear ATP synthesis by NUDIX5 is required for chromatin remodeling.</title>
        <authorList>
            <person name="Wright R.H."/>
            <person name="Lioutas A."/>
            <person name="Le Dily F."/>
            <person name="Soronellas D."/>
            <person name="Pohl A."/>
            <person name="Bonet J."/>
            <person name="Nacht A.S."/>
            <person name="Samino S."/>
            <person name="Font-Mateu J."/>
            <person name="Vicent G.P."/>
            <person name="Wierer M."/>
            <person name="Trabado M.A."/>
            <person name="Schelhorn C."/>
            <person name="Carolis C."/>
            <person name="Macias M.J."/>
            <person name="Yanes O."/>
            <person name="Oliva B."/>
            <person name="Beato M."/>
        </authorList>
    </citation>
    <scope>FUNCTION</scope>
</reference>
<reference key="75">
    <citation type="journal article" date="2017" name="Mol. Cell">
        <title>Serine ADP-ribosylation depends on HPF1.</title>
        <authorList>
            <person name="Bonfiglio J.J."/>
            <person name="Fontana P."/>
            <person name="Zhang Q."/>
            <person name="Colby T."/>
            <person name="Gibbs-Seymour I."/>
            <person name="Atanassov I."/>
            <person name="Bartlett E."/>
            <person name="Zaja R."/>
            <person name="Ahel I."/>
            <person name="Matic I."/>
        </authorList>
    </citation>
    <scope>FUNCTION</scope>
    <scope>CATALYTIC ACTIVITY</scope>
    <scope>INTERACTION WITH HPF1</scope>
    <scope>ADP-RIBOSYLATION AT SER-499; SER-507 AND SER-519</scope>
    <scope>MUTAGENESIS OF SER-499; SER-507 AND SER-519</scope>
</reference>
<reference key="76">
    <citation type="journal article" date="2017" name="Mol. Cell">
        <title>A Poly-ADP-Ribose trigger releases the auto-inhibition of a chromatin remodeling oncogene.</title>
        <authorList>
            <person name="Singh H.R."/>
            <person name="Nardozza A.P."/>
            <person name="Moeller I.R."/>
            <person name="Knobloch G."/>
            <person name="Kistemaker H.A.V."/>
            <person name="Hassler M."/>
            <person name="Harrer N."/>
            <person name="Blessing C."/>
            <person name="Eustermann S."/>
            <person name="Kotthoff C."/>
            <person name="Huet S."/>
            <person name="Mueller-Planitz F."/>
            <person name="Filippov D.V."/>
            <person name="Timinszky G."/>
            <person name="Rand K.D."/>
            <person name="Ladurner A.G."/>
        </authorList>
    </citation>
    <scope>INTERACTION WITH CHD1L</scope>
    <scope>MUTAGENESIS OF GLU-988</scope>
</reference>
<reference key="77">
    <citation type="journal article" date="2017" name="Nat. Struct. Mol. Biol.">
        <title>Site-specific mapping of the human SUMO proteome reveals co-modification with phosphorylation.</title>
        <authorList>
            <person name="Hendriks I.A."/>
            <person name="Lyon D."/>
            <person name="Young C."/>
            <person name="Jensen L.J."/>
            <person name="Vertegaal A.C."/>
            <person name="Nielsen M.L."/>
        </authorList>
    </citation>
    <scope>SUMOYLATION [LARGE SCALE ANALYSIS] AT LYS-192; LYS-203; LYS-249; LYS-467; LYS-486; LYS-512; LYS-528 AND LYS-748</scope>
    <scope>IDENTIFICATION BY MASS SPECTROMETRY [LARGE SCALE ANALYSIS]</scope>
</reference>
<reference key="78">
    <citation type="journal article" date="2018" name="Cell Rep.">
        <title>Interplay of histone marks with serine ADP-ribosylation.</title>
        <authorList>
            <person name="Bartlett E."/>
            <person name="Bonfiglio J.J."/>
            <person name="Prokhorova E."/>
            <person name="Colby T."/>
            <person name="Zobel F."/>
            <person name="Ahel I."/>
            <person name="Matic I."/>
        </authorList>
    </citation>
    <scope>FUNCTION</scope>
    <scope>CATALYTIC ACTIVITY</scope>
</reference>
<reference key="79">
    <citation type="journal article" date="2018" name="EMBO Rep.">
        <title>Comprehensive ADP-ribosylome analysis identifies tyrosine as an ADP-ribose acceptor site.</title>
        <authorList>
            <person name="Leslie Pedrioli D.M."/>
            <person name="Leutert M."/>
            <person name="Bilan V."/>
            <person name="Nowak K."/>
            <person name="Gunasekera K."/>
            <person name="Ferrari E."/>
            <person name="Imhof R."/>
            <person name="Malmstroem L."/>
            <person name="Hottiger M.O."/>
        </authorList>
    </citation>
    <scope>FUNCTION</scope>
    <scope>CATALYTIC ACTIVITY</scope>
    <scope>INTERACTION WITH HPF1</scope>
    <scope>ADP-RIBOSYLATION AT SER-499; SER-504; SER-507 AND SER-519</scope>
</reference>
<reference key="80">
    <citation type="journal article" date="2018" name="Nature">
        <title>Nuclear cGAS suppresses DNA repair and promotes tumorigenesis.</title>
        <authorList>
            <person name="Liu H."/>
            <person name="Zhang H."/>
            <person name="Wu X."/>
            <person name="Ma D."/>
            <person name="Wu J."/>
            <person name="Wang L."/>
            <person name="Jiang Y."/>
            <person name="Fei Y."/>
            <person name="Zhu C."/>
            <person name="Tan R."/>
            <person name="Jungblut P."/>
            <person name="Pei G."/>
            <person name="Dorhoi A."/>
            <person name="Yan Q."/>
            <person name="Zhang F."/>
            <person name="Zheng R."/>
            <person name="Liu S."/>
            <person name="Liang H."/>
            <person name="Liu Z."/>
            <person name="Yang H."/>
            <person name="Chen J."/>
            <person name="Wang P."/>
            <person name="Tang T."/>
            <person name="Peng W."/>
            <person name="Hu Z."/>
            <person name="Xu Z."/>
            <person name="Huang X."/>
            <person name="Wang J."/>
            <person name="Li H."/>
            <person name="Zhou Y."/>
            <person name="Liu F."/>
            <person name="Yan D."/>
            <person name="Kaufmann S.H.E."/>
            <person name="Chen C."/>
            <person name="Mao Z."/>
            <person name="Ge B."/>
        </authorList>
    </citation>
    <scope>FUNCTION</scope>
    <scope>INTERACTION WITH CGAS AND TIMELESS</scope>
</reference>
<reference key="81">
    <citation type="journal article" date="2018" name="Nat. Commun.">
        <title>PARP2 mediates branched poly ADP-ribosylation in response to DNA damage.</title>
        <authorList>
            <person name="Chen Q."/>
            <person name="Kassab M.A."/>
            <person name="Dantzer F."/>
            <person name="Yu X."/>
        </authorList>
    </citation>
    <scope>FUNCTION</scope>
    <scope>MUTAGENESIS OF GLU-988</scope>
</reference>
<reference key="82">
    <citation type="journal article" date="2019" name="PLoS Biol.">
        <title>KHDC3L mutation causes recurrent pregnancy loss by inducing genomic instability of human early embryonic cells.</title>
        <authorList>
            <person name="Zhang W."/>
            <person name="Chen Z."/>
            <person name="Zhang D."/>
            <person name="Zhao B."/>
            <person name="Liu L."/>
            <person name="Xie Z."/>
            <person name="Yao Y."/>
            <person name="Zheng P."/>
        </authorList>
    </citation>
    <scope>INTERACTION WITH KHDC3L</scope>
</reference>
<reference key="83">
    <citation type="journal article" date="2020" name="Cell">
        <title>An HPF1/PARP1-based chemical biology strategy for exploring ADP-ribosylation.</title>
        <authorList>
            <person name="Bonfiglio J.J."/>
            <person name="Leidecker O."/>
            <person name="Dauben H."/>
            <person name="Longarini E.J."/>
            <person name="Colby T."/>
            <person name="San Segundo-Acosta P."/>
            <person name="Perez K.A."/>
            <person name="Matic I."/>
        </authorList>
    </citation>
    <scope>FUNCTION</scope>
    <scope>CATALYTIC ACTIVITY</scope>
    <scope>ADP-RIBOSYLATION AT SER-499</scope>
</reference>
<reference key="84">
    <citation type="journal article" date="2016" name="Cell Rep.">
        <title>JNK phosphorylates SIRT6 to stimulate DNA double-strand break repair in response to oxidative stress by recruiting PARP1 to DNA Breaks.</title>
        <authorList>
            <person name="Van Meter M."/>
            <person name="Simon M."/>
            <person name="Tombline G."/>
            <person name="May A."/>
            <person name="Morello T.D."/>
            <person name="Hubbard B.P."/>
            <person name="Bredbenner K."/>
            <person name="Park R."/>
            <person name="Sinclair D.A."/>
            <person name="Bohr V.A."/>
            <person name="Gorbunova V."/>
            <person name="Seluanov A."/>
        </authorList>
    </citation>
    <scope>ADP-RIBOSYLATION AT LYS-521</scope>
    <scope>SUBCELLULAR LOCATION</scope>
</reference>
<reference key="85">
    <citation type="journal article" date="2016" name="Science">
        <title>Chemical genetic discovery of PARP targets reveals a role for PARP-1 in transcription elongation.</title>
        <authorList>
            <person name="Gibson B.A."/>
            <person name="Zhang Y."/>
            <person name="Jiang H."/>
            <person name="Hussey K.M."/>
            <person name="Shrimp J.H."/>
            <person name="Lin H."/>
            <person name="Schwede F."/>
            <person name="Yu Y."/>
            <person name="Kraus W.L."/>
        </authorList>
    </citation>
    <scope>FUNCTION</scope>
    <scope>CATALYTIC ACTIVITY</scope>
</reference>
<reference key="86">
    <citation type="journal article" date="2019" name="Int. J. Cancer">
        <title>Increased PARP1-DNA binding due to autoPARylation inhibition of PARP1 on DNA rather than PARP1-DNA trapping is correlated with PARP1 inhibitor's cytotoxicity.</title>
        <authorList>
            <person name="Chen H.D."/>
            <person name="Chen C.H."/>
            <person name="Wang Y.T."/>
            <person name="Guo N."/>
            <person name="Tian Y.N."/>
            <person name="Huan X.J."/>
            <person name="Song S.S."/>
            <person name="He J.X."/>
            <person name="Miao Z.H."/>
        </authorList>
    </citation>
    <scope>SUBCELLULAR LOCATION</scope>
    <scope>ADP-RIBOSYLATION</scope>
</reference>
<reference key="87">
    <citation type="journal article" date="2019" name="Nat. Commun.">
        <title>PARP1 exhibits enhanced association and catalytic efficiency with gammaH2A.X-nucleosome.</title>
        <authorList>
            <person name="Sharma D."/>
            <person name="De Falco L."/>
            <person name="Padavattan S."/>
            <person name="Rao C."/>
            <person name="Geifman-Shochat S."/>
            <person name="Liu C.F."/>
            <person name="Davey C.A."/>
        </authorList>
    </citation>
    <scope>INTERACTION WITH NUCLEOSOMES</scope>
</reference>
<reference key="88">
    <citation type="journal article" date="2019" name="Nat. Commun.">
        <title>Barrier-to-autointegration factor 1 (Banf1) regulates poly [ADP-ribose] polymerase 1 (PARP1) activity following oxidative DNA damage.</title>
        <authorList>
            <person name="Bolderson E."/>
            <person name="Burgess J.T."/>
            <person name="Li J."/>
            <person name="Gandhi N.S."/>
            <person name="Boucher D."/>
            <person name="Croft L.V."/>
            <person name="Beard S."/>
            <person name="Plowman J.J."/>
            <person name="Suraweera A."/>
            <person name="Adams M.N."/>
            <person name="Naqi A."/>
            <person name="Zhang S.D."/>
            <person name="Sinclair D.A."/>
            <person name="O'Byrne K.J."/>
            <person name="Richard D.J."/>
        </authorList>
    </citation>
    <scope>FUNCTION</scope>
    <scope>INTERACTION WITH BANF1</scope>
</reference>
<reference key="89">
    <citation type="journal article" date="2020" name="Elife">
        <title>PARP1 inhibitors trigger innate immunity via PARP1 trapping-induced DNA damage response.</title>
        <authorList>
            <person name="Kim C."/>
            <person name="Wang X.D."/>
            <person name="Yu Y."/>
        </authorList>
    </citation>
    <scope>FUNCTION</scope>
    <scope>ACTIVITY REGULATION</scope>
</reference>
<reference key="90">
    <citation type="journal article" date="2020" name="Nature">
        <title>HPF1 completes the PARP active site for DNA damage-induced ADP-ribosylation.</title>
        <authorList>
            <person name="Suskiewicz M.J."/>
            <person name="Zobel F."/>
            <person name="Ogden T.E.H."/>
            <person name="Fontana P."/>
            <person name="Ariza A."/>
            <person name="Yang J.C."/>
            <person name="Zhu K."/>
            <person name="Bracken L."/>
            <person name="Hawthorne W.J."/>
            <person name="Ahel D."/>
            <person name="Neuhaus D."/>
            <person name="Ahel I."/>
        </authorList>
    </citation>
    <scope>FUNCTION</scope>
    <scope>CATALYTIC ACTIVITY</scope>
    <scope>ACTIVE SITE</scope>
    <scope>INTERACTION WITH HPF1</scope>
    <scope>MUTAGENESIS OF HIS-826; GLU-988 AND 1013-LEU-TRP-1014</scope>
</reference>
<reference key="91">
    <citation type="journal article" date="2020" name="Nat. Commun.">
        <title>Real-time monitoring of PARP1-dependent PARylation by ATR-FTIR spectroscopy.</title>
        <authorList>
            <person name="Krueger A."/>
            <person name="Buerkle A."/>
            <person name="Hauser K."/>
            <person name="Mangerich A."/>
        </authorList>
    </citation>
    <scope>FUNCTION</scope>
    <scope>CATALYTIC ACTIVITY</scope>
    <scope>ACTIVITY REGULATION</scope>
    <scope>SUBCELLULAR LOCATION</scope>
    <scope>ADP-RIBOSYLATION</scope>
</reference>
<reference key="92">
    <citation type="journal article" date="2020" name="PLoS Pathog.">
        <title>PARP1-cGAS-NF-kappaB pathway of proinflammatory macrophage activation by extracellular vesicles released during Trypanosoma cruzi infection and Chagas disease.</title>
        <authorList>
            <person name="Choudhuri S."/>
            <person name="Garg N.J."/>
        </authorList>
    </citation>
    <scope>FUNCTION</scope>
</reference>
<reference key="93">
    <citation type="journal article" date="2021" name="Commun. Biol.">
        <title>Dual function of HPF1 in the modulation of PARP1 and PARP2 activities.</title>
        <authorList>
            <person name="Kurgina T.A."/>
            <person name="Moor N.A."/>
            <person name="Kutuzov M.M."/>
            <person name="Naumenko K.N."/>
            <person name="Ukraintsev A.A."/>
            <person name="Lavrik O.I."/>
        </authorList>
    </citation>
    <scope>FUNCTION</scope>
</reference>
<reference key="94">
    <citation type="journal article" date="2021" name="DNA Repair">
        <title>PARP1-mediated PARylation of TonEBP prevents R-loop-associated DNA damage.</title>
        <authorList>
            <person name="Ye B.J."/>
            <person name="Kang H.J."/>
            <person name="Lee-Kwon W."/>
            <person name="Kwon H.M."/>
            <person name="Choi S.Y."/>
        </authorList>
    </citation>
    <scope>FUNCTION</scope>
</reference>
<reference key="95">
    <citation type="journal article" date="2021" name="Elife">
        <title>HPF1 and nucleosomes mediate a dramatic switch in activity of PARP1 from polymerase to hydrolase.</title>
        <authorList>
            <person name="Rudolph J."/>
            <person name="Roberts G."/>
            <person name="Muthurajan U.M."/>
            <person name="Luger K."/>
        </authorList>
    </citation>
    <scope>FUNCTION</scope>
    <scope>CATALYTIC ACTIVITY</scope>
</reference>
<reference key="96">
    <citation type="journal article" date="2021" name="Elife">
        <title>Serine ADP-ribosylation marks nucleosomes for ALC1-dependent chromatin remodeling.</title>
        <authorList>
            <person name="Mohapatra J."/>
            <person name="Tashiro K."/>
            <person name="Beckner R.L."/>
            <person name="Sierra J."/>
            <person name="Kilgore J.A."/>
            <person name="Williams N.S."/>
            <person name="Liszczak G."/>
        </authorList>
    </citation>
    <scope>FUNCTION</scope>
</reference>
<reference key="97">
    <citation type="journal article" date="2021" name="J. Biol. Chem.">
        <title>The 89-kDa PARP1 cleavage fragment serves as a cytoplasmic PAR carrier to induce AIF-mediated apoptosis.</title>
        <authorList>
            <person name="Mashimo M."/>
            <person name="Onishi M."/>
            <person name="Uno A."/>
            <person name="Tanimichi A."/>
            <person name="Nobeyama A."/>
            <person name="Mori M."/>
            <person name="Yamada S."/>
            <person name="Negi S."/>
            <person name="Bu X."/>
            <person name="Kato J."/>
            <person name="Moss J."/>
            <person name="Sanada N."/>
            <person name="Kizu R."/>
            <person name="Fujii T."/>
        </authorList>
    </citation>
    <scope>PROTEOLYTIC CLEAVAGE</scope>
    <scope>SUBCELLULAR LOCATION</scope>
    <scope>FUNCTION (POLY [ADP-RIBOSE] POLYMERASE 1</scope>
    <scope>PROCESSED C-TERMINUS)</scope>
    <scope>INTERACTION WITH AIFM1</scope>
</reference>
<reference key="98">
    <citation type="journal article" date="2021" name="Mol. Cell">
        <title>CARM1 regulates replication fork speed and stress response by stimulating PARP1.</title>
        <authorList>
            <person name="Genois M.M."/>
            <person name="Gagne J.P."/>
            <person name="Yasuhara T."/>
            <person name="Jackson J."/>
            <person name="Saxena S."/>
            <person name="Langelier M.F."/>
            <person name="Ahel I."/>
            <person name="Bedford M.T."/>
            <person name="Pascal J.M."/>
            <person name="Vindigni A."/>
            <person name="Poirier G.G."/>
            <person name="Zou L."/>
        </authorList>
    </citation>
    <scope>FUNCTION</scope>
    <scope>SUBCELLULAR LOCATION</scope>
    <scope>INTERACTION WITH CARM1</scope>
</reference>
<reference key="99">
    <citation type="journal article" date="2021" name="Mol. Cell">
        <title>XRCC1 prevents toxic PARP1 trapping during DNA base excision repair.</title>
        <authorList>
            <person name="Demin A.A."/>
            <person name="Hirota K."/>
            <person name="Tsuda M."/>
            <person name="Adamowicz M."/>
            <person name="Hailstone R."/>
            <person name="Brazina J."/>
            <person name="Gittens W."/>
            <person name="Kalasova I."/>
            <person name="Shao Z."/>
            <person name="Zha S."/>
            <person name="Sasanuma H."/>
            <person name="Hanzlikova H."/>
            <person name="Takeda S."/>
            <person name="Caldecott K.W."/>
        </authorList>
    </citation>
    <scope>INTERACTION WITH XRCC1</scope>
</reference>
<reference key="100">
    <citation type="journal article" date="2021" name="Nat. Cell Biol.">
        <title>XRCC1 protects transcription from toxic PARP1 activity during DNA base excision repair.</title>
        <authorList>
            <person name="Adamowicz M."/>
            <person name="Hailstone R."/>
            <person name="Demin A.A."/>
            <person name="Komulainen E."/>
            <person name="Hanzlikova H."/>
            <person name="Brazina J."/>
            <person name="Gautam A."/>
            <person name="Wells S.E."/>
            <person name="Caldecott K.W."/>
        </authorList>
    </citation>
    <scope>INTERACTION WITH XRCC1</scope>
</reference>
<reference key="101">
    <citation type="journal article" date="2021" name="Nat. Commun.">
        <title>Serine-linked PARP1 auto-modification controls PARP inhibitor response.</title>
        <authorList>
            <person name="Prokhorova E."/>
            <person name="Zobel F."/>
            <person name="Smith R."/>
            <person name="Zentout S."/>
            <person name="Gibbs-Seymour I."/>
            <person name="Schuetzenhofer K."/>
            <person name="Peters A."/>
            <person name="Groslambert J."/>
            <person name="Zorzini V."/>
            <person name="Agnew T."/>
            <person name="Brognard J."/>
            <person name="Nielsen M.L."/>
            <person name="Ahel D."/>
            <person name="Huet S."/>
            <person name="Suskiewicz M.J."/>
            <person name="Ahel I."/>
        </authorList>
    </citation>
    <scope>FUNCTION</scope>
    <scope>CATALYTIC ACTIVITY</scope>
    <scope>ACTIVITY REGULATION</scope>
    <scope>ADP-RIBOSYLATION AT SER-499; SER-507 AND SER-519</scope>
</reference>
<reference key="102">
    <citation type="journal article" date="2021" name="Nat. Commun.">
        <title>The regulatory landscape of the human HPF1- and ARH3-dependent ADP-ribosylome.</title>
        <authorList>
            <person name="Hendriks I.A."/>
            <person name="Buch-Larsen S.C."/>
            <person name="Prokhorova E."/>
            <person name="Elsborg J.D."/>
            <person name="Rebak A.K.L.F.S."/>
            <person name="Zhu K."/>
            <person name="Ahel D."/>
            <person name="Lukas C."/>
            <person name="Ahel I."/>
            <person name="Nielsen M.L."/>
        </authorList>
    </citation>
    <scope>FUNCTION</scope>
    <scope>CATALYTIC ACTIVITY</scope>
    <scope>ACTIVITY REGULATION</scope>
    <scope>SUBCELLULAR LOCATION</scope>
    <scope>ADP-RIBOSYLATION AT SER-499; SER-507 AND SER-519</scope>
    <scope>MUTAGENESIS OF SER-499; SER-507 AND SER-519</scope>
</reference>
<reference key="103">
    <citation type="journal article" date="2021" name="Nat. Commun.">
        <title>SPINDOC binds PARP1 to facilitate PARylation.</title>
        <authorList>
            <person name="Yang F."/>
            <person name="Chen J."/>
            <person name="Liu B."/>
            <person name="Gao G."/>
            <person name="Sebastian M."/>
            <person name="Jeter C."/>
            <person name="Shen J."/>
            <person name="Person M.D."/>
            <person name="Bedford M.T."/>
        </authorList>
    </citation>
    <scope>FUNCTION</scope>
    <scope>INTERACTION WITH SPINDOC</scope>
</reference>
<reference key="104">
    <citation type="journal article" date="2021" name="Nat. Commun.">
        <title>HPF1 dynamically controls the PARP1/2 balance between initiating and elongating ADP-ribose modifications.</title>
        <authorList>
            <person name="Langelier M.F."/>
            <person name="Billur R."/>
            <person name="Sverzhinsky A."/>
            <person name="Black B.E."/>
            <person name="Pascal J.M."/>
        </authorList>
    </citation>
    <scope>FUNCTION</scope>
    <scope>SUBCELLULAR LOCATION</scope>
    <scope>MUTAGENESIS OF HIS-826 AND ARG-865</scope>
</reference>
<reference key="105">
    <citation type="journal article" date="2021" name="Proc. Natl. Acad. Sci. U.S.A.">
        <title>Multiple roles for PARP1 in ALC1-dependent nucleosome remodeling.</title>
        <authorList>
            <person name="Ooi S.K."/>
            <person name="Sato S."/>
            <person name="Tomomori-Sato C."/>
            <person name="Zhang Y."/>
            <person name="Wen Z."/>
            <person name="Banks C.A.S."/>
            <person name="Washburn M.P."/>
            <person name="Unruh J.R."/>
            <person name="Florens L."/>
            <person name="Conaway R.C."/>
            <person name="Conaway J.W."/>
        </authorList>
    </citation>
    <scope>FUNCTION</scope>
</reference>
<reference key="106">
    <citation type="journal article" date="2022" name="Genes Cells">
        <title>PARP1 is activated by membrane damage and is involved in membrane repair through poly(ADP-ribosyl)ation.</title>
        <authorList>
            <person name="Mashimo M."/>
            <person name="Kita M."/>
            <person name="Nobeyama A."/>
            <person name="Nomura A."/>
            <person name="Fujii T."/>
        </authorList>
    </citation>
    <scope>FUNCTION</scope>
</reference>
<reference key="107">
    <citation type="journal article" date="2022" name="J. Clin. Invest.">
        <title>RECON syndrome is a genome instability disorder caused by mutations in the DNA helicase RECQL1.</title>
        <authorList>
            <person name="Abu-Libdeh B."/>
            <person name="Jhujh S.S."/>
            <person name="Dhar S."/>
            <person name="Sommers J.A."/>
            <person name="Datta A."/>
            <person name="Longo G.M."/>
            <person name="Grange L.J."/>
            <person name="Reynolds J.J."/>
            <person name="Cooke S.L."/>
            <person name="McNee G.S."/>
            <person name="Hollingworth R."/>
            <person name="Woodward B.L."/>
            <person name="Ganesh A.N."/>
            <person name="Smerdon S.J."/>
            <person name="Nicolae C.M."/>
            <person name="Durlacher-Betzer K."/>
            <person name="Molho-Pessach V."/>
            <person name="Abu-Libdeh A."/>
            <person name="Meiner V."/>
            <person name="Moldovan G.L."/>
            <person name="Roukos V."/>
            <person name="Harel T."/>
            <person name="Brosh R.M. Jr."/>
            <person name="Stewart G.S."/>
        </authorList>
    </citation>
    <scope>INTERACTION WITH RECQL</scope>
</reference>
<reference key="108">
    <citation type="journal article" date="2022" name="Mol. Cell">
        <title>SPARCLE, a p53-induced lncRNA, controls apoptosis after genotoxic stress by promoting PARP-1 cleavage.</title>
        <authorList>
            <person name="Meza-Sosa K.F."/>
            <person name="Miao R."/>
            <person name="Navarro F."/>
            <person name="Zhang Z."/>
            <person name="Zhang Y."/>
            <person name="Hu J.J."/>
            <person name="Hartford C.C.R."/>
            <person name="Li X.L."/>
            <person name="Pedraza-Alva G."/>
            <person name="Perez-Martinez L."/>
            <person name="Lal A."/>
            <person name="Wu H."/>
            <person name="Lieberman J."/>
        </authorList>
    </citation>
    <scope>PROTEOLYTIC CLEAVAGE</scope>
    <scope>FUNCTION (POLY [ADP-RIBOSE] POLYMERASE 1</scope>
    <scope>PROCESSED N-TERMINUS)</scope>
    <scope>SUBCELLULAR LOCATION</scope>
</reference>
<reference key="109">
    <citation type="journal article" date="2022" name="Mol. Cell">
        <title>Micropeptide PACMP inhibition elicits synthetic lethal effects by decreasing CtIP and poly(ADP-ribosyl)ation.</title>
        <authorList>
            <person name="Zhang C."/>
            <person name="Zhou B."/>
            <person name="Gu F."/>
            <person name="Liu H."/>
            <person name="Wu H."/>
            <person name="Yao F."/>
            <person name="Zheng H."/>
            <person name="Fu H."/>
            <person name="Chong W."/>
            <person name="Cai S."/>
            <person name="Huang M."/>
            <person name="Ma X."/>
            <person name="Guo Z."/>
            <person name="Li T."/>
            <person name="Deng W."/>
            <person name="Zheng M."/>
            <person name="Ji Q."/>
            <person name="Zhao Y."/>
            <person name="Ma Y."/>
            <person name="Wang Q.E."/>
            <person name="Tang T.S."/>
            <person name="Guo C."/>
        </authorList>
    </citation>
    <scope>INTERACTION WITH PACMP</scope>
</reference>
<reference key="110">
    <citation type="journal article" date="2022" name="Mol. Cell">
        <title>Cytoplasmic PARP1 links the genome instability to the inhibition of antiviral immunity through PARylating cGAS.</title>
        <authorList>
            <person name="Wang F."/>
            <person name="Zhao M."/>
            <person name="Chang B."/>
            <person name="Zhou Y."/>
            <person name="Wu X."/>
            <person name="Ma M."/>
            <person name="Liu S."/>
            <person name="Cao Y."/>
            <person name="Zheng M."/>
            <person name="Dang Y."/>
            <person name="Xu J."/>
            <person name="Chen L."/>
            <person name="Liu T."/>
            <person name="Tang F."/>
            <person name="Ren Y."/>
            <person name="Xu Z."/>
            <person name="Mao Z."/>
            <person name="Huang K."/>
            <person name="Luo M."/>
            <person name="Li J."/>
            <person name="Liu H."/>
            <person name="Ge B."/>
        </authorList>
    </citation>
    <scope>FUNCTION</scope>
    <scope>CATALYTIC ACTIVITY</scope>
    <scope>SUBCELLULAR LOCATION</scope>
    <scope>PHOSPHORYLATION AT THR-594</scope>
    <scope>MUTAGENESIS OF SER-25; THR-325 AND THR-594</scope>
</reference>
<reference key="111">
    <citation type="journal article" date="2022" name="Nat. Cell Biol.">
        <title>The ubiquitin-dependent ATPase p97 removes cytotoxic trapped PARP1 from chromatin.</title>
        <authorList>
            <person name="Krastev D.B."/>
            <person name="Li S."/>
            <person name="Sun Y."/>
            <person name="Wicks A.J."/>
            <person name="Hoslett G."/>
            <person name="Weekes D."/>
            <person name="Badder L.M."/>
            <person name="Knight E.G."/>
            <person name="Marlow R."/>
            <person name="Pardo M.C."/>
            <person name="Yu L."/>
            <person name="Talele T.T."/>
            <person name="Bartek J."/>
            <person name="Choudhary J.S."/>
            <person name="Pommier Y."/>
            <person name="Pettitt S.J."/>
            <person name="Tutt A.N.J."/>
            <person name="Ramadan K."/>
            <person name="Lord C.J."/>
        </authorList>
    </citation>
    <scope>ACTIVITY REGULATION</scope>
    <scope>SUBCELLULAR LOCATION</scope>
    <scope>SUMOYLATION</scope>
    <scope>UBIQUITINATION</scope>
    <scope>INTERACTION WITH VCP</scope>
    <scope>MUTAGENESIS OF 119-LYS-SER-120</scope>
</reference>
<reference key="112">
    <citation type="journal article" date="2022" name="Nat. Cell Biol.">
        <title>Poly(ADP-ribosylation) of P-TEFb by PARP1 disrupts phase separation to inhibit global transcription after DNA damage.</title>
        <authorList>
            <person name="Fu H."/>
            <person name="Liu R."/>
            <person name="Jia Z."/>
            <person name="Li R."/>
            <person name="Zhu F."/>
            <person name="Zhu W."/>
            <person name="Shao Y."/>
            <person name="Jin Y."/>
            <person name="Xue Y."/>
            <person name="Huang J."/>
            <person name="Luo K."/>
            <person name="Gao X."/>
            <person name="Lu H."/>
            <person name="Zhou Q."/>
        </authorList>
    </citation>
    <scope>FUNCTION</scope>
    <scope>CATALYTIC ACTIVITY</scope>
</reference>
<reference key="113">
    <citation type="journal article" date="2023" name="Nucleic Acids Res.">
        <title>ZNF432 stimulates PARylation and inhibits DNA resection to balance PARPi sensitivity and resistance.</title>
        <authorList>
            <person name="O'Sullivan J."/>
            <person name="Kothari C."/>
            <person name="Caron M.C."/>
            <person name="Gagne J.P."/>
            <person name="Jin Z."/>
            <person name="Nonfoux L."/>
            <person name="Beneyton A."/>
            <person name="Coulombe Y."/>
            <person name="Thomas M."/>
            <person name="Atalay N."/>
            <person name="Meng X.W."/>
            <person name="Milano L."/>
            <person name="Jean D."/>
            <person name="Boisvert F.M."/>
            <person name="Kaufmann S.H."/>
            <person name="Hendzel M.J."/>
            <person name="Masson J.Y."/>
            <person name="Poirier G.G."/>
        </authorList>
    </citation>
    <scope>INTERACTION WITH ZNF432</scope>
</reference>
<reference key="114">
    <citation type="submission" date="2007-04" db="PDB data bank">
        <title>Solution structure of the first ZF-PARP domain, of the BRCT domain and of the WGR domain of human poly(ADP-ribose)polymerase-1.</title>
        <authorList>
            <consortium name="RIKEN structural genomics initiative (RSGI)"/>
        </authorList>
    </citation>
    <scope>STRUCTURE BY NMR OF 1-93 AND 385-643</scope>
</reference>
<reference evidence="127" key="115">
    <citation type="journal article" date="2008" name="J. Biol. Chem.">
        <title>A third zinc-binding domain of human poly(ADP-ribose) polymerase-1 coordinates DNA-dependent enzyme activation.</title>
        <authorList>
            <person name="Langelier M.F."/>
            <person name="Servent K.M."/>
            <person name="Rogers E.E."/>
            <person name="Pascal J.M."/>
        </authorList>
    </citation>
    <scope>X-RAY CRYSTALLOGRAPHY (1.70 ANGSTROMS) OF 216-366 IN COMPLEX WITH ZINC</scope>
    <scope>FUNCTION</scope>
    <scope>MUTAGENESIS OF CYS-298</scope>
</reference>
<reference evidence="128 129 130 131" key="116">
    <citation type="journal article" date="2011" name="J. Biol. Chem.">
        <title>Crystal structures of poly(ADP-ribose) polymerase-1 (PARP-1) zinc fingers bound to DNA: structural and functional insights into DNA-dependent PARP-1 activity.</title>
        <authorList>
            <person name="Langelier M.F."/>
            <person name="Planck J.L."/>
            <person name="Roy S."/>
            <person name="Pascal J.M."/>
        </authorList>
    </citation>
    <scope>X-RAY CRYSTALLOGRAPHY (2.40 ANGSTROMS) OF 2-96 IN COMPLEX WITH ZINC</scope>
    <scope>MUTAGENESIS OF ARG-18; ARG-34; GLN-40; SER-41; PRO-42; MET-43; 44-PHE--VAL-48; PHE-44; ASP-45; ARG-122 AND 151-LEU--ILE-154</scope>
</reference>
<reference evidence="132" key="117">
    <citation type="journal article" date="2012" name="Nat. Struct. Mol. Biol.">
        <title>The zinc-finger domains of PARP1 cooperate to recognize DNA strand breaks.</title>
        <authorList>
            <person name="Ali A.A.E."/>
            <person name="Timinszky G."/>
            <person name="Arribas-Bosacoma R."/>
            <person name="Kozlowski M."/>
            <person name="Hassa P.O."/>
            <person name="Hassler M."/>
            <person name="Ladurner A.G."/>
            <person name="Pearl L.H."/>
            <person name="Oliver A.W."/>
        </authorList>
    </citation>
    <scope>X-RAY CRYSTALLOGRAPHY (3.10 ANGSTROMS) OF 5-202 IN COMPLEX WITH ZINC</scope>
    <scope>SUBUNIT</scope>
    <scope>DOMAIN</scope>
    <scope>SUBCELLULAR LOCATION</scope>
    <scope>MUTAGENESIS OF ARG-34; MET-43; PHE-44 AND ARG-138</scope>
</reference>
<reference evidence="133" key="118">
    <citation type="journal article" date="2012" name="Science">
        <title>Structural basis for DNA damage-dependent poly(ADP-ribosyl)ation by human PARP-1.</title>
        <authorList>
            <person name="Langelier M.F."/>
            <person name="Planck J.L."/>
            <person name="Roy S."/>
            <person name="Pascal J.M."/>
        </authorList>
    </citation>
    <scope>X-RAY CRYSTALLOGRAPHY (3.25 ANGSTROMS) OF 1-96; 216-366 AND 518-1014 IN COMPLEX WITH ZINC</scope>
    <scope>FUNCTION</scope>
    <scope>ACTIVITY REGULATION</scope>
    <scope>ADP-RIBOSYLATION</scope>
    <scope>MUTAGENESIS OF ASP-45; TRP-246; TRP-318; ASN-567; TRP-589; ARG-591; LYS-633; 698-LEU--LEU-701; LEU-713; LEU-765 AND LEU-768</scope>
</reference>
<reference evidence="137" key="119">
    <citation type="journal article" date="2015" name="Mol. Cell">
        <title>Timeless interacts with PARP-1 to promote homologous recombination repair.</title>
        <authorList>
            <person name="Xie S."/>
            <person name="Mortusewicz O."/>
            <person name="Ma H.T."/>
            <person name="Herr P."/>
            <person name="Poon R.Y."/>
            <person name="Helleday T."/>
            <person name="Qian C."/>
        </authorList>
    </citation>
    <scope>X-RAY CRYSTALLOGRAPHY (2.09 ANGSTROMS) OF 661-1014 IN COMPLEX WITH TIMELESS</scope>
    <scope>FUNCTION</scope>
    <scope>CATALYTIC ACTIVITY</scope>
    <scope>INTERACTION WITH TIMELESS</scope>
    <scope>SUBCELLULAR LOCATION</scope>
    <scope>MUTAGENESIS OF 490-VAL--VAL-493; 850-PRO-PHE-851 AND ASP-993</scope>
</reference>
<reference evidence="126" key="120">
    <citation type="journal article" date="2015" name="Mol. Cell">
        <title>Structural basis of detection and signaling of DNA single-strand breaks by human PARP-1.</title>
        <authorList>
            <person name="Eustermann S."/>
            <person name="Wu W.F."/>
            <person name="Langelier M.F."/>
            <person name="Yang J.C."/>
            <person name="Easton L.E."/>
            <person name="Riccio A.A."/>
            <person name="Pascal J.M."/>
            <person name="Neuhaus D."/>
        </authorList>
    </citation>
    <scope>STRUCTURE BY NMR OF 1-214</scope>
    <scope>FUNCTION</scope>
    <scope>ACTIVITY REGULATION</scope>
    <scope>DOMAIN</scope>
    <scope>MUTAGENESIS OF TRP-246; TRP-318; ASN-567; TRP-589; ARG-591 AND LYS-633</scope>
</reference>
<reference evidence="138" key="121">
    <citation type="journal article" date="2015" name="Mol. Cell">
        <title>PARP-1 activation requires local unfolding of an autoinhibitory domain.</title>
        <authorList>
            <person name="Dawicki-McKenna J.M."/>
            <person name="Langelier M.F."/>
            <person name="DeNizio J.E."/>
            <person name="Riccio A.A."/>
            <person name="Cao C.D."/>
            <person name="Karch K.R."/>
            <person name="McCauley M."/>
            <person name="Steffen J.D."/>
            <person name="Black B.E."/>
            <person name="Pascal J.M."/>
        </authorList>
    </citation>
    <scope>X-RAY CRYSTALLOGRAPHY (2.60 ANGSTROMS) OF 788-1012</scope>
    <scope>FUNCTION</scope>
    <scope>ACTIVITY REGULATION</scope>
    <scope>DOMAIN</scope>
    <scope>MUTAGENESIS OF TRP-318; LEU-713; ALA-774; ALA-870; GLY-871; PRO-882; 883-GLU--THR-887 AND PRO-885</scope>
</reference>
<reference evidence="139" key="122">
    <citation type="journal article" date="2018" name="Nat. Commun.">
        <title>NAD+ analog reveals PARP-1 substrate-blocking mechanism and allosteric communication from catalytic center to DNA-binding domains.</title>
        <authorList>
            <person name="Langelier M.F."/>
            <person name="Zandarashvili L."/>
            <person name="Aguiar P.M."/>
            <person name="Black B.E."/>
            <person name="Pascal J.M."/>
        </authorList>
    </citation>
    <scope>X-RAY CRYSTALLOGRAPHY (2.30 ANGSTROMS) OF 788-1012 IN COMPLEX WITH PARP INHIBITOR BAD</scope>
    <scope>FUNCTION</scope>
    <scope>ACTIVITY REGULATION</scope>
    <scope>MUTAGENESIS OF 763-GLU--ASP-770</scope>
</reference>
<reference evidence="141 142 143 144" key="123">
    <citation type="journal article" date="2020" name="Science">
        <title>Structural basis for allosteric PARP-1 retention on DNA breaks.</title>
        <authorList>
            <person name="Zandarashvili L."/>
            <person name="Langelier M.F."/>
            <person name="Velagapudi U.K."/>
            <person name="Hancock M.A."/>
            <person name="Steffen J.D."/>
            <person name="Billur R."/>
            <person name="Hannan Z.M."/>
            <person name="Wicks A.J."/>
            <person name="Krastev D.B."/>
            <person name="Pettitt S.J."/>
            <person name="Lord C.J."/>
            <person name="Talele T.T."/>
            <person name="Pascal J.M."/>
            <person name="Black B.E."/>
        </authorList>
    </citation>
    <scope>X-RAY CRYSTALLOGRAPHY (1.80 ANGSTROMS) OF 788-1012 IN COMPLEX WITH PARP INHIBITORS UKTT15; EB-47 AND RUCAPARIB</scope>
    <scope>FUNCTION</scope>
    <scope>SUBCELLULAR LOCATION</scope>
    <scope>ACTIVITY REGULATION</scope>
    <scope>MUTAGENESIS OF TRP-318 AND 766-ASP--ASP-770</scope>
</reference>
<reference evidence="145 146 147 148 149" key="124">
    <citation type="journal article" date="2021" name="J. Biol. Chem.">
        <title>Dissecting the molecular determinants of clinical PARP1 inhibitor selectivity for tankyrase1.</title>
        <authorList>
            <person name="Ryan K."/>
            <person name="Bolanos B."/>
            <person name="Smith M."/>
            <person name="Palde P.B."/>
            <person name="Cuenca P.D."/>
            <person name="VanArsdale T.L."/>
            <person name="Niessen S."/>
            <person name="Zhang L."/>
            <person name="Behenna D."/>
            <person name="Ornelas M.A."/>
            <person name="Tran K.T."/>
            <person name="Kaiser S."/>
            <person name="Lum L."/>
            <person name="Stewart A."/>
            <person name="Gajiwala K.S."/>
        </authorList>
    </citation>
    <scope>X-RAY CRYSTALLOGRAPHY (1.70 ANGSTROMS) OF 662-1011 IN COMPLEX WITH TALAZOPARIB; OLAPARIB; NIRAPARIB AND VELIPARIB INHIBITORS</scope>
    <scope>ACTIVITY REGULATION</scope>
</reference>
<reference evidence="150 151" key="125">
    <citation type="journal article" date="2021" name="Mol. Cell">
        <title>The BRCT domain of PARP1 binds intact DNA and mediates intrastrand transfer.</title>
        <authorList>
            <person name="Rudolph J."/>
            <person name="Muthurajan U.M."/>
            <person name="Palacio M."/>
            <person name="Mahadevan J."/>
            <person name="Roberts G."/>
            <person name="Erbse A.H."/>
            <person name="Dyer P.N."/>
            <person name="Luger K."/>
        </authorList>
    </citation>
    <scope>STRUCTURE BY ELECTRON MICROSCOPY (3.50 ANGSTROMS) OF 385-492 IN COMPLEX WITH DNA</scope>
    <scope>DOMAIN</scope>
    <scope>MUTAGENESIS OF LYS-394; 405-LYS--LYS-409; 418-LYS--LYS-425; LYS-418; 441-LYS-LYS-442 AND TRP-589</scope>
</reference>
<reference evidence="140" key="126">
    <citation type="journal article" date="2021" name="Nat. Commun.">
        <title>HPF1 remodels the active site of PARP1 to enable the serine ADP-ribosylation of histones.</title>
        <authorList>
            <person name="Sun F.H."/>
            <person name="Zhao P."/>
            <person name="Zhang N."/>
            <person name="Kong L.L."/>
            <person name="Wong C.C.L."/>
            <person name="Yun C.H."/>
        </authorList>
    </citation>
    <scope>X-RAY CRYSTALLOGRAPHY (1.98 ANGSTROMS) OF 788-1014 IN COMPLEX WITH HPF1</scope>
    <scope>FUNCTION</scope>
    <scope>INTERACTION WITH HPF1</scope>
</reference>
<reference key="127">
    <citation type="journal article" date="2006" name="Science">
        <title>The consensus coding sequences of human breast and colorectal cancers.</title>
        <authorList>
            <person name="Sjoeblom T."/>
            <person name="Jones S."/>
            <person name="Wood L.D."/>
            <person name="Parsons D.W."/>
            <person name="Lin J."/>
            <person name="Barber T.D."/>
            <person name="Mandelker D."/>
            <person name="Leary R.J."/>
            <person name="Ptak J."/>
            <person name="Silliman N."/>
            <person name="Szabo S."/>
            <person name="Buckhaults P."/>
            <person name="Farrell C."/>
            <person name="Meeh P."/>
            <person name="Markowitz S.D."/>
            <person name="Willis J."/>
            <person name="Dawson D."/>
            <person name="Willson J.K.V."/>
            <person name="Gazdar A.F."/>
            <person name="Hartigan J."/>
            <person name="Wu L."/>
            <person name="Liu C."/>
            <person name="Parmigiani G."/>
            <person name="Park B.H."/>
            <person name="Bachman K.E."/>
            <person name="Papadopoulos N."/>
            <person name="Vogelstein B."/>
            <person name="Kinzler K.W."/>
            <person name="Velculescu V.E."/>
        </authorList>
    </citation>
    <scope>VARIANT [LARGE SCALE ANALYSIS] VAL-488</scope>
</reference>